<sequence>MEFSSPSREECPKPLSRVSIMAGSLTGLLLLQAVSWASGARPCIPKSFGYSSVVCVCNATYCDSFDPPTFPALGTFSRYESTRSGRRMELSMGPIQANHTGTGLLLTLQPEQKFQKVKGFGGAMTDAAALNILALSPPAQNLLLKSYFSEEGIGYNIIRVPMASCDFSIRTYTYADTPDDFQLHNFSLPEEDTKLKIPLIHRALQLAQRPVSLLASPWTSPTWLKTNGAVNGKGSLKGQPGDIYHQTWARYFVKFLDAYAEHKLQFWAVTAENEPSAGLLSGYPFQCLGFTPEHQRDFIARDLGPTLANSTHHNVRLLMLDDQRLLLPHWAKVVLTDPEAAKYVHGIAVHWYLDFLAPAKATLGETHRLFPNTMLFASEACVGSKFWEQSVRLGSWDRGMQYSHSIITNLLYHVVGWTDWNLALNPEGGPNWVRNFVDSPIIVDITKDTFYKQPMFYHLGHFSKFIPEGSQRVGLVASQKNDLDAVALMHPDGSAVVVVLNRSSKDVPLTIKDPAVGFLETISPGYSIHTYLWRRQ</sequence>
<feature type="signal peptide" evidence="106">
    <location>
        <begin position="1"/>
        <end position="39"/>
    </location>
</feature>
<feature type="chain" id="PRO_0000012177" description="Lysosomal acid glucosylceramidase">
    <location>
        <begin position="40"/>
        <end position="536"/>
    </location>
</feature>
<feature type="active site" description="Proton donor" evidence="26">
    <location>
        <position position="274"/>
    </location>
</feature>
<feature type="active site" description="Nucleophile" evidence="26">
    <location>
        <position position="379"/>
    </location>
</feature>
<feature type="glycosylation site" description="N-linked (GlcNAc...) asparagine" evidence="18 31">
    <location>
        <position position="58"/>
    </location>
</feature>
<feature type="glycosylation site" description="N-linked (GlcNAc...) asparagine" evidence="17 31 40">
    <location>
        <position position="98"/>
    </location>
</feature>
<feature type="glycosylation site" description="N-linked (GlcNAc...) asparagine" evidence="17 31">
    <location>
        <position position="185"/>
    </location>
</feature>
<feature type="glycosylation site" description="N-linked (GlcNAc...) asparagine" evidence="17 40">
    <location>
        <position position="309"/>
    </location>
</feature>
<feature type="glycosylation site" description="N-linked (GlcNAc...) asparagine" evidence="1">
    <location>
        <position position="501"/>
    </location>
</feature>
<feature type="disulfide bond" evidence="18 117">
    <location>
        <begin position="43"/>
        <end position="55"/>
    </location>
</feature>
<feature type="disulfide bond" evidence="18 117">
    <location>
        <begin position="57"/>
        <end position="62"/>
    </location>
</feature>
<feature type="splice variant" id="VSP_025216" description="In isoform 3." evidence="112">
    <location>
        <begin position="1"/>
        <end position="161"/>
    </location>
</feature>
<feature type="splice variant" id="VSP_054655" description="In isoform 4." evidence="108">
    <location>
        <begin position="1"/>
        <end position="87"/>
    </location>
</feature>
<feature type="splice variant" id="VSP_018800" description="In isoform Short." evidence="110 111">
    <location>
        <begin position="1"/>
        <end position="20"/>
    </location>
</feature>
<feature type="splice variant" id="VSP_054656" description="In isoform 5." evidence="108">
    <location>
        <begin position="103"/>
        <end position="151"/>
    </location>
</feature>
<feature type="splice variant" id="VSP_025217" description="In isoform 3." evidence="112">
    <original>LA</original>
    <variation>PS</variation>
    <location>
        <begin position="422"/>
        <end position="423"/>
    </location>
</feature>
<feature type="splice variant" id="VSP_025218" description="In isoform 3." evidence="112">
    <location>
        <begin position="425"/>
        <end position="536"/>
    </location>
</feature>
<feature type="sequence variant" id="VAR_063066" description="Found in a patient with Parkinson disease; uncertain significance; dbSNP:rs142761046." evidence="42">
    <original>K</original>
    <variation>E</variation>
    <location>
        <position position="46"/>
    </location>
</feature>
<feature type="sequence variant" id="VAR_003255" description="In GD; dbSNP:rs121908302." evidence="85">
    <original>V</original>
    <variation>L</variation>
    <location>
        <position position="54"/>
    </location>
</feature>
<feature type="sequence variant" id="VAR_032394" description="In GD; neuronopathic and perinatal lethal forms; loss of glucosylceramidase activity; dbSNP:rs773007510." evidence="14 23 30">
    <original>C</original>
    <variation>S</variation>
    <location>
        <position position="55"/>
    </location>
</feature>
<feature type="sequence variant" id="VAR_081188" description="In GD1." evidence="52">
    <original>C</original>
    <variation>W</variation>
    <location>
        <position position="62"/>
    </location>
</feature>
<feature type="sequence variant" id="VAR_032395" description="In GD1; very low glucosylceramidase activity." evidence="24">
    <original>D</original>
    <variation>N</variation>
    <location>
        <position position="63"/>
    </location>
</feature>
<feature type="sequence variant" id="VAR_003256" description="In GD." evidence="94">
    <original>F</original>
    <variation>V</variation>
    <location>
        <position position="76"/>
    </location>
</feature>
<feature type="sequence variant" id="VAR_009033" description="In GD2." evidence="104">
    <original>E</original>
    <variation>K</variation>
    <location>
        <position position="80"/>
    </location>
</feature>
<feature type="sequence variant" id="VAR_003257" description="In GD1; dbSNP:rs1141811." evidence="71">
    <original>T</original>
    <variation>I</variation>
    <location>
        <position position="82"/>
    </location>
</feature>
<feature type="sequence variant" id="VAR_003258" description="In GD; dbSNP:rs77829017." evidence="85 94">
    <original>G</original>
    <variation>E</variation>
    <location>
        <position position="85"/>
    </location>
</feature>
<feature type="sequence variant" id="VAR_032197" description="In GD1; decreased glucosylceramidase activity; 20% of normal activity; dbSNP:rs78769774." evidence="30 63">
    <original>R</original>
    <variation>Q</variation>
    <location>
        <position position="87"/>
    </location>
</feature>
<feature type="sequence variant" id="VAR_003259" description="In GD1; decreased glucosylceramidase activity; dbSNP:rs1141814." evidence="11 71 91 94 97 103 105">
    <original>R</original>
    <variation>W</variation>
    <location>
        <position position="87"/>
    </location>
</feature>
<feature type="sequence variant" id="VAR_032396" description="In dbSNP:rs1141815.">
    <original>M</original>
    <variation>T</variation>
    <location>
        <position position="92"/>
    </location>
</feature>
<feature type="sequence variant" id="VAR_003260" description="In GD1; mild; decreased glucosylceramidase activity; 8% of normal activity; increases susceptibility to proteolytic degradation; dbSNP:rs121908312." evidence="11 30">
    <original>K</original>
    <variation>N</variation>
    <location>
        <position position="118"/>
    </location>
</feature>
<feature type="sequence variant" id="VAR_088437" description="In GD1." evidence="63">
    <original>F</original>
    <variation>L</variation>
    <location>
        <position position="120"/>
    </location>
</feature>
<feature type="sequence variant" id="VAR_032397" description="In GD1." evidence="11">
    <original>A</original>
    <variation>T</variation>
    <location>
        <position position="129"/>
    </location>
</feature>
<feature type="sequence variant" id="VAR_009034" description="In GD2 and GD3; dbSNP:rs758447515." evidence="15 99">
    <original>S</original>
    <variation>L</variation>
    <location>
        <position position="146"/>
    </location>
</feature>
<feature type="sequence variant" id="VAR_088438" description="In GD3." evidence="63">
    <original>Y</original>
    <variation>C</variation>
    <location>
        <position position="147"/>
    </location>
</feature>
<feature type="sequence variant" id="VAR_003261" description="In GD1." evidence="100">
    <original>G</original>
    <variation>E</variation>
    <location>
        <position position="152"/>
    </location>
</feature>
<feature type="sequence variant" id="VAR_088439" description="In GD1." evidence="63">
    <original>Y</original>
    <variation>H</variation>
    <location>
        <position position="155"/>
    </location>
</feature>
<feature type="sequence variant" id="VAR_032398" description="In GD1." evidence="11">
    <original>N</original>
    <variation>D</variation>
    <location>
        <position position="156"/>
    </location>
</feature>
<feature type="sequence variant" id="VAR_032399" description="In GD1; very low glucosylceramidase activity; dbSNP:rs77834747." evidence="24">
    <original>I</original>
    <variation>S</variation>
    <location>
        <position position="158"/>
    </location>
</feature>
<feature type="sequence variant" id="VAR_003262" description="In GD1; dbSNP:rs77834747." evidence="103">
    <original>I</original>
    <variation>T</variation>
    <location>
        <position position="158"/>
    </location>
</feature>
<feature type="sequence variant" id="VAR_003263" description="In GD1 and GD2; decreased glucosylceramidase activity; 13% of normal activity; dbSNP:rs79653797." evidence="11 30">
    <original>R</original>
    <variation>Q</variation>
    <location>
        <position position="159"/>
    </location>
</feature>
<feature type="sequence variant" id="VAR_003264" description="In GD1 and GD2; dbSNP:rs439898." evidence="11 24 63 94 103 105">
    <original>R</original>
    <variation>W</variation>
    <location>
        <position position="159"/>
    </location>
</feature>
<feature type="sequence variant" id="VAR_032198" description="In GD; decreased glucosylceramidase activity; 16% of normal activity; dbSNP:rs79637617." evidence="30">
    <original>P</original>
    <variation>L</variation>
    <location>
        <position position="161"/>
    </location>
</feature>
<feature type="sequence variant" id="VAR_003265" description="In GD1; dbSNP:rs121908299." evidence="80">
    <original>P</original>
    <variation>S</variation>
    <location>
        <position position="161"/>
    </location>
</feature>
<feature type="sequence variant" id="VAR_032199" description="In GD; loss of glucosylceramidase activity; increases susceptibility to proteolytic degradation; dbSNP:rs377325220." evidence="30">
    <original>M</original>
    <variation>V</variation>
    <location>
        <position position="162"/>
    </location>
</feature>
<feature type="sequence variant" id="VAR_032200" description="In GD; decreased glucosylceramidase activity; 9% of normal activity; increases susceptibility to proteolytic degradation; dbSNP:rs79796061." evidence="30">
    <original>D</original>
    <variation>V</variation>
    <location>
        <position position="166"/>
    </location>
</feature>
<feature type="sequence variant" id="VAR_009035" description="In GD1 and GD2; also found in a patient with Parkinson disease; dbSNP:rs398123530." evidence="15 24 42 104">
    <original>R</original>
    <variation>C</variation>
    <location>
        <position position="170"/>
    </location>
</feature>
<feature type="sequence variant" id="VAR_009036" description="In GD1 and GD2; dbSNP:rs80356763." evidence="7 11">
    <original>R</original>
    <variation>L</variation>
    <location>
        <position position="170"/>
    </location>
</feature>
<feature type="sequence variant" id="VAR_032400" description="In GD1; dbSNP:rs78657146." evidence="11">
    <original>T</original>
    <variation>I</variation>
    <location>
        <position position="173"/>
    </location>
</feature>
<feature type="sequence variant" id="VAR_003266" description="In GD1; dbSNP:rs1441909908." evidence="6 100">
    <original>T</original>
    <variation>P</variation>
    <location>
        <position position="173"/>
    </location>
</feature>
<feature type="sequence variant" id="VAR_088440" description="In GD1." evidence="63">
    <original>Y</original>
    <variation>S</variation>
    <location>
        <position position="174"/>
    </location>
</feature>
<feature type="sequence variant" id="VAR_032401" description="In GD; dbSNP:rs79660787." evidence="13">
    <original>A</original>
    <variation>E</variation>
    <location>
        <position position="175"/>
    </location>
</feature>
<feature type="sequence variant" id="VAR_003267" description="In GD1; decreased glucosylceramide catabolic process; dbSNP:rs147138516." evidence="28 38">
    <original>D</original>
    <variation>H</variation>
    <location>
        <position position="179"/>
    </location>
</feature>
<feature type="sequence variant" id="VAR_003268" description="In GD1; decreased protein abundance; decreased glucosylceramide catabolic process; dbSNP:rs121908297." evidence="28 38 39">
    <original>K</original>
    <variation>Q</variation>
    <location>
        <position position="196"/>
    </location>
</feature>
<feature type="sequence variant" id="VAR_009037" description="In GD; dbSNP:rs80222298." evidence="99">
    <original>P</original>
    <variation>L</variation>
    <location>
        <position position="198"/>
    </location>
</feature>
<feature type="sequence variant" id="VAR_081189" description="In GD1; decreased glucosylceramide catabolic process." evidence="50">
    <original>P</original>
    <variation>S</variation>
    <location>
        <position position="198"/>
    </location>
</feature>
<feature type="sequence variant" id="VAR_032402" description="In GD1." evidence="15">
    <original>P</original>
    <variation>T</variation>
    <location>
        <position position="198"/>
    </location>
</feature>
<feature type="sequence variant" id="VAR_032201" description="In GD; decreased glucosylceramidase activity; 5% of normal activity; dbSNP:rs77933015." evidence="30">
    <original>I</original>
    <variation>N</variation>
    <location>
        <position position="200"/>
    </location>
</feature>
<feature type="sequence variant" id="VAR_010059" description="In GD1; dbSNP:rs77933015." evidence="105">
    <original>I</original>
    <variation>S</variation>
    <location>
        <position position="200"/>
    </location>
</feature>
<feature type="sequence variant" id="VAR_032403" description="In GD1; dbSNP:rs76500263." evidence="13">
    <original>H</original>
    <variation>P</variation>
    <location>
        <position position="201"/>
    </location>
</feature>
<feature type="sequence variant" id="VAR_032404" description="In GD1; dbSNP:rs398123532." evidence="11 15">
    <original>R</original>
    <variation>C</variation>
    <location>
        <position position="209"/>
    </location>
</feature>
<feature type="sequence variant" id="VAR_003269" description="In GD1; dbSNP:rs749416070." evidence="11 15 103">
    <original>R</original>
    <variation>P</variation>
    <location>
        <position position="209"/>
    </location>
</feature>
<feature type="sequence variant" id="VAR_032202" description="In GD; decreased glucosylceramidase activity; 12% of normal activity; dbSNP:rs374591570." evidence="30">
    <original>L</original>
    <variation>F</variation>
    <location>
        <position position="213"/>
    </location>
</feature>
<feature type="sequence variant" id="VAR_088441" description="In GD1." evidence="63">
    <original>L</original>
    <variation>P</variation>
    <location>
        <position position="214"/>
    </location>
</feature>
<feature type="sequence variant" id="VAR_003270" description="In GD1." evidence="84">
    <original>A</original>
    <variation>D</variation>
    <location>
        <position position="215"/>
    </location>
</feature>
<feature type="sequence variant" id="VAR_003271" description="In GD2." evidence="70">
    <original>P</original>
    <variation>S</variation>
    <location>
        <position position="217"/>
    </location>
</feature>
<feature type="sequence variant" id="VAR_032405" description="In GD1; very low glucosylceramidase activity; dbSNP:rs80205046." evidence="24">
    <original>P</original>
    <variation>L</variation>
    <location>
        <position position="221"/>
    </location>
</feature>
<feature type="sequence variant" id="VAR_003272" description="In GD1; dbSNP:rs866075757." evidence="84">
    <original>P</original>
    <variation>T</variation>
    <location>
        <position position="221"/>
    </location>
</feature>
<feature type="sequence variant" id="VAR_003273" description="In GD1 and GD2; dbSNP:rs61748906." evidence="8 63 78">
    <original>W</original>
    <variation>R</variation>
    <location>
        <position position="223"/>
    </location>
</feature>
<feature type="sequence variant" id="VAR_032203" description="In GD; decreased glucosylceramidase activity; 4% of normal activity; increases susceptibility to proteolytic degradation." evidence="30">
    <original>L</original>
    <variation>F</variation>
    <location>
        <position position="224"/>
    </location>
</feature>
<feature type="sequence variant" id="VAR_081190" description="In GD2; decreased glucosylceramide catabolic process." evidence="50">
    <original>N</original>
    <variation>I</variation>
    <location>
        <position position="227"/>
    </location>
</feature>
<feature type="sequence variant" id="VAR_003275" description="In GD1 and GD2; dbSNP:rs381418." evidence="7 103">
    <original>N</original>
    <variation>K</variation>
    <location>
        <position position="227"/>
    </location>
</feature>
<feature type="sequence variant" id="VAR_003274" description="In GD1 and GD3; decreased glucosylceramide catabolic process; dbSNP:rs364897." evidence="11 15 50 85 94">
    <original>N</original>
    <variation>S</variation>
    <location>
        <position position="227"/>
    </location>
</feature>
<feature type="sequence variant" id="VAR_010060" description="In GD; dbSNP:rs78911246." evidence="90">
    <original>G</original>
    <variation>V</variation>
    <location>
        <position position="228"/>
    </location>
</feature>
<feature type="sequence variant" id="VAR_009038" description="In GD2; dbSNP:rs75636769." evidence="7">
    <original>A</original>
    <variation>E</variation>
    <location>
        <position position="229"/>
    </location>
</feature>
<feature type="sequence variant" id="VAR_032406" description="In GD3." evidence="11">
    <original>A</original>
    <variation>T</variation>
    <location>
        <position position="229"/>
    </location>
</feature>
<feature type="sequence variant" id="VAR_032407" description="In GD1; very low glucosylceramidase activity; dbSNP:rs381427." evidence="24">
    <original>V</original>
    <variation>E</variation>
    <location>
        <position position="230"/>
    </location>
</feature>
<feature type="sequence variant" id="VAR_003276" description="In GD1; dbSNP:rs381427." evidence="2 78">
    <original>V</original>
    <variation>G</variation>
    <location>
        <position position="230"/>
    </location>
</feature>
<feature type="sequence variant" id="VAR_032204" description="In GD; also found in a patient with Parkinson disease; decreased glucosylceramidase activity; 7% of normal activity; dbSNP:rs1376479747." evidence="30 42">
    <original>G</original>
    <variation>E</variation>
    <location>
        <position position="232"/>
    </location>
</feature>
<feature type="sequence variant" id="VAR_003277" description="In GD1; severely decreased glucosylceramidase activity; dbSNP:rs74462743." evidence="91">
    <original>G</original>
    <variation>E</variation>
    <location>
        <position position="234"/>
    </location>
</feature>
<feature type="sequence variant" id="VAR_009039" description="In GD." evidence="6">
    <original>G</original>
    <variation>W</variation>
    <location>
        <position position="234"/>
    </location>
</feature>
<feature type="sequence variant" id="VAR_003278" description="In GD1 and GD2; dbSNP:rs1064644." evidence="7 11 15 78">
    <original>S</original>
    <variation>P</variation>
    <location>
        <position position="235"/>
    </location>
</feature>
<feature type="sequence variant" id="VAR_032205" description="In GD2; severe; loss of glucosylceramidase activity; increases susceptibility to proteolytic degradation; dbSNP:rs773409311." evidence="13 30">
    <original>K</original>
    <variation>E</variation>
    <location>
        <position position="237"/>
    </location>
</feature>
<feature type="sequence variant" id="VAR_003279" description="In GD1, GD2 and GD3; severely decreased glucosylceramidase activity; dbSNP:rs409652." evidence="5 11 15 24 63 78 84 91 105">
    <original>G</original>
    <variation>R</variation>
    <location>
        <position position="241"/>
    </location>
</feature>
<feature type="sequence variant" id="VAR_010062" description="In GD1 and GD3; dbSNP:rs76026102." evidence="5 13">
    <original>Y</original>
    <variation>C</variation>
    <location>
        <position position="244"/>
    </location>
</feature>
<feature type="sequence variant" id="VAR_003280" description="In GD; uncertain significance; dbSNP:rs121908300." evidence="80">
    <original>Y</original>
    <variation>H</variation>
    <location>
        <position position="251"/>
    </location>
</feature>
<feature type="sequence variant" id="VAR_003281" description="In GD1, GD2 and GD3; dbSNP:rs381737." evidence="5 11 15 20 63 78 90 91 94">
    <original>F</original>
    <variation>I</variation>
    <location>
        <position position="252"/>
    </location>
</feature>
<feature type="sequence variant" id="VAR_003282" description="In GD; loss of glucosylceramidase activity;; dbSNP:rs74500255." evidence="44 79">
    <original>F</original>
    <variation>Y</variation>
    <location>
        <position position="255"/>
    </location>
</feature>
<feature type="sequence variant" id="VAR_081191" description="In GD1." evidence="53">
    <original>F</original>
    <variation>L</variation>
    <location>
        <position position="266"/>
    </location>
</feature>
<feature type="sequence variant" id="VAR_088442" description="In GD1." evidence="63">
    <original>T</original>
    <variation>I</variation>
    <location>
        <position position="270"/>
    </location>
</feature>
<feature type="sequence variant" id="VAR_032408" description="In GD2; dbSNP:rs76725886." evidence="15">
    <original>T</original>
    <variation>R</variation>
    <location>
        <position position="270"/>
    </location>
</feature>
<feature type="sequence variant" id="VAR_081192" description="In GD2; loss of glucosylceramide catabolic process." evidence="50">
    <original>E</original>
    <variation>K</variation>
    <location>
        <position position="274"/>
    </location>
</feature>
<feature type="sequence variant" id="VAR_003283" description="In GD1." evidence="103">
    <original>S</original>
    <variation>P</variation>
    <location>
        <position position="276"/>
    </location>
</feature>
<feature type="sequence variant" id="VAR_081193" description="In GD1; loss of glucosylceramide catabolic process." evidence="50">
    <original>P</original>
    <variation>T</variation>
    <location>
        <position position="284"/>
    </location>
</feature>
<feature type="sequence variant" id="VAR_081194" description="In GD1; dbSNP:rs878853321." evidence="47">
    <original>G</original>
    <variation>V</variation>
    <location>
        <position position="289"/>
    </location>
</feature>
<feature type="sequence variant" id="VAR_032409" description="In GDPL; dbSNP:rs121908313." evidence="13">
    <original>F</original>
    <variation>L</variation>
    <location>
        <position position="290"/>
    </location>
</feature>
<feature type="sequence variant" id="VAR_009040" description="In GD1, GD2 and GD3; associated in cis with H-448 in all patients analyzed; uncertain significance; dbSNP:rs367968666." evidence="7 25 63">
    <original>H</original>
    <variation>Q</variation>
    <location>
        <position position="294"/>
    </location>
</feature>
<feature type="sequence variant" id="VAR_003284" description="In GD1 and GD2; also found in a patient with Parkinson disease; dbSNP:rs78973108." evidence="7 11 42 84">
    <original>R</original>
    <variation>Q</variation>
    <location>
        <position position="296"/>
    </location>
</feature>
<feature type="sequence variant" id="VAR_009041" description="In GD and GD2; decreased glucosylceramidase activity; 4% of normal activity." evidence="7 30 61">
    <original>F</original>
    <variation>L</variation>
    <location>
        <position position="298"/>
    </location>
</feature>
<feature type="sequence variant" id="VAR_081195" description="In GD1." evidence="47">
    <original>R</original>
    <variation>G</variation>
    <location>
        <position position="301"/>
    </location>
</feature>
<feature type="sequence variant" id="VAR_032206" description="In GD; decreased glucosylceramidase activity; 5% of normal activity; dbSNP:rs1296507371." evidence="30">
    <original>L</original>
    <variation>I</variation>
    <location>
        <position position="303"/>
    </location>
</feature>
<feature type="sequence variant" id="VAR_010063" description="In GD1; dbSNP:rs80116658." evidence="105">
    <original>G</original>
    <variation>D</variation>
    <location>
        <position position="304"/>
    </location>
</feature>
<feature type="sequence variant" id="VAR_081196" description="In GD3; loss of glucosylceramide catabolic process." evidence="50">
    <original>G</original>
    <variation>R</variation>
    <location>
        <position position="304"/>
    </location>
</feature>
<feature type="sequence variant" id="VAR_003285" description="In GD1; dbSNP:rs79215220." evidence="81">
    <original>P</original>
    <variation>R</variation>
    <location>
        <position position="305"/>
    </location>
</feature>
<feature type="sequence variant" id="VAR_032410" description="In dbSNP:rs1057942." evidence="78">
    <original>S</original>
    <variation>G</variation>
    <location>
        <position position="310"/>
    </location>
</feature>
<feature type="sequence variant" id="VAR_010064" description="In GD1; severely decreased glucosylceramidase activity; less than 5% of normal activity; dbSNP:rs74731340." evidence="91">
    <original>S</original>
    <variation>N</variation>
    <location>
        <position position="310"/>
    </location>
</feature>
<feature type="sequence variant" id="VAR_088443" description="In GD1." evidence="63">
    <original>D</original>
    <variation>N</variation>
    <location>
        <position position="322"/>
    </location>
</feature>
<feature type="sequence variant" id="VAR_003286" description="In GD1 and GD3; dbSNP:rs765633380." evidence="11 15 24 84 105">
    <original>R</original>
    <variation>C</variation>
    <location>
        <position position="324"/>
    </location>
</feature>
<feature type="sequence variant" id="VAR_009042" description="In GD1 and GD2; dbSNP:rs79696831." evidence="7 15">
    <original>R</original>
    <variation>H</variation>
    <location>
        <position position="324"/>
    </location>
</feature>
<feature type="sequence variant" id="VAR_003287" description="In GD1; loss of glucosylceramidase activity; dbSNP:rs121908298." evidence="20 79">
    <original>P</original>
    <variation>L</variation>
    <location>
        <position position="328"/>
    </location>
</feature>
<feature type="sequence variant" id="VAR_003288" description="In GD1; dbSNP:rs77714449." evidence="103">
    <original>K</original>
    <variation>I</variation>
    <location>
        <position position="342"/>
    </location>
</feature>
<feature type="sequence variant" id="VAR_009043" description="In GD2; decreased glucosylceramidase activity; 16% of normal activity; increases susceptibility to proteolytic degradation; dbSNP:rs77321207." evidence="7 30">
    <original>Y</original>
    <variation>C</variation>
    <location>
        <position position="343"/>
    </location>
</feature>
<feature type="sequence variant" id="VAR_081197" description="In GD1." evidence="53">
    <original>I</original>
    <variation>S</variation>
    <location>
        <position position="347"/>
    </location>
</feature>
<feature type="sequence variant" id="VAR_003289" description="In GD1; dbSNP:rs78396650." evidence="39 63">
    <original>A</original>
    <variation>V</variation>
    <location>
        <position position="348"/>
    </location>
</feature>
<feature type="sequence variant" id="VAR_009044" description="In GDPL, GD1 and GD2; dbSNP:rs78198234." evidence="4 60 63">
    <original>H</original>
    <variation>R</variation>
    <location>
        <position position="350"/>
    </location>
</feature>
<feature type="sequence variant" id="VAR_003290" description="In GD1; dbSNP:rs121908304." evidence="15 39">
    <original>W</original>
    <variation>C</variation>
    <location>
        <position position="351"/>
    </location>
</feature>
<feature type="sequence variant" id="VAR_081198" description="In GD1; loss of glucosylceramide catabolic process; dbSNP:rs1553217294." evidence="50">
    <original>W</original>
    <variation>S</variation>
    <location>
        <position position="351"/>
    </location>
</feature>
<feature type="sequence variant" id="VAR_003291" description="In GD." evidence="86">
    <original>Y</original>
    <variation>H</variation>
    <location>
        <position position="352"/>
    </location>
</feature>
<feature type="sequence variant" id="VAR_003292" description="In GD1; uncertain significance; dbSNP:rs398123526." evidence="81">
    <original>D</original>
    <variation>H</variation>
    <location>
        <position position="354"/>
    </location>
</feature>
<feature type="sequence variant" id="VAR_003293" description="In GD1; uncertain significance; dbSNP:rs78188205." evidence="81">
    <original>A</original>
    <variation>D</variation>
    <location>
        <position position="357"/>
    </location>
</feature>
<feature type="sequence variant" id="VAR_003294" description="In GD1; decreased glucosylceramidase activity; 4-6% of normal activity; dbSNP:rs76539814." evidence="20 30 79">
    <original>T</original>
    <variation>I</variation>
    <location>
        <position position="362"/>
    </location>
</feature>
<feature type="sequence variant" id="VAR_003295" description="In GD1; uncertain significance; also found in a patient with Parkinson disease; uncertain significance; dbSNP:rs1178732315." evidence="56 103">
    <original>L</original>
    <variation>P</variation>
    <location>
        <position position="363"/>
    </location>
</feature>
<feature type="sequence variant" id="VAR_003296" description="In GD2; dbSNP:rs121908305." evidence="48 78">
    <original>G</original>
    <variation>R</variation>
    <location>
        <position position="364"/>
    </location>
</feature>
<feature type="sequence variant" id="VAR_003297" description="In GD1; benign; decreased glucosylceramidase activity; 42% of normal activity; dbSNP:rs2230288." evidence="11 12 30 38 50">
    <original>E</original>
    <variation>K</variation>
    <location>
        <position position="365"/>
    </location>
</feature>
<feature type="sequence variant" id="VAR_032411" description="In dbSNP:rs1064648." evidence="78">
    <original>R</original>
    <variation>H</variation>
    <location>
        <position position="368"/>
    </location>
</feature>
<feature type="sequence variant" id="VAR_009045" description="In GD1; dbSNP:rs781306264." evidence="11 99">
    <original>A</original>
    <variation>T</variation>
    <location>
        <position position="380"/>
    </location>
</feature>
<feature type="sequence variant" id="VAR_003298" description="In GD2; loss of glucosylceramidase activity; dbSNP:rs121908306." evidence="30 48">
    <original>C</original>
    <variation>G</variation>
    <location>
        <position position="381"/>
    </location>
</feature>
<feature type="sequence variant" id="VAR_032207" description="In GD; decreased glucosylceramidase activity; 12% of normal activity; dbSNP:rs1161552095." evidence="30">
    <original>E</original>
    <variation>K</variation>
    <location>
        <position position="388"/>
    </location>
</feature>
<feature type="sequence variant" id="VAR_010065" description="In GD1; decreased glucosylceramidase activity; dbSNP:rs398123527." evidence="91">
    <original>V</original>
    <variation>L</variation>
    <location>
        <position position="391"/>
    </location>
</feature>
<feature type="sequence variant" id="VAR_010066" description="In GD and GD3; dbSNP:rs121908308." evidence="15 102">
    <original>R</original>
    <variation>G</variation>
    <location>
        <position position="392"/>
    </location>
</feature>
<feature type="sequence variant" id="VAR_032208" description="In GD; decreased glucosylceramidase activity; 5% of normal activity; dbSNP:rs121908308." evidence="30">
    <original>R</original>
    <variation>W</variation>
    <location>
        <position position="392"/>
    </location>
</feature>
<feature type="sequence variant" id="VAR_003299" description="In GD1; mild; dbSNP:rs74979486." evidence="22 86">
    <original>R</original>
    <variation>Q</variation>
    <location>
        <position position="398"/>
    </location>
</feature>
<feature type="sequence variant" id="VAR_032412" description="In GD2; uncertain significance; dbSNP:rs149487315." evidence="15">
    <original>M</original>
    <variation>I</variation>
    <location>
        <position position="400"/>
    </location>
</feature>
<feature type="sequence variant" id="VAR_032209" description="In GD; decreased glucosylceramidase activity; 8% of normal activity; increases susceptibility to proteolytic degradation; dbSNP:rs76228122." evidence="30">
    <original>Y</original>
    <variation>C</variation>
    <location>
        <position position="402"/>
    </location>
</feature>
<feature type="sequence variant" id="VAR_003300" description="In GD1; loss of glucosylceramidase activity; dbSNP:rs121908307." evidence="39 79">
    <original>S</original>
    <variation>T</variation>
    <location>
        <position position="403"/>
    </location>
</feature>
<feature type="sequence variant" id="VAR_010067" description="In GD." evidence="90">
    <original>S</original>
    <variation>G</variation>
    <location>
        <position position="405"/>
    </location>
</feature>
<feature type="sequence variant" id="VAR_009046" description="In GD; dbSNP:rs1392291885." evidence="99">
    <original>S</original>
    <variation>N</variation>
    <location>
        <position position="405"/>
    </location>
</feature>
<feature type="sequence variant" id="VAR_081199" description="In GD1; loss of glucosylceramide catabolic process; dbSNP:rs75528494." evidence="50">
    <original>S</original>
    <variation>R</variation>
    <location>
        <position position="405"/>
    </location>
</feature>
<feature type="sequence variant" id="VAR_003301" description="In GD1; likely benign; dbSNP:rs75548401." evidence="11 16 21">
    <original>T</original>
    <variation>M</variation>
    <location>
        <position position="408"/>
    </location>
</feature>
<feature type="sequence variant" id="VAR_003302" description="In GD1; risk factor for Parkinson disease; increased proteasomal degradation; decreased protein abundance; decreased glucosylceramide catabolic process; decreased glucosylceramidase activity; 23% of normal activity when expressed in a heterologous system; alters interaction with saposin-C; dbSNP:rs76763715." evidence="2 3 6 11 13 24 27 30 36 42 45 46 50 60 63 69 73 76 79 82 88 91 95 103 105 107">
    <original>N</original>
    <variation>S</variation>
    <location>
        <position position="409"/>
    </location>
</feature>
<feature type="sequence variant" id="VAR_032210" description="In GD; decreased glucosylceramidase activity; 15% of normal activity; increases susceptibility to proteolytic degradation; dbSNP:rs121908314." evidence="30">
    <original>L</original>
    <variation>V</variation>
    <location>
        <position position="410"/>
    </location>
</feature>
<feature type="sequence variant" id="VAR_010068" description="In GD and GD1; mild; dbSNP:rs398123528." evidence="66 92">
    <original>V</original>
    <variation>L</variation>
    <location>
        <position position="414"/>
    </location>
</feature>
<feature type="sequence variant" id="VAR_003303" description="In GD1 and GD3; dbSNP:rs121908311." evidence="6 11 13 60 103">
    <original>G</original>
    <variation>S</variation>
    <location>
        <position position="416"/>
    </location>
</feature>
<feature type="sequence variant" id="VAR_003304" description="In GD1; dbSNP:rs1450426641." evidence="84">
    <original>W</original>
    <variation>G</variation>
    <location>
        <position position="417"/>
    </location>
</feature>
<feature type="sequence variant" id="VAR_003305" description="Found in a patient with Parkinson disease; uncertain significance; dbSNP:rs77284004." evidence="42">
    <original>D</original>
    <variation>A</variation>
    <location>
        <position position="419"/>
    </location>
</feature>
<feature type="sequence variant" id="VAR_032211" description="In GD; decreased glucosylceramidase activity; 4% of normal activity." evidence="30">
    <original>D</original>
    <variation>H</variation>
    <location>
        <position position="419"/>
    </location>
</feature>
<feature type="sequence variant" id="VAR_003306" description="In GD1; loss of glucosylceramide catabolic process." evidence="50 84">
    <original>D</original>
    <variation>N</variation>
    <location>
        <position position="419"/>
    </location>
</feature>
<feature type="sequence variant" id="VAR_081200" description="In GD1; loss of glucosylceramide catabolic process." evidence="50">
    <original>W</original>
    <variation>C</variation>
    <location>
        <position position="420"/>
    </location>
</feature>
<feature type="sequence variant" id="VAR_032212" description="In GD; decreased glucosylceramidase activity; 22% of normal activity." evidence="30">
    <original>N</original>
    <variation>K</variation>
    <location>
        <position position="421"/>
    </location>
</feature>
<feature type="sequence variant" id="VAR_010069" description="In GD; dbSNP:rs1057519357 and dbSNP:rs994723035." evidence="88">
    <original>P</original>
    <variation>L</variation>
    <location>
        <position position="426"/>
    </location>
</feature>
<feature type="sequence variant" id="VAR_003307" description="In GD2." evidence="100">
    <original>G</original>
    <variation>E</variation>
    <location>
        <position position="428"/>
    </location>
</feature>
<feature type="sequence variant" id="VAR_032213" description="In GD; decreased glucosylceramidase activity; 17% of normal activity." evidence="30">
    <original>G</original>
    <variation>R</variation>
    <location>
        <position position="429"/>
    </location>
</feature>
<feature type="sequence variant" id="VAR_003308" description="In GD1; dbSNP:rs76910485." evidence="100">
    <original>P</original>
    <variation>L</variation>
    <location>
        <position position="430"/>
    </location>
</feature>
<feature type="sequence variant" id="VAR_003309" description="In GD2; dbSNP:rs77738682." evidence="100">
    <original>N</original>
    <variation>I</variation>
    <location>
        <position position="431"/>
    </location>
</feature>
<feature type="sequence variant" id="VAR_009047" description="In GD." evidence="99">
    <original>W</original>
    <variation>R</variation>
    <location>
        <position position="432"/>
    </location>
</feature>
<feature type="sequence variant" id="VAR_003310" description="In GD1 and GD3; severe; decreased glucosylceramidase activity; 12% of normal activity; dbSNP:rs80356769." evidence="11 30 55 79 88 103">
    <original>V</original>
    <variation>L</variation>
    <location>
        <position position="433"/>
    </location>
</feature>
<feature type="sequence variant" id="VAR_003311" description="In GD1; mild; dbSNP:rs75385858." evidence="87">
    <original>N</original>
    <variation>T</variation>
    <location>
        <position position="435"/>
    </location>
</feature>
<feature type="sequence variant" id="VAR_032214" description="In GD; decreased glucosylceramidase activity; 6% of normal activity; alters protein stability and increases susceptibility to proteolytic degradation; dbSNP:rs75243000." evidence="30">
    <original>F</original>
    <variation>S</variation>
    <location>
        <position position="436"/>
    </location>
</feature>
<feature type="sequence variant" id="VAR_009048" description="In GDPL; dbSNP:rs121908310." evidence="4">
    <original>V</original>
    <variation>F</variation>
    <location>
        <position position="437"/>
    </location>
</feature>
<feature type="sequence variant" id="VAR_010070" description="In GD3; dbSNP:rs121908310." evidence="83">
    <original>V</original>
    <variation>L</variation>
    <location>
        <position position="437"/>
    </location>
</feature>
<feature type="sequence variant" id="VAR_003312" description="In GD1 and GD2; decreased glucosylceramidase activity; 14% of normal activity; increases susceptibility to proteolytic degradation; dbSNP:rs1553217009." evidence="15 24 30 77 105">
    <original>D</original>
    <variation>N</variation>
    <location>
        <position position="438"/>
    </location>
</feature>
<feature type="sequence variant" id="VAR_032413" description="In GD1." evidence="11">
    <original>D</original>
    <variation>Y</variation>
    <location>
        <position position="438"/>
    </location>
</feature>
<feature type="sequence variant" id="VAR_010071" description="In GD1; dbSNP:rs74598136." evidence="3 24">
    <original>P</original>
    <variation>L</variation>
    <location>
        <position position="440"/>
    </location>
</feature>
<feature type="sequence variant" id="VAR_032414" description="In GD3." evidence="13">
    <original>I</original>
    <variation>F</variation>
    <location>
        <position position="441"/>
    </location>
</feature>
<feature type="sequence variant" id="VAR_010072" description="In GD; mild; dbSNP:rs75564605." evidence="92">
    <original>I</original>
    <variation>T</variation>
    <location>
        <position position="441"/>
    </location>
</feature>
<feature type="sequence variant" id="VAR_003313" description="In GD1, GD2, GD3 and GD3C; associated in cis with Q-294 in some patients; at homozygosity it causes GD3C; also found in a patient with Parkinson disease; loss of glucosylceramidase activity; alters protein stability; dbSNP:rs1064651." evidence="5 6 11 13 14 15 24 25 30 42 48 55 63 66 68 69 79 82 89 90 105">
    <original>D</original>
    <variation>H</variation>
    <location>
        <position position="448"/>
    </location>
</feature>
<feature type="sequence variant" id="VAR_003314" description="In GD3; loss of glucosylceramidase activity; results in glycosphingolipid accumulation in brain and liver of a knockin mouse model due to impaired glucosylceramidase activity; dbSNP:rs77369218." evidence="55 65 79">
    <original>D</original>
    <variation>V</variation>
    <location>
        <position position="448"/>
    </location>
</feature>
<feature type="sequence variant" id="VAR_010073" description="In GD1; dbSNP:rs1553216985." evidence="105">
    <original>F</original>
    <variation>I</variation>
    <location>
        <position position="450"/>
    </location>
</feature>
<feature type="sequence variant" id="VAR_003315" description="In GD1." evidence="100">
    <original>Y</original>
    <variation>H</variation>
    <location>
        <position position="451"/>
    </location>
</feature>
<feature type="sequence variant" id="VAR_010074" description="In GD." evidence="90">
    <original>K</original>
    <variation>Q</variation>
    <location>
        <position position="452"/>
    </location>
</feature>
<feature type="sequence variant" id="VAR_003316" description="In GD2; loss of glucosylceramidase activity; dbSNP:rs121908295." evidence="54 79">
    <original>P</original>
    <variation>R</variation>
    <location>
        <position position="454"/>
    </location>
</feature>
<feature type="sequence variant" id="VAR_032215" description="In GD; loss of glucosylceramidase activity; increases susceptibility to proteolytic degradation." evidence="30">
    <original>M</original>
    <variation>V</variation>
    <location>
        <position position="455"/>
    </location>
</feature>
<feature type="sequence variant" id="VAR_003317" description="In GD1; severely decreased glucosylceramidase activity; 3% of normal activity when expressed in a heterologous system." evidence="73 95">
    <original>F</original>
    <variation>V</variation>
    <location>
        <position position="456"/>
    </location>
</feature>
<feature type="sequence variant" id="VAR_003318" description="In GD and GD1; dbSNP:rs74752878." evidence="15 24 76">
    <original>Y</original>
    <variation>C</variation>
    <location>
        <position position="457"/>
    </location>
</feature>
<feature type="sequence variant" id="VAR_032415" description="In GD1; associated in cis with R-490; loss of glucosylceramidase activity." evidence="24">
    <original>G</original>
    <variation>D</variation>
    <location>
        <position position="460"/>
    </location>
</feature>
<feature type="sequence variant" id="VAR_003319" description="In GD3; severe; uncertain significance." evidence="22">
    <original>K</original>
    <variation>E</variation>
    <location>
        <position position="464"/>
    </location>
</feature>
<feature type="sequence variant" id="VAR_063067" description="Likely benign; found in a patient with Parkinson disease; dbSNP:rs75671029." evidence="42">
    <original>D</original>
    <variation>N</variation>
    <location>
        <position position="482"/>
    </location>
</feature>
<feature type="sequence variant" id="VAR_003321" description="In GD1, GD2 and GD3; risk factor for Parkinson disease; gene conversion; alters protein stability; increased proteasomal degradation; decreased protein abundance; very low glucosylceramide catabolic process; severe decrease of glucosylceramidase activity; 3% of normal activity when expressed in a heterologous system; dbSNP:rs421016." evidence="5 6 8 11 24 30 42 46 54 60 63 69 79 82 88 90 94 95 103 104 105">
    <original>L</original>
    <variation>P</variation>
    <location>
        <position position="483"/>
    </location>
</feature>
<feature type="sequence variant" id="VAR_003320" description="In GD1 and GD2; dbSNP:rs421016." evidence="60 75">
    <original>L</original>
    <variation>R</variation>
    <location>
        <position position="483"/>
    </location>
</feature>
<feature type="sequence variant" id="VAR_003322" description="In GD1." evidence="15 103">
    <original>A</original>
    <variation>P</variation>
    <location>
        <position position="485"/>
    </location>
</feature>
<feature type="sequence variant" id="VAR_081201" description="In GD1." evidence="47">
    <original>V</original>
    <variation>E</variation>
    <location>
        <position position="486"/>
    </location>
</feature>
<feature type="sequence variant" id="VAR_032416" description="In GD1; associated in cis with D-460; uncertain significance; no effect on glucosylceramidase activity; dbSNP:rs76071730." evidence="15 24">
    <original>H</original>
    <variation>R</variation>
    <location>
        <position position="490"/>
    </location>
</feature>
<feature type="sequence variant" id="VAR_003323" description="In GD1; loss of glucosylceramidase activity; dbSNP:rs368060." evidence="42 60 79">
    <original>A</original>
    <variation>P</variation>
    <location>
        <position position="495"/>
    </location>
</feature>
<feature type="sequence variant" id="VAR_063068" evidence="42">
    <original>V</original>
    <variation>L</variation>
    <location>
        <position position="497"/>
    </location>
</feature>
<feature type="sequence variant" id="VAR_032216" description="In GD; decreased glucosylceramidase activity; 10% of normal activity; increases susceptibility to proteolytic degradation; dbSNP:rs1362103320." evidence="30">
    <original>L</original>
    <variation>P</variation>
    <location>
        <position position="500"/>
    </location>
</feature>
<feature type="sequence variant" id="VAR_009049" description="In GD2." evidence="96">
    <original>N</original>
    <variation>K</variation>
    <location>
        <position position="501"/>
    </location>
</feature>
<feature type="sequence variant" id="VAR_088444" description="In GD1." evidence="63">
    <original>N</original>
    <variation>Y</variation>
    <location>
        <position position="501"/>
    </location>
</feature>
<feature type="sequence variant" id="VAR_003324" description="In GD1 and GD2; also found in patients with Parkinson disease; no effect on protein abundance; decreased glucosylceramidase activity; dbSNP:rs80356771." evidence="11 20 30 42 43 69 79 82 103">
    <original>R</original>
    <variation>C</variation>
    <location>
        <position position="502"/>
    </location>
</feature>
<feature type="sequence variant" id="VAR_032217" description="In GD; loss of glucosylceramidase activity; increases susceptibility to proteolytic degradation." evidence="30">
    <original>R</original>
    <variation>P</variation>
    <location>
        <position position="502"/>
    </location>
</feature>
<feature type="sequence variant" id="VAR_003325">
    <original>L</original>
    <variation>P</variation>
    <location>
        <position position="509"/>
    </location>
</feature>
<feature type="sequence variant" id="VAR_009050" description="In GD2." evidence="101">
    <original>D</original>
    <variation>Y</variation>
    <location>
        <position position="513"/>
    </location>
</feature>
<feature type="sequence variant" id="VAR_003326" description="In GD; dbSNP:rs121908301." evidence="80">
    <original>G</original>
    <variation>S</variation>
    <location>
        <position position="517"/>
    </location>
</feature>
<feature type="sequence variant" id="VAR_088445" description="In GD1." evidence="63">
    <original>T</original>
    <variation>K</variation>
    <location>
        <position position="521"/>
    </location>
</feature>
<feature type="sequence variant" id="VAR_010075" description="In GD3; dbSNP:rs78016673." evidence="83">
    <original>T</original>
    <variation>I</variation>
    <location>
        <position position="530"/>
    </location>
</feature>
<feature type="sequence variant" id="VAR_003327" description="In GD1; mild; dbSNP:rs747506979." evidence="22 63 90">
    <original>R</original>
    <variation>C</variation>
    <location>
        <position position="535"/>
    </location>
</feature>
<feature type="sequence variant" id="VAR_003328" description="In GD1; decreased glucosylceramidase activity; 7% of normal activity when expressed in a heterologous system; dbSNP:rs75822236." evidence="74 80 95">
    <original>R</original>
    <variation>H</variation>
    <location>
        <position position="535"/>
    </location>
</feature>
<feature type="mutagenesis site" description="Loss of glucosylceramidase activity." evidence="30">
    <original>C</original>
    <variation>S</variation>
    <location>
        <position position="43"/>
    </location>
</feature>
<feature type="mutagenesis site" description="Loss of glucosylceramidase activity." evidence="30">
    <original>C</original>
    <variation>S</variation>
    <location>
        <position position="57"/>
    </location>
</feature>
<feature type="mutagenesis site" description="Loss of glucosylceramidase activity." evidence="30">
    <original>C</original>
    <variation>S</variation>
    <location>
        <position position="62"/>
    </location>
</feature>
<feature type="mutagenesis site" description="1000-fold decreases of glucosylceramidase activity." evidence="72">
    <original>E</original>
    <variation>G</variation>
    <location>
        <position position="379"/>
    </location>
</feature>
<feature type="mutagenesis site" description="Loss of glucosylceramidase activity." evidence="79">
    <original>D</original>
    <variation>E</variation>
    <location>
        <position position="482"/>
    </location>
</feature>
<feature type="mutagenesis site" description="Decreased glucosylceramidase activity." evidence="79">
    <original>D</original>
    <variation>G</variation>
    <location>
        <position position="482"/>
    </location>
</feature>
<feature type="mutagenesis site" description="Severe decrease of glucosylceramidase activity." evidence="79">
    <original>D</original>
    <variation>S</variation>
    <location>
        <position position="482"/>
    </location>
</feature>
<feature type="mutagenesis site" description="Loss of glucosylceramidase activity." evidence="79">
    <original>N</original>
    <variation>D</variation>
    <location>
        <position position="501"/>
    </location>
</feature>
<feature type="mutagenesis site" description="Loss of glucosylceramidase activity." evidence="79">
    <original>N</original>
    <variation>Q</variation>
    <location>
        <position position="501"/>
    </location>
</feature>
<feature type="sequence conflict" description="In Ref. 7; BAH13357." evidence="113" ref="7">
    <original>D</original>
    <variation>G</variation>
    <location>
        <position position="176"/>
    </location>
</feature>
<feature type="sequence conflict" description="In Ref. 5; BAA02546." evidence="113" ref="5">
    <original>N</original>
    <variation>R</variation>
    <location>
        <position position="227"/>
    </location>
</feature>
<feature type="sequence conflict" description="In Ref. 15; AA sequence." evidence="113" ref="15">
    <original>S</original>
    <variation>I</variation>
    <location>
        <position position="470"/>
    </location>
</feature>
<feature type="sequence conflict" description="In Ref. 1; AAA35873." evidence="113" ref="1">
    <original>R</original>
    <variation>H</variation>
    <location>
        <position position="534"/>
    </location>
</feature>
<feature type="strand" evidence="122">
    <location>
        <begin position="44"/>
        <end position="46"/>
    </location>
</feature>
<feature type="strand" evidence="125">
    <location>
        <begin position="49"/>
        <end position="52"/>
    </location>
</feature>
<feature type="strand" evidence="125">
    <location>
        <begin position="54"/>
        <end position="57"/>
    </location>
</feature>
<feature type="strand" evidence="125">
    <location>
        <begin position="75"/>
        <end position="82"/>
    </location>
</feature>
<feature type="strand" evidence="125">
    <location>
        <begin position="88"/>
        <end position="94"/>
    </location>
</feature>
<feature type="strand" evidence="124">
    <location>
        <begin position="96"/>
        <end position="98"/>
    </location>
</feature>
<feature type="strand" evidence="125">
    <location>
        <begin position="102"/>
        <end position="116"/>
    </location>
</feature>
<feature type="strand" evidence="125">
    <location>
        <begin position="119"/>
        <end position="123"/>
    </location>
</feature>
<feature type="helix" evidence="125">
    <location>
        <begin position="126"/>
        <end position="133"/>
    </location>
</feature>
<feature type="helix" evidence="125">
    <location>
        <begin position="137"/>
        <end position="148"/>
    </location>
</feature>
<feature type="turn" evidence="125">
    <location>
        <begin position="150"/>
        <end position="153"/>
    </location>
</feature>
<feature type="strand" evidence="125">
    <location>
        <begin position="157"/>
        <end position="163"/>
    </location>
</feature>
<feature type="strand" evidence="124">
    <location>
        <begin position="166"/>
        <end position="170"/>
    </location>
</feature>
<feature type="strand" evidence="123">
    <location>
        <begin position="177"/>
        <end position="179"/>
    </location>
</feature>
<feature type="helix" evidence="125">
    <location>
        <begin position="190"/>
        <end position="193"/>
    </location>
</feature>
<feature type="helix" evidence="125">
    <location>
        <begin position="196"/>
        <end position="206"/>
    </location>
</feature>
<feature type="strand" evidence="125">
    <location>
        <begin position="212"/>
        <end position="218"/>
    </location>
</feature>
<feature type="helix" evidence="125">
    <location>
        <begin position="222"/>
        <end position="224"/>
    </location>
</feature>
<feature type="strand" evidence="121">
    <location>
        <begin position="225"/>
        <end position="227"/>
    </location>
</feature>
<feature type="strand" evidence="125">
    <location>
        <begin position="228"/>
        <end position="233"/>
    </location>
</feature>
<feature type="strand" evidence="125">
    <location>
        <begin position="236"/>
        <end position="238"/>
    </location>
</feature>
<feature type="helix" evidence="125">
    <location>
        <begin position="243"/>
        <end position="261"/>
    </location>
</feature>
<feature type="strand" evidence="125">
    <location>
        <begin position="267"/>
        <end position="271"/>
    </location>
</feature>
<feature type="helix" evidence="125">
    <location>
        <begin position="275"/>
        <end position="279"/>
    </location>
</feature>
<feature type="strand" evidence="118">
    <location>
        <begin position="284"/>
        <end position="286"/>
    </location>
</feature>
<feature type="helix" evidence="125">
    <location>
        <begin position="292"/>
        <end position="301"/>
    </location>
</feature>
<feature type="helix" evidence="125">
    <location>
        <begin position="303"/>
        <end position="308"/>
    </location>
</feature>
<feature type="turn" evidence="125">
    <location>
        <begin position="311"/>
        <end position="314"/>
    </location>
</feature>
<feature type="strand" evidence="125">
    <location>
        <begin position="315"/>
        <end position="323"/>
    </location>
</feature>
<feature type="helix" evidence="125">
    <location>
        <begin position="324"/>
        <end position="326"/>
    </location>
</feature>
<feature type="helix" evidence="125">
    <location>
        <begin position="329"/>
        <end position="335"/>
    </location>
</feature>
<feature type="helix" evidence="125">
    <location>
        <begin position="338"/>
        <end position="341"/>
    </location>
</feature>
<feature type="strand" evidence="125">
    <location>
        <begin position="346"/>
        <end position="350"/>
    </location>
</feature>
<feature type="helix" evidence="125">
    <location>
        <begin position="354"/>
        <end position="356"/>
    </location>
</feature>
<feature type="turn" evidence="125">
    <location>
        <begin position="359"/>
        <end position="362"/>
    </location>
</feature>
<feature type="helix" evidence="125">
    <location>
        <begin position="363"/>
        <end position="369"/>
    </location>
</feature>
<feature type="strand" evidence="125">
    <location>
        <begin position="373"/>
        <end position="379"/>
    </location>
</feature>
<feature type="strand" evidence="120">
    <location>
        <begin position="385"/>
        <end position="388"/>
    </location>
</feature>
<feature type="helix" evidence="125">
    <location>
        <begin position="396"/>
        <end position="411"/>
    </location>
</feature>
<feature type="strand" evidence="125">
    <location>
        <begin position="414"/>
        <end position="422"/>
    </location>
</feature>
<feature type="strand" evidence="119">
    <location>
        <begin position="426"/>
        <end position="428"/>
    </location>
</feature>
<feature type="strand" evidence="121">
    <location>
        <begin position="432"/>
        <end position="434"/>
    </location>
</feature>
<feature type="strand" evidence="125">
    <location>
        <begin position="440"/>
        <end position="444"/>
    </location>
</feature>
<feature type="helix" evidence="125">
    <location>
        <begin position="445"/>
        <end position="447"/>
    </location>
</feature>
<feature type="strand" evidence="125">
    <location>
        <begin position="449"/>
        <end position="452"/>
    </location>
</feature>
<feature type="helix" evidence="125">
    <location>
        <begin position="454"/>
        <end position="463"/>
    </location>
</feature>
<feature type="strand" evidence="125">
    <location>
        <begin position="471"/>
        <end position="479"/>
    </location>
</feature>
<feature type="strand" evidence="125">
    <location>
        <begin position="482"/>
        <end position="489"/>
    </location>
</feature>
<feature type="strand" evidence="125">
    <location>
        <begin position="495"/>
        <end position="501"/>
    </location>
</feature>
<feature type="strand" evidence="125">
    <location>
        <begin position="503"/>
        <end position="505"/>
    </location>
</feature>
<feature type="strand" evidence="125">
    <location>
        <begin position="507"/>
        <end position="513"/>
    </location>
</feature>
<feature type="turn" evidence="125">
    <location>
        <begin position="514"/>
        <end position="516"/>
    </location>
</feature>
<feature type="strand" evidence="125">
    <location>
        <begin position="517"/>
        <end position="523"/>
    </location>
</feature>
<feature type="strand" evidence="125">
    <location>
        <begin position="527"/>
        <end position="533"/>
    </location>
</feature>
<keyword id="KW-0002">3D-structure</keyword>
<keyword id="KW-0024">Alternative initiation</keyword>
<keyword id="KW-0025">Alternative splicing</keyword>
<keyword id="KW-0153">Cholesterol metabolism</keyword>
<keyword id="KW-0903">Direct protein sequencing</keyword>
<keyword id="KW-0225">Disease variant</keyword>
<keyword id="KW-1015">Disulfide bond</keyword>
<keyword id="KW-0307">Gaucher disease</keyword>
<keyword id="KW-0325">Glycoprotein</keyword>
<keyword id="KW-0326">Glycosidase</keyword>
<keyword id="KW-0328">Glycosyltransferase</keyword>
<keyword id="KW-0378">Hydrolase</keyword>
<keyword id="KW-0977">Ichthyosis</keyword>
<keyword id="KW-0443">Lipid metabolism</keyword>
<keyword id="KW-0458">Lysosome</keyword>
<keyword id="KW-0472">Membrane</keyword>
<keyword id="KW-0523">Neurodegeneration</keyword>
<keyword id="KW-0907">Parkinson disease</keyword>
<keyword id="KW-0908">Parkinsonism</keyword>
<keyword id="KW-0582">Pharmaceutical</keyword>
<keyword id="KW-1267">Proteomics identification</keyword>
<keyword id="KW-1185">Reference proteome</keyword>
<keyword id="KW-0732">Signal</keyword>
<keyword id="KW-0746">Sphingolipid metabolism</keyword>
<keyword id="KW-0753">Steroid metabolism</keyword>
<keyword id="KW-1207">Sterol metabolism</keyword>
<keyword id="KW-0808">Transferase</keyword>
<proteinExistence type="evidence at protein level"/>
<reference key="1">
    <citation type="journal article" date="1985" name="Proc. Natl. Acad. Sci. U.S.A.">
        <title>Molecular cloning and nucleotide sequence of human glucocerebrosidase cDNA.</title>
        <authorList>
            <person name="Sorge J."/>
            <person name="West C."/>
            <person name="Westwood B."/>
            <person name="Beutler E."/>
        </authorList>
    </citation>
    <scope>NUCLEOTIDE SEQUENCE [MRNA] (ISOFORM SHORT)</scope>
    <source>
        <tissue>Placenta</tissue>
    </source>
</reference>
<reference key="2">
    <citation type="journal article" date="1986" name="J. Biol. Chem.">
        <title>Nucleotide sequence of cDNA containing the complete coding sequence for human lysosomal glucocerebrosidase.</title>
        <authorList>
            <person name="Tsuji S."/>
            <person name="Choudary P.V."/>
            <person name="Martin B.M."/>
            <person name="Winfield S."/>
            <person name="Barranger J.A."/>
            <person name="Ginns E.I."/>
        </authorList>
    </citation>
    <scope>NUCLEOTIDE SEQUENCE [MRNA] (ISOFORM SHORT)</scope>
    <scope>VARIANT LEU-298</scope>
    <source>
        <tissue>Hepatoma</tissue>
    </source>
</reference>
<reference key="3">
    <citation type="journal article" date="1989" name="Genomics">
        <title>The human glucocerebrosidase gene and pseudogene: structure and evolution.</title>
        <authorList>
            <person name="Horowitz M."/>
            <person name="Wilder S."/>
            <person name="Horowitz Z."/>
            <person name="Reiner O."/>
            <person name="Gelbart T."/>
            <person name="Beutler E."/>
        </authorList>
    </citation>
    <scope>NUCLEOTIDE SEQUENCE [GENOMIC DNA]</scope>
    <source>
        <tissue>Liver</tissue>
    </source>
</reference>
<reference key="4">
    <citation type="journal article" date="1992" name="Genomics">
        <title>Polymorphisms in the human glucocerebrosidase gene.</title>
        <authorList>
            <person name="Beutler E."/>
            <person name="West C."/>
            <person name="Gelbart T."/>
        </authorList>
    </citation>
    <scope>NUCLEOTIDE SEQUENCE [GENOMIC DNA]</scope>
    <source>
        <tissue>Liver</tissue>
    </source>
</reference>
<reference key="5">
    <citation type="journal article" date="1993" name="Gene">
        <title>A novel transcript from a pseudogene for human glucocerebrosidase in non-Gaucher disease cells.</title>
        <authorList>
            <person name="Imai K."/>
            <person name="Nakamura M."/>
            <person name="Yamada M."/>
            <person name="Asano A."/>
            <person name="Yokoyama S."/>
            <person name="Tsuji S."/>
            <person name="Ginns E.I."/>
        </authorList>
    </citation>
    <scope>NUCLEOTIDE SEQUENCE [MRNA] (ISOFORMS LONG AND 3)</scope>
    <scope>VARIANTS GD ARG-223; GLY-230; PRO-235; ARG-241; ILE-252 AND ARG-364</scope>
    <scope>VARIANTS GLY-310 AND HIS-368</scope>
</reference>
<reference key="6">
    <citation type="journal article" date="1997" name="Genome Res.">
        <title>Identification of three additional genes contiguous to the glucocerebrosidase locus on chromosome 1q21: implications for Gaucher disease.</title>
        <authorList>
            <person name="Winfield S.L."/>
            <person name="Tayebi N."/>
            <person name="Martin B.M."/>
            <person name="Ginns E.I."/>
            <person name="Sidransky E."/>
        </authorList>
    </citation>
    <scope>NUCLEOTIDE SEQUENCE [GENOMIC DNA]</scope>
</reference>
<reference key="7">
    <citation type="journal article" date="2004" name="Nat. Genet.">
        <title>Complete sequencing and characterization of 21,243 full-length human cDNAs.</title>
        <authorList>
            <person name="Ota T."/>
            <person name="Suzuki Y."/>
            <person name="Nishikawa T."/>
            <person name="Otsuki T."/>
            <person name="Sugiyama T."/>
            <person name="Irie R."/>
            <person name="Wakamatsu A."/>
            <person name="Hayashi K."/>
            <person name="Sato H."/>
            <person name="Nagai K."/>
            <person name="Kimura K."/>
            <person name="Makita H."/>
            <person name="Sekine M."/>
            <person name="Obayashi M."/>
            <person name="Nishi T."/>
            <person name="Shibahara T."/>
            <person name="Tanaka T."/>
            <person name="Ishii S."/>
            <person name="Yamamoto J."/>
            <person name="Saito K."/>
            <person name="Kawai Y."/>
            <person name="Isono Y."/>
            <person name="Nakamura Y."/>
            <person name="Nagahari K."/>
            <person name="Murakami K."/>
            <person name="Yasuda T."/>
            <person name="Iwayanagi T."/>
            <person name="Wagatsuma M."/>
            <person name="Shiratori A."/>
            <person name="Sudo H."/>
            <person name="Hosoiri T."/>
            <person name="Kaku Y."/>
            <person name="Kodaira H."/>
            <person name="Kondo H."/>
            <person name="Sugawara M."/>
            <person name="Takahashi M."/>
            <person name="Kanda K."/>
            <person name="Yokoi T."/>
            <person name="Furuya T."/>
            <person name="Kikkawa E."/>
            <person name="Omura Y."/>
            <person name="Abe K."/>
            <person name="Kamihara K."/>
            <person name="Katsuta N."/>
            <person name="Sato K."/>
            <person name="Tanikawa M."/>
            <person name="Yamazaki M."/>
            <person name="Ninomiya K."/>
            <person name="Ishibashi T."/>
            <person name="Yamashita H."/>
            <person name="Murakawa K."/>
            <person name="Fujimori K."/>
            <person name="Tanai H."/>
            <person name="Kimata M."/>
            <person name="Watanabe M."/>
            <person name="Hiraoka S."/>
            <person name="Chiba Y."/>
            <person name="Ishida S."/>
            <person name="Ono Y."/>
            <person name="Takiguchi S."/>
            <person name="Watanabe S."/>
            <person name="Yosida M."/>
            <person name="Hotuta T."/>
            <person name="Kusano J."/>
            <person name="Kanehori K."/>
            <person name="Takahashi-Fujii A."/>
            <person name="Hara H."/>
            <person name="Tanase T.-O."/>
            <person name="Nomura Y."/>
            <person name="Togiya S."/>
            <person name="Komai F."/>
            <person name="Hara R."/>
            <person name="Takeuchi K."/>
            <person name="Arita M."/>
            <person name="Imose N."/>
            <person name="Musashino K."/>
            <person name="Yuuki H."/>
            <person name="Oshima A."/>
            <person name="Sasaki N."/>
            <person name="Aotsuka S."/>
            <person name="Yoshikawa Y."/>
            <person name="Matsunawa H."/>
            <person name="Ichihara T."/>
            <person name="Shiohata N."/>
            <person name="Sano S."/>
            <person name="Moriya S."/>
            <person name="Momiyama H."/>
            <person name="Satoh N."/>
            <person name="Takami S."/>
            <person name="Terashima Y."/>
            <person name="Suzuki O."/>
            <person name="Nakagawa S."/>
            <person name="Senoh A."/>
            <person name="Mizoguchi H."/>
            <person name="Goto Y."/>
            <person name="Shimizu F."/>
            <person name="Wakebe H."/>
            <person name="Hishigaki H."/>
            <person name="Watanabe T."/>
            <person name="Sugiyama A."/>
            <person name="Takemoto M."/>
            <person name="Kawakami B."/>
            <person name="Yamazaki M."/>
            <person name="Watanabe K."/>
            <person name="Kumagai A."/>
            <person name="Itakura S."/>
            <person name="Fukuzumi Y."/>
            <person name="Fujimori Y."/>
            <person name="Komiyama M."/>
            <person name="Tashiro H."/>
            <person name="Tanigami A."/>
            <person name="Fujiwara T."/>
            <person name="Ono T."/>
            <person name="Yamada K."/>
            <person name="Fujii Y."/>
            <person name="Ozaki K."/>
            <person name="Hirao M."/>
            <person name="Ohmori Y."/>
            <person name="Kawabata A."/>
            <person name="Hikiji T."/>
            <person name="Kobatake N."/>
            <person name="Inagaki H."/>
            <person name="Ikema Y."/>
            <person name="Okamoto S."/>
            <person name="Okitani R."/>
            <person name="Kawakami T."/>
            <person name="Noguchi S."/>
            <person name="Itoh T."/>
            <person name="Shigeta K."/>
            <person name="Senba T."/>
            <person name="Matsumura K."/>
            <person name="Nakajima Y."/>
            <person name="Mizuno T."/>
            <person name="Morinaga M."/>
            <person name="Sasaki M."/>
            <person name="Togashi T."/>
            <person name="Oyama M."/>
            <person name="Hata H."/>
            <person name="Watanabe M."/>
            <person name="Komatsu T."/>
            <person name="Mizushima-Sugano J."/>
            <person name="Satoh T."/>
            <person name="Shirai Y."/>
            <person name="Takahashi Y."/>
            <person name="Nakagawa K."/>
            <person name="Okumura K."/>
            <person name="Nagase T."/>
            <person name="Nomura N."/>
            <person name="Kikuchi H."/>
            <person name="Masuho Y."/>
            <person name="Yamashita R."/>
            <person name="Nakai K."/>
            <person name="Yada T."/>
            <person name="Nakamura Y."/>
            <person name="Ohara O."/>
            <person name="Isogai T."/>
            <person name="Sugano S."/>
        </authorList>
    </citation>
    <scope>NUCLEOTIDE SEQUENCE [LARGE SCALE MRNA] (ISOFORMS LONG; 4 AND 5)</scope>
    <scope>VARIANT MET-408</scope>
</reference>
<reference key="8">
    <citation type="journal article" date="2006" name="Nature">
        <title>The DNA sequence and biological annotation of human chromosome 1.</title>
        <authorList>
            <person name="Gregory S.G."/>
            <person name="Barlow K.F."/>
            <person name="McLay K.E."/>
            <person name="Kaul R."/>
            <person name="Swarbreck D."/>
            <person name="Dunham A."/>
            <person name="Scott C.E."/>
            <person name="Howe K.L."/>
            <person name="Woodfine K."/>
            <person name="Spencer C.C.A."/>
            <person name="Jones M.C."/>
            <person name="Gillson C."/>
            <person name="Searle S."/>
            <person name="Zhou Y."/>
            <person name="Kokocinski F."/>
            <person name="McDonald L."/>
            <person name="Evans R."/>
            <person name="Phillips K."/>
            <person name="Atkinson A."/>
            <person name="Cooper R."/>
            <person name="Jones C."/>
            <person name="Hall R.E."/>
            <person name="Andrews T.D."/>
            <person name="Lloyd C."/>
            <person name="Ainscough R."/>
            <person name="Almeida J.P."/>
            <person name="Ambrose K.D."/>
            <person name="Anderson F."/>
            <person name="Andrew R.W."/>
            <person name="Ashwell R.I.S."/>
            <person name="Aubin K."/>
            <person name="Babbage A.K."/>
            <person name="Bagguley C.L."/>
            <person name="Bailey J."/>
            <person name="Beasley H."/>
            <person name="Bethel G."/>
            <person name="Bird C.P."/>
            <person name="Bray-Allen S."/>
            <person name="Brown J.Y."/>
            <person name="Brown A.J."/>
            <person name="Buckley D."/>
            <person name="Burton J."/>
            <person name="Bye J."/>
            <person name="Carder C."/>
            <person name="Chapman J.C."/>
            <person name="Clark S.Y."/>
            <person name="Clarke G."/>
            <person name="Clee C."/>
            <person name="Cobley V."/>
            <person name="Collier R.E."/>
            <person name="Corby N."/>
            <person name="Coville G.J."/>
            <person name="Davies J."/>
            <person name="Deadman R."/>
            <person name="Dunn M."/>
            <person name="Earthrowl M."/>
            <person name="Ellington A.G."/>
            <person name="Errington H."/>
            <person name="Frankish A."/>
            <person name="Frankland J."/>
            <person name="French L."/>
            <person name="Garner P."/>
            <person name="Garnett J."/>
            <person name="Gay L."/>
            <person name="Ghori M.R.J."/>
            <person name="Gibson R."/>
            <person name="Gilby L.M."/>
            <person name="Gillett W."/>
            <person name="Glithero R.J."/>
            <person name="Grafham D.V."/>
            <person name="Griffiths C."/>
            <person name="Griffiths-Jones S."/>
            <person name="Grocock R."/>
            <person name="Hammond S."/>
            <person name="Harrison E.S.I."/>
            <person name="Hart E."/>
            <person name="Haugen E."/>
            <person name="Heath P.D."/>
            <person name="Holmes S."/>
            <person name="Holt K."/>
            <person name="Howden P.J."/>
            <person name="Hunt A.R."/>
            <person name="Hunt S.E."/>
            <person name="Hunter G."/>
            <person name="Isherwood J."/>
            <person name="James R."/>
            <person name="Johnson C."/>
            <person name="Johnson D."/>
            <person name="Joy A."/>
            <person name="Kay M."/>
            <person name="Kershaw J.K."/>
            <person name="Kibukawa M."/>
            <person name="Kimberley A.M."/>
            <person name="King A."/>
            <person name="Knights A.J."/>
            <person name="Lad H."/>
            <person name="Laird G."/>
            <person name="Lawlor S."/>
            <person name="Leongamornlert D.A."/>
            <person name="Lloyd D.M."/>
            <person name="Loveland J."/>
            <person name="Lovell J."/>
            <person name="Lush M.J."/>
            <person name="Lyne R."/>
            <person name="Martin S."/>
            <person name="Mashreghi-Mohammadi M."/>
            <person name="Matthews L."/>
            <person name="Matthews N.S.W."/>
            <person name="McLaren S."/>
            <person name="Milne S."/>
            <person name="Mistry S."/>
            <person name="Moore M.J.F."/>
            <person name="Nickerson T."/>
            <person name="O'Dell C.N."/>
            <person name="Oliver K."/>
            <person name="Palmeiri A."/>
            <person name="Palmer S.A."/>
            <person name="Parker A."/>
            <person name="Patel D."/>
            <person name="Pearce A.V."/>
            <person name="Peck A.I."/>
            <person name="Pelan S."/>
            <person name="Phelps K."/>
            <person name="Phillimore B.J."/>
            <person name="Plumb R."/>
            <person name="Rajan J."/>
            <person name="Raymond C."/>
            <person name="Rouse G."/>
            <person name="Saenphimmachak C."/>
            <person name="Sehra H.K."/>
            <person name="Sheridan E."/>
            <person name="Shownkeen R."/>
            <person name="Sims S."/>
            <person name="Skuce C.D."/>
            <person name="Smith M."/>
            <person name="Steward C."/>
            <person name="Subramanian S."/>
            <person name="Sycamore N."/>
            <person name="Tracey A."/>
            <person name="Tromans A."/>
            <person name="Van Helmond Z."/>
            <person name="Wall M."/>
            <person name="Wallis J.M."/>
            <person name="White S."/>
            <person name="Whitehead S.L."/>
            <person name="Wilkinson J.E."/>
            <person name="Willey D.L."/>
            <person name="Williams H."/>
            <person name="Wilming L."/>
            <person name="Wray P.W."/>
            <person name="Wu Z."/>
            <person name="Coulson A."/>
            <person name="Vaudin M."/>
            <person name="Sulston J.E."/>
            <person name="Durbin R.M."/>
            <person name="Hubbard T."/>
            <person name="Wooster R."/>
            <person name="Dunham I."/>
            <person name="Carter N.P."/>
            <person name="McVean G."/>
            <person name="Ross M.T."/>
            <person name="Harrow J."/>
            <person name="Olson M.V."/>
            <person name="Beck S."/>
            <person name="Rogers J."/>
            <person name="Bentley D.R."/>
        </authorList>
    </citation>
    <scope>NUCLEOTIDE SEQUENCE [LARGE SCALE GENOMIC DNA]</scope>
</reference>
<reference key="9">
    <citation type="journal article" date="2004" name="Genome Res.">
        <title>The status, quality, and expansion of the NIH full-length cDNA project: the Mammalian Gene Collection (MGC).</title>
        <authorList>
            <consortium name="The MGC Project Team"/>
        </authorList>
    </citation>
    <scope>NUCLEOTIDE SEQUENCE [LARGE SCALE MRNA] (ISOFORM LONG)</scope>
    <source>
        <tissue>Placenta</tissue>
    </source>
</reference>
<reference key="10">
    <citation type="journal article" date="1988" name="DNA">
        <title>Structural analysis of the human glucocerebrosidase genes.</title>
        <authorList>
            <person name="Reiner O."/>
            <person name="Wigderson M."/>
            <person name="Horowitz M."/>
        </authorList>
    </citation>
    <scope>NUCLEOTIDE SEQUENCE [GENOMIC DNA / MRNA] OF 1-11</scope>
</reference>
<reference key="11">
    <citation type="journal article" date="1987" name="Am. J. Hum. Genet.">
        <title>The human glucocerebrosidase gene has two functional ATG initiator codons.</title>
        <authorList>
            <person name="Sorge J.A."/>
            <person name="West C."/>
            <person name="Kuhl W."/>
            <person name="Treger L."/>
            <person name="Beutler E."/>
        </authorList>
    </citation>
    <scope>NUCLEOTIDE SEQUENCE [GENOMIC DNA] OF 1-45</scope>
    <scope>ALTERNATIVE INITIATION</scope>
</reference>
<reference key="12">
    <citation type="journal article" date="1984" name="Fed. Proc.">
        <title>Structural studies of human placental glucocerebrosidase.</title>
        <authorList>
            <person name="Martin B.M."/>
            <person name="Murray G.J."/>
            <person name="Coligan J.E."/>
            <person name="Raum M."/>
            <person name="Brady R.O."/>
            <person name="Barranger J.A."/>
        </authorList>
    </citation>
    <scope>PROTEIN SEQUENCE OF 40-44</scope>
    <scope>CLEAVAGE OF SIGNAL PEPTIDE AFTER GLY-39</scope>
    <source>
        <tissue>Placenta</tissue>
    </source>
</reference>
<reference key="13">
    <citation type="journal article" date="1984" name="Biochem. Biophys. Res. Commun.">
        <title>Isolation of cDNA clones for human beta-glucocerebrosidase using the lambda gt11 expression system.</title>
        <authorList>
            <person name="Ginns E.I."/>
            <person name="Choudary P.V."/>
            <person name="Martin B.M."/>
            <person name="Winfield S."/>
            <person name="Stubblefield B."/>
            <person name="Mayor J."/>
            <person name="Merkle-Lehman D."/>
            <person name="Murray G.J."/>
            <person name="Bowers L.A."/>
            <person name="Barranger J.A."/>
        </authorList>
    </citation>
    <scope>NUCLEOTIDE SEQUENCE [MRNA] OF 403-416</scope>
</reference>
<reference key="14">
    <citation type="journal article" date="1988" name="Proc. Natl. Acad. Sci. U.S.A.">
        <title>Genetic heterogeneity in type 1 Gaucher disease: multiple genotypes in Ashkenazic and non-Ashkenazic individuals.</title>
        <authorList>
            <person name="Tsuji S."/>
            <person name="Martin B.M."/>
            <person name="Barranger J.A."/>
            <person name="Stubblefield B.K."/>
            <person name="LaMarca M.E."/>
            <person name="Ginns E.I."/>
        </authorList>
    </citation>
    <scope>NUCLEOTIDE SEQUENCE [GENOMIC DNA] OF 409-462</scope>
    <scope>VARIANT GD1 SER-409</scope>
    <source>
        <tissue>Skin</tissue>
    </source>
</reference>
<reference key="15">
    <citation type="journal article" date="1986" name="Proc. Natl. Acad. Sci. U.S.A.">
        <title>Human acid beta-glucosidase: isolation and amino acid sequence of a peptide containing the catalytic site.</title>
        <authorList>
            <person name="Dinur T."/>
            <person name="Osiecki K.M."/>
            <person name="Legler G."/>
            <person name="Gatt S."/>
            <person name="Desnick R.J."/>
            <person name="Grabowski G.A."/>
        </authorList>
    </citation>
    <scope>PROTEIN SEQUENCE OF 469-520</scope>
    <source>
        <tissue>Placenta</tissue>
    </source>
</reference>
<reference key="16">
    <citation type="journal article" date="1991" name="J. Biol. Chem.">
        <title>Mannose 6-phosphate-independent membrane association of cathepsin D, glucocerebrosidase, and sphingolipid-activating protein in HepG2 cells.</title>
        <authorList>
            <person name="Rijnboutt S."/>
            <person name="Aerts H.M."/>
            <person name="Geuze H.J."/>
            <person name="Tager J.M."/>
            <person name="Strous G.J."/>
        </authorList>
    </citation>
    <scope>TOPOLOGY</scope>
</reference>
<reference key="17">
    <citation type="journal article" date="1994" name="J. Biol. Chem.">
        <title>Identification of Glu340 as the active-site nucleophile in human glucocerebrosidase by use of electrospray tandem mass spectrometry.</title>
        <authorList>
            <person name="Miao S."/>
            <person name="McCarter J.D."/>
            <person name="Grace M.E."/>
            <person name="Grabowski G.A."/>
            <person name="Aebersold R."/>
            <person name="Withers S.G."/>
        </authorList>
    </citation>
    <scope>MUTAGENESIS OF GLU-379</scope>
    <scope>ACTIVE SITE</scope>
    <scope>IDENTIFICATION BY MASS SPECTROMETRY</scope>
</reference>
<reference key="18">
    <citation type="journal article" date="1997" name="J. Biol. Chem.">
        <title>Effect of saposins A and C on the enzymatic hydrolysis of liposomal glucosylceramide.</title>
        <authorList>
            <person name="Vaccaro A.M."/>
            <person name="Tatti M."/>
            <person name="Ciaffoni F."/>
            <person name="Salvioli R."/>
            <person name="Barca A."/>
            <person name="Scerch C."/>
        </authorList>
    </citation>
    <scope>FUNCTION</scope>
    <scope>CATALYTIC ACTIVITY</scope>
    <scope>PATHWAY</scope>
    <scope>ACTIVITY REGULATION</scope>
</reference>
<reference key="19">
    <citation type="journal article" date="2000" name="FEBS Lett.">
        <title>Further studies on the reconstitution of glucosylceramidase activity by Sap C and anionic phospholipids.</title>
        <authorList>
            <person name="Salvioli R."/>
            <person name="Tatti M."/>
            <person name="Ciaffoni F."/>
            <person name="Vaccaro A.M."/>
        </authorList>
    </citation>
    <scope>INTERACTION WITH SAPOSIN-C</scope>
    <scope>ACTIVITY REGULATION</scope>
    <scope>TOPOLOGY</scope>
</reference>
<reference key="20">
    <citation type="journal article" date="2003" name="Nat. Biotechnol.">
        <title>Identification and quantification of N-linked glycoproteins using hydrazide chemistry, stable isotope labeling and mass spectrometry.</title>
        <authorList>
            <person name="Zhang H."/>
            <person name="Li X.-J."/>
            <person name="Martin D.B."/>
            <person name="Aebersold R."/>
        </authorList>
    </citation>
    <scope>GLYCOSYLATION AT ASN-98; ASN-185 AND ASN-309</scope>
</reference>
<reference key="21">
    <citation type="journal article" date="2007" name="Cell">
        <title>LIMP-2 is a receptor for lysosomal mannose-6-phosphate-independent targeting of beta-glucocerebrosidase.</title>
        <authorList>
            <person name="Reczek D."/>
            <person name="Schwake M."/>
            <person name="Schroder J."/>
            <person name="Hughes H."/>
            <person name="Blanz J."/>
            <person name="Jin X."/>
            <person name="Brondyk W."/>
            <person name="Van Patten S."/>
            <person name="Edmunds T."/>
            <person name="Saftig P."/>
        </authorList>
    </citation>
    <scope>SUBCELLULAR LOCATION</scope>
    <scope>TOPOLOGY</scope>
    <scope>INTERACTION WITH SCARB2</scope>
</reference>
<reference key="22">
    <citation type="journal article" date="2007" name="Traffic">
        <title>Integral and associated lysosomal membrane proteins.</title>
        <authorList>
            <person name="Schroeder B."/>
            <person name="Wrocklage C."/>
            <person name="Pan C."/>
            <person name="Jaeger R."/>
            <person name="Koesters B."/>
            <person name="Schaefer H."/>
            <person name="Elsaesser H.-P."/>
            <person name="Mann M."/>
            <person name="Hasilik A."/>
        </authorList>
    </citation>
    <scope>SUBCELLULAR LOCATION [LARGE SCALE ANALYSIS]</scope>
    <source>
        <tissue>Placenta</tissue>
    </source>
</reference>
<reference key="23">
    <citation type="journal article" date="2009" name="J. Biol. Chem.">
        <title>Involvement of acid beta-glucosidase 1 in the salvage pathway of ceramide formation.</title>
        <authorList>
            <person name="Kitatani K."/>
            <person name="Sheldon K."/>
            <person name="Rajagopalan V."/>
            <person name="Anelli V."/>
            <person name="Jenkins R.W."/>
            <person name="Sun Y."/>
            <person name="Grabowski G.A."/>
            <person name="Obeid L.M."/>
            <person name="Hannun Y.A."/>
        </authorList>
    </citation>
    <scope>FUNCTION</scope>
    <scope>ACTIVITY REGULATION</scope>
</reference>
<reference key="24">
    <citation type="journal article" date="2009" name="J. Proteome Res.">
        <title>Glycoproteomics analysis of human liver tissue by combination of multiple enzyme digestion and hydrazide chemistry.</title>
        <authorList>
            <person name="Chen R."/>
            <person name="Jiang X."/>
            <person name="Sun D."/>
            <person name="Han G."/>
            <person name="Wang F."/>
            <person name="Ye M."/>
            <person name="Wang L."/>
            <person name="Zou H."/>
        </authorList>
    </citation>
    <scope>GLYCOSYLATION [LARGE SCALE ANALYSIS] AT ASN-98 AND ASN-309</scope>
    <source>
        <tissue>Liver</tissue>
    </source>
</reference>
<reference key="25">
    <citation type="journal article" date="2010" name="Proc. Natl. Acad. Sci. U.S.A.">
        <title>Decreased glucocerebrosidase activity in Gaucher disease parallels quantitative enzyme loss due to abnormal interaction with TCP1 and c-Cbl.</title>
        <authorList>
            <person name="Lu J."/>
            <person name="Chiang J."/>
            <person name="Iyer R.R."/>
            <person name="Thompson E."/>
            <person name="Kaneski C.R."/>
            <person name="Xu D.S."/>
            <person name="Yang C."/>
            <person name="Chen M."/>
            <person name="Hodes R.J."/>
            <person name="Lonser R.R."/>
            <person name="Brady R.O."/>
            <person name="Zhuang Z."/>
        </authorList>
    </citation>
    <scope>INTERACTION WITH TCP1</scope>
    <scope>CHARACTERIZATION OF VARIANT GD1 SER-409</scope>
    <scope>CHARACTERIZATION OF VARIANT GD2 SER-409 AND PRO-483</scope>
</reference>
<reference key="26">
    <citation type="journal article" date="2011" name="BMC Syst. Biol.">
        <title>Initial characterization of the human central proteome.</title>
        <authorList>
            <person name="Burkard T.R."/>
            <person name="Planyavsky M."/>
            <person name="Kaupe I."/>
            <person name="Breitwieser F.P."/>
            <person name="Buerckstuemmer T."/>
            <person name="Bennett K.L."/>
            <person name="Superti-Furga G."/>
            <person name="Colinge J."/>
        </authorList>
    </citation>
    <scope>IDENTIFICATION BY MASS SPECTROMETRY [LARGE SCALE ANALYSIS]</scope>
</reference>
<reference key="27">
    <citation type="journal article" date="2013" name="Biochem. Biophys. Res. Commun.">
        <title>Cholesterol glucosylation is catalyzed by transglucosylation reaction of beta-glucosidase 1.</title>
        <authorList>
            <person name="Akiyama H."/>
            <person name="Kobayashi S."/>
            <person name="Hirabayashi Y."/>
            <person name="Murakami-Murofushi K."/>
        </authorList>
    </citation>
    <scope>FUNCTION</scope>
    <scope>CATALYTIC ACTIVITY</scope>
    <scope>ACTIVITY REGULATION</scope>
    <scope>PATHWAY</scope>
    <scope>SUBSTRATE SPECIFICITY</scope>
    <scope>BIOPHYSICOCHEMICAL PROPERTIES</scope>
</reference>
<reference key="28">
    <citation type="journal article" date="2013" name="Mol. Genet. Metab.">
        <title>Membrane-bound alpha-synuclein interacts with glucocerebrosidase and inhibits enzyme activity.</title>
        <authorList>
            <person name="Yap T.L."/>
            <person name="Velayati A."/>
            <person name="Sidransky E."/>
            <person name="Lee J.C."/>
        </authorList>
    </citation>
    <scope>INTERACTION WITH SNCA</scope>
</reference>
<reference key="29">
    <citation type="journal article" date="2016" name="EBioMedicine">
        <title>Progranulin Recruits HSP70 to beta-Glucocerebrosidase and Is Therapeutic Against Gaucher Disease.</title>
        <authorList>
            <person name="Jian J."/>
            <person name="Tian Q.Y."/>
            <person name="Hettinghouse A."/>
            <person name="Zhao S."/>
            <person name="Liu H."/>
            <person name="Wei J."/>
            <person name="Grunig G."/>
            <person name="Zhang W."/>
            <person name="Setchell K.D.R."/>
            <person name="Sun Y."/>
            <person name="Overkleeft H.S."/>
            <person name="Chan G.L."/>
            <person name="Liu C.J."/>
        </authorList>
    </citation>
    <scope>INTERACTION WITH GRN</scope>
</reference>
<reference key="30">
    <citation type="journal article" date="2016" name="Hum. Mol. Genet.">
        <title>Autophagic lysosome reformation dysfunction in glucocerebrosidase deficient cells: relevance to Parkinson disease.</title>
        <authorList>
            <person name="Magalhaes J."/>
            <person name="Gegg M.E."/>
            <person name="Migdalska-Richards A."/>
            <person name="Doherty M.K."/>
            <person name="Whitfield P.D."/>
            <person name="Schapira A.H."/>
        </authorList>
    </citation>
    <scope>FUNCTION</scope>
</reference>
<reference key="31">
    <citation type="journal article" date="2016" name="J. Lipid Res.">
        <title>Glucosylated cholesterol in mammalian cells and tissues: formation and degradation by multiple cellular beta-glucosidases.</title>
        <authorList>
            <person name="Marques A.R."/>
            <person name="Mirzaian M."/>
            <person name="Akiyama H."/>
            <person name="Wisse P."/>
            <person name="Ferraz M.J."/>
            <person name="Gaspar P."/>
            <person name="Ghauharali-van der Vlugt K."/>
            <person name="Meijer R."/>
            <person name="Giraldo P."/>
            <person name="Alfonso P."/>
            <person name="Irun P."/>
            <person name="Dahl M."/>
            <person name="Karlsson S."/>
            <person name="Pavlova E.V."/>
            <person name="Cox T.M."/>
            <person name="Scheij S."/>
            <person name="Verhoek M."/>
            <person name="Ottenhoff R."/>
            <person name="van Roomen C.P."/>
            <person name="Pannu N.S."/>
            <person name="van Eijk M."/>
            <person name="Dekker N."/>
            <person name="Boot R.G."/>
            <person name="Overkleeft H.S."/>
            <person name="Blommaart E."/>
            <person name="Hirabayashi Y."/>
            <person name="Aerts J.M."/>
        </authorList>
    </citation>
    <scope>FUNCTION</scope>
    <scope>CATALYTIC ACTIVITY</scope>
    <scope>PATHWAY</scope>
    <scope>ACTIVITY REGULATION</scope>
</reference>
<reference key="32">
    <citation type="journal article" date="2020" name="J. Biol. Chem.">
        <title>Glucocerebrosidases catalyze a transgalactosylation reaction that yields a newly-identified brain sterol metabolite, galactosylated cholesterol.</title>
        <authorList>
            <person name="Akiyama H."/>
            <person name="Ide M."/>
            <person name="Nagatsuka Y."/>
            <person name="Sayano T."/>
            <person name="Nakanishi E."/>
            <person name="Uemura N."/>
            <person name="Yuyama K."/>
            <person name="Yamaguchi Y."/>
            <person name="Kamiguchi H."/>
            <person name="Takahashi R."/>
            <person name="Aerts J.M.F.G."/>
            <person name="Greimel P."/>
            <person name="Hirabayashi Y."/>
        </authorList>
    </citation>
    <scope>FUNCTION</scope>
    <scope>CATALYTIC ACTIVITY</scope>
</reference>
<reference key="33">
    <citation type="journal article" date="2021" name="J. Lipid Res.">
        <title>Human glucocerebrosidase mediates formation of xylosyl-cholesterol by beta-xylosidase and transxylosidase reactions.</title>
        <authorList>
            <person name="Boer D.E."/>
            <person name="Mirzaian M."/>
            <person name="Ferraz M.J."/>
            <person name="Zwiers K.C."/>
            <person name="Baks M.V."/>
            <person name="Hazeu M.D."/>
            <person name="Ottenhoff R."/>
            <person name="Marques A.R.A."/>
            <person name="Meijer R."/>
            <person name="Roos J.C.P."/>
            <person name="Cox T.M."/>
            <person name="Boot R.G."/>
            <person name="Pannu N."/>
            <person name="Overkleeft H.S."/>
            <person name="Artola M."/>
            <person name="Aerts J.M."/>
        </authorList>
    </citation>
    <scope>FUNCTION</scope>
    <scope>CATALYTIC ACTIVITY</scope>
</reference>
<reference key="34">
    <citation type="journal article" date="2003" name="EMBO Rep.">
        <title>X-ray structure of human acid-beta-glucosidase, the defective enzyme in Gaucher disease.</title>
        <authorList>
            <person name="Dvir H."/>
            <person name="Harel M."/>
            <person name="McCarthy A.A."/>
            <person name="Toker L."/>
            <person name="Silman I."/>
            <person name="Futerman A.H."/>
            <person name="Sussman J.L."/>
        </authorList>
    </citation>
    <scope>X-RAY CRYSTALLOGRAPHY (2.0 ANGSTROMS) OF 40-536</scope>
    <scope>GLYCOSYLATION AT ASN-58</scope>
    <scope>DISULFIDE BONDS</scope>
</reference>
<reference key="35">
    <citation type="journal article" date="2005" name="J. Biol. Chem.">
        <title>X-ray structure of human acid-beta-glucosidase covalently bound to conduritol-B-epoxide. Implications for Gaucher disease.</title>
        <authorList>
            <person name="Premkumar L."/>
            <person name="Sawkar A.R."/>
            <person name="Boldin-Adamsky S."/>
            <person name="Toker L."/>
            <person name="Silman I."/>
            <person name="Kelly J.W."/>
            <person name="Futerman A.H."/>
            <person name="Sussman J.L."/>
        </authorList>
    </citation>
    <scope>X-RAY CRYSTALLOGRAPHY (2.4 ANGSTROMS) OF 40-536 IN COMPLEX WITH SYNTHETIC INHIBITOR</scope>
    <scope>ACTIVE SITE</scope>
</reference>
<reference key="36">
    <citation type="journal article" date="2006" name="J. Biol. Chem.">
        <title>Analyses of variant acid beta-glucosidases: effects of Gaucher disease mutations.</title>
        <authorList>
            <person name="Liou B."/>
            <person name="Kazimierczuk A."/>
            <person name="Zhang M."/>
            <person name="Scott C.R."/>
            <person name="Hegde R.S."/>
            <person name="Grabowski G.A."/>
        </authorList>
    </citation>
    <scope>X-RAY CRYSTALLOGRAPHY (2.5 ANGSTROMS) OF 40-536</scope>
    <scope>CATALYTIC ACTIVITY</scope>
    <scope>PATHWAY</scope>
    <scope>CHARACTERIZATION OF VARIANTS GD SER-55; GLN-87; ASN-118; LEU-161; VAL-162; VAL-166; ASN-200; PHE-213; PHE-224; GLU-232; GLU-237; LEU-298; ILE-303; CYS-343; ILE-362; LYS-365; GLY-381; LYS-388; TRP-392; CYS-402; SER-409; VAL-410; HIS-419; LYS-421; ARG-429; LEU-433; SER-436; ASN-438; HIS-448; VAL-455; PRO-483; PRO-500; CYS-502 AND PRO-502</scope>
    <scope>CHARACTERIZATION OF VARIANT GD2 GLN-159</scope>
    <scope>MUTAGENESIS OF CYS-43; CYS-57 AND CYS-62</scope>
</reference>
<reference key="37">
    <citation type="journal article" date="2006" name="Acta Crystallogr. D">
        <title>Structural comparison of differently glycosylated forms of acid-beta-glucosidase, the defective enzyme in Gaucher disease.</title>
        <authorList>
            <person name="Brumshtein B."/>
            <person name="Wormald M.R."/>
            <person name="Silman I."/>
            <person name="Futerman A.H."/>
            <person name="Sussman J.L."/>
        </authorList>
    </citation>
    <scope>X-RAY CRYSTALLOGRAPHY (2.9 ANGSTROMS) OF 40-536</scope>
    <scope>GLYCOSYLATION AT ASN-58; ASN-98 AND ASN-185</scope>
</reference>
<reference key="38">
    <citation type="journal article" date="2007" name="Nat. Chem. Biol.">
        <title>Structure of acid beta-glucosidase with pharmacological chaperone provides insight into Gaucher disease.</title>
        <authorList>
            <person name="Lieberman R.L."/>
            <person name="Wustman B.A."/>
            <person name="Huertas P."/>
            <person name="Powe A.C. Jr."/>
            <person name="Pine C.W."/>
            <person name="Khanna R."/>
            <person name="Schlossmacher M.G."/>
            <person name="Ringe D."/>
            <person name="Petsko G.A."/>
        </authorList>
    </citation>
    <scope>X-RAY CRYSTALLOGRAPHY (1.8 ANGSTROMS) OF 40-536 IN COMPLEXES WITH ISOFAGOMINE</scope>
    <scope>SUBCELLULAR LOCATION</scope>
</reference>
<reference key="39">
    <citation type="journal article" date="1994" name="Hum. Mutat.">
        <title>Mutations causing Gaucher disease.</title>
        <authorList>
            <person name="Horowitz M."/>
            <person name="Zimran A."/>
        </authorList>
    </citation>
    <scope>REVIEW ON GD VARIANTS</scope>
</reference>
<reference key="40">
    <citation type="journal article" date="1996" name="Hum. Mutat.">
        <title>Glucocerebrosidase (Gaucher disease).</title>
        <authorList>
            <person name="Beutler E."/>
            <person name="Gelbart T."/>
        </authorList>
    </citation>
    <scope>REVIEW ON GD VARIANTS</scope>
</reference>
<reference key="41">
    <citation type="journal article" date="1999" name="Mol. Genet. Metab.">
        <title>Type 2 Gaucher disease: an expanding phenotype.</title>
        <authorList>
            <person name="Tayebi N."/>
            <person name="Stone D.L."/>
            <person name="Sidransky E."/>
        </authorList>
    </citation>
    <scope>REVIEW ON GD VARIANTS</scope>
</reference>
<reference key="42">
    <citation type="journal article" date="1989" name="Am. J. Hum. Genet.">
        <title>Characterization of mutations in Gaucher patients by cDNA cloning.</title>
        <authorList>
            <person name="Wigderson M."/>
            <person name="Firon N."/>
            <person name="Horowitz Z."/>
            <person name="Wilder S."/>
            <person name="Frishberg Y."/>
            <person name="Reiner O."/>
            <person name="Horowitz M."/>
        </authorList>
    </citation>
    <scope>VARIANTS GD2 ARG-454 AND PRO-483</scope>
    <scope>CHARACTERIZATION OF VARIANTS GD2 ARG-454 AND PRO-483</scope>
</reference>
<reference key="43">
    <citation type="journal article" date="1989" name="Nucleic Acids Res.">
        <title>Comparison of RNase A, a chemical cleavage and GC-clamped denaturing gradient gel electrophoresis for the detection of mutations in exon 9 of the human acid beta-glucosidase gene.</title>
        <authorList>
            <person name="Theophilus B.D."/>
            <person name="Latham T."/>
            <person name="Grabowski G.A."/>
            <person name="Smith F.I."/>
        </authorList>
    </citation>
    <scope>VARIANTS GD1 LEU-433 AND HIS-448</scope>
    <scope>VARIANTS GD3 LEU-433; HIS-448 AND VAL-448</scope>
</reference>
<reference key="44">
    <citation type="journal article" date="1990" name="Ann. Hum. Genet.">
        <title>Gaucher disease associated with a unique KpnI restriction site: identification of the amino-acid substitution.</title>
        <authorList>
            <person name="Beutler E."/>
            <person name="Gelbart T."/>
        </authorList>
    </citation>
    <scope>VARIANT GD TYR-255</scope>
</reference>
<reference key="45">
    <citation type="journal article" date="1990" name="DNA Cell Biol.">
        <title>Sequence of two alleles responsible for Gaucher disease.</title>
        <authorList>
            <person name="Hong C.M."/>
            <person name="Ohashi T."/>
            <person name="Yu X.J."/>
            <person name="Weiler S."/>
            <person name="Barranger J.A."/>
        </authorList>
    </citation>
    <scope>VARIANT GD CYS-502</scope>
    <scope>CHARACTERIZATION OF VARIANT GD CYS-502</scope>
</reference>
<reference key="46">
    <citation type="journal article" date="1990" name="Gene">
        <title>Prevalent and rare mutations among Gaucher patients.</title>
        <authorList>
            <person name="Eyal N."/>
            <person name="Wilder S."/>
            <person name="Horowitz M."/>
        </authorList>
    </citation>
    <scope>VARIANTS GD2 ARG-364 AND GLY-381</scope>
    <scope>VARIANT GD1 HIS-448</scope>
</reference>
<reference key="47">
    <citation type="journal article" date="1991" name="DNA Cell Biol.">
        <title>Heterogeneity of mutations in the acid beta-glucosidase gene of Gaucher disease patients.</title>
        <authorList>
            <person name="Latham T.E."/>
            <person name="Theophilus B.D."/>
            <person name="Grabowski G.A."/>
            <person name="Smith F.I."/>
        </authorList>
    </citation>
    <scope>VARIANTS GD1 GLN-196; VAL-348; CYS-351 AND THR-403</scope>
</reference>
<reference key="48">
    <citation type="journal article" date="1991" name="Hum. Genet.">
        <title>Three unique base pair changes in a family with Gaucher disease.</title>
        <authorList>
            <person name="Eyal N."/>
            <person name="Firon N."/>
            <person name="Wilder S."/>
            <person name="Kolodny E.H."/>
            <person name="Horowitz M."/>
        </authorList>
    </citation>
    <scope>VARIANTS GD1 HIS-179; GLN-196 AND LYS-365</scope>
</reference>
<reference key="49">
    <citation type="journal article" date="1992" name="Hum. Genet.">
        <title>Rapid identification of mutations in the glucocerebrosidase gene of Gaucher disease patients by analysis of single-strand conformation polymorphisms.</title>
        <authorList>
            <person name="Kawame H."/>
            <person name="Hasegawa Y."/>
            <person name="Eto Y."/>
            <person name="Maekawa K."/>
        </authorList>
    </citation>
    <scope>VARIANTS GD1 GLN-398 AND CYS-535</scope>
    <scope>VARIANT GD3 GLU-464</scope>
</reference>
<reference key="50">
    <citation type="journal article" date="1992" name="Hum. Mutat.">
        <title>Gaucher disease: four rare alleles encoding F213I, P289L, T323I, and R463C in type 1 variants.</title>
        <authorList>
            <person name="He G.S."/>
            <person name="Grace M.E."/>
            <person name="Grabowski G.A."/>
        </authorList>
    </citation>
    <scope>VARIANTS GD1 ILE-252; LEU-328; ILE-362 AND CYS-502</scope>
    <scope>CHARACTERIZATION OF VARIANTS GD1 LEU-328; ILE-362 AND CYS-502</scope>
</reference>
<reference key="51">
    <citation type="journal article" date="1993" name="Genomics">
        <title>Identification of six new Gaucher disease mutations.</title>
        <authorList>
            <person name="Beutler E."/>
            <person name="Gelbart T."/>
            <person name="West C."/>
        </authorList>
    </citation>
    <scope>VARIANTS GD HIS-251 AND SER-517</scope>
    <scope>VARIANTS GD1 SER-161 AND HIS-535</scope>
</reference>
<reference key="52">
    <citation type="journal article" date="1994" name="Am. J. Med. Genet.">
        <title>DNA analysis of an uncommon missense mutation in a Gaucher disease patient of Jewish-Polish-Russian descent.</title>
        <authorList>
            <person name="Choy F.Y.M."/>
            <person name="Wei C."/>
            <person name="Applegarth D.A."/>
            <person name="McGillivray B.C."/>
        </authorList>
    </citation>
    <scope>VARIANT GD1 HIS-535</scope>
</reference>
<reference key="53">
    <citation type="journal article" date="1994" name="Hum. Genet.">
        <title>Two new Gaucher disease mutations.</title>
        <authorList>
            <person name="Beutler E."/>
            <person name="Gelbart T."/>
        </authorList>
    </citation>
    <scope>VARIANT GD2 ASN-438</scope>
</reference>
<reference key="54">
    <citation type="journal article" date="1994" name="Hum. Genet.">
        <title>Y418C: a novel mutation in exon 9 of the glucocerebrosidase gene of a patient with Gaucher disease creates a new Bgl I site.</title>
        <authorList>
            <person name="Tuteja R."/>
            <person name="Tuteja N."/>
            <person name="Lilliu F."/>
            <person name="Bembi B."/>
            <person name="Galanello R."/>
            <person name="Cao A."/>
            <person name="Baralle F.E."/>
        </authorList>
    </citation>
    <scope>VARIANTS GD SER-409 AND CYS-457</scope>
</reference>
<reference key="55">
    <citation type="journal article" date="1994" name="Hum. Mol. Genet.">
        <title>A new missense mutation in glucocerebrosidase exon 9 of a non-Jewish Caucasian type 1 Gaucher disease patient.</title>
        <authorList>
            <person name="Choy F.Y."/>
            <person name="Wei C."/>
            <person name="Applegarth D.A."/>
            <person name="Yong S.L."/>
        </authorList>
    </citation>
    <scope>VARIANTS GD1 SER-409 AND VAL-456</scope>
</reference>
<reference key="56">
    <citation type="journal article" date="1994" name="Hum. Mol. Genet.">
        <title>New Gaucher disease mutations in exon 10: a novel L444R mutation produces a new NciI site the same as L444P.</title>
        <authorList>
            <person name="Uchiyama A."/>
            <person name="Tomatsu S."/>
            <person name="Kondo N."/>
            <person name="Suzuki Y."/>
            <person name="Shimozawa N."/>
            <person name="Fukuda S."/>
            <person name="Sukegawa K."/>
            <person name="Taki N."/>
            <person name="Inamori H."/>
            <person name="Orii T."/>
        </authorList>
    </citation>
    <scope>VARIANT GD2 ARG-483</scope>
</reference>
<reference key="57">
    <citation type="journal article" date="1994" name="J. Biol. Chem.">
        <title>Analysis of human acid beta-glucosidase by site-directed mutagenesis and heterologous expression.</title>
        <authorList>
            <person name="Grace M.E."/>
            <person name="Newman K.M."/>
            <person name="Scheinker V."/>
            <person name="Berg-Fussman A."/>
            <person name="Grabowski G.A."/>
        </authorList>
    </citation>
    <scope>CHARACTERIZATION OF VARIANT GD TYR-255</scope>
    <scope>CHARACTERIZATION OF VARIANTS GD1 LEU-328; ILE-362; THR-403; SER-409; LEU-433; HIS-448; PRO-483; PRO-495 AND CYS-502</scope>
    <scope>CHARACTERIZATION OF VARIANT GD2 ARG-454</scope>
    <scope>CHARACTERIZATION OF VARIANT GD3 VAL-448</scope>
    <scope>MUTAGENESIS OF ASP-482 AND ASN-501</scope>
</reference>
<reference key="58">
    <citation type="journal article" date="1994" name="Mol. Med.">
        <title>Glucocerebrosidase mutations in Gaucher disease.</title>
        <authorList>
            <person name="Beutler E."/>
            <person name="Demina A."/>
            <person name="Gelbart T."/>
        </authorList>
    </citation>
    <scope>VARIANTS GD1 ASP-215; THR-221; ARG-241; GLN-296; CYS-324; GLY-417 AND ASN-419</scope>
</reference>
<reference key="59">
    <citation type="journal article" date="1995" name="Blood Cells Mol. Dis.">
        <title>Five new Gaucher disease mutations.</title>
        <authorList>
            <person name="Beutler E."/>
            <person name="Gelbart T."/>
            <person name="Demina A."/>
            <person name="Zimran A."/>
            <person name="LeCoutre P."/>
        </authorList>
    </citation>
    <scope>VARIANTS GD1 ILE-82 AND TRP-87</scope>
</reference>
<reference key="60">
    <citation type="journal article" date="1995" name="Br. J. Haematol.">
        <title>Three unrelated Gaucher's disease patients with three novel point mutations in the glucocerebrosidase gene (P266R, D315H and A318D).</title>
        <authorList>
            <person name="Walley A.J."/>
            <person name="Ellis I."/>
            <person name="Harris A."/>
        </authorList>
    </citation>
    <scope>VARIANTS GD1 ARG-305; HIS-354 AND ASP-357</scope>
</reference>
<reference key="61">
    <citation type="journal article" date="1995" name="Hum. Mutat.">
        <title>Gaucher disease in Spanish patients: analysis of eight mutations.</title>
        <authorList>
            <person name="Cormand B."/>
            <person name="Vilageliu L."/>
            <person name="Burguera J.M."/>
            <person name="Balcells S."/>
            <person name="Gonzalez-Duarte R."/>
            <person name="Grinberg D."/>
            <person name="Chabas A."/>
        </authorList>
    </citation>
    <scope>VARIANTS GD SER-409; HIS-448; PRO-483 AND CYS-502</scope>
</reference>
<reference key="62">
    <citation type="journal article" date="1995" name="Hum. Mutat.">
        <title>Identification of a new mutation (P178S) in an African-American patient with type 2 Gaucher disease.</title>
        <authorList>
            <person name="Choy F.Y.M."/>
            <person name="Wei C."/>
        </authorList>
    </citation>
    <scope>VARIANT GD2 SER-217</scope>
</reference>
<reference key="63">
    <citation type="journal article" date="1995" name="J. Inherit. Metab. Dis.">
        <title>Characterization of glucocerebrosidase in Greek Gaucher disease patients: mutation analysis and biochemical studies.</title>
        <authorList>
            <person name="Michelakakis H."/>
            <person name="Dimitriou E."/>
            <person name="Van Weely S."/>
            <person name="Boot R.G."/>
            <person name="Mavridou I."/>
            <person name="Verhoek M."/>
            <person name="Aerts J.M."/>
        </authorList>
    </citation>
    <scope>VARIANTS GD1 SER-409 AND PRO-483</scope>
    <scope>VARIANTS GD2 HIS-448; PRO-483 AND CYS-502</scope>
    <scope>VARIANTS GD3 HIS-448 AND PRO-483</scope>
</reference>
<reference key="64">
    <citation type="journal article" date="1995" name="Lancet">
        <title>Gaucher's disease variant characterised by progressive calcification of heart valves and unique genotype.</title>
        <authorList>
            <person name="Abrahamov A."/>
            <person name="Elstein D."/>
            <person name="Gross-Tsur V."/>
            <person name="Farber B."/>
            <person name="Glaser Y."/>
            <person name="Hadas-Halpern I."/>
            <person name="Ronen S."/>
            <person name="Tafakjdi M."/>
            <person name="Horowitz M."/>
            <person name="Zimran A."/>
        </authorList>
    </citation>
    <scope>VARIANT GD HIS-448</scope>
</reference>
<reference key="65">
    <citation type="journal article" date="1996" name="Am. J. Med. Genet.">
        <title>Gaucher disease: functional expression of the normal glucocerebrosidase and Gaucher T1366G and G1604A alleles in Baculovirus-transfected Spodoptera frugiperda cells.</title>
        <authorList>
            <person name="Choy F.Y."/>
            <person name="Wei C."/>
            <person name="Levin D."/>
        </authorList>
    </citation>
    <scope>CHARACTERIZATION OF VARIANTS GD1 SER-409; VAL-456 AND HIS-535</scope>
    <scope>CHARACTERIZATION OF VARIANT GD2 PRO-483</scope>
</reference>
<reference key="66">
    <citation type="journal article" date="1996" name="Clin. Genet.">
        <title>The molecular characterization of Gaucher disease in South Africa.</title>
        <authorList>
            <person name="Morar B."/>
            <person name="Lane A.B."/>
        </authorList>
    </citation>
    <scope>VARIANTS GD SER-409; LEU-426; LEU-433 AND PRO-483</scope>
</reference>
<reference key="67">
    <citation type="journal article" date="1996" name="Hum. Mutat.">
        <title>Gaucher disease: identification of three new mutations in the Korean and Chinese (Taiwanese) populations.</title>
        <authorList>
            <person name="Kim J.-W."/>
            <person name="Liou B.B."/>
            <person name="Lai M.-Y."/>
            <person name="Ponce E."/>
            <person name="Grabowski G.A."/>
        </authorList>
    </citation>
    <scope>VARIANTS GD LEU-54; GLU-85 AND SER-227</scope>
</reference>
<reference key="68">
    <citation type="journal article" date="1996" name="Hum. Mutat.">
        <title>Two novel (1098insA and Y313H) and one rare (R359Q) mutations detected in exon 8 of the beta-glucocerebrosidase gene in Gaucher's disease patients.</title>
        <authorList>
            <person name="Cormand B."/>
            <person name="Vilageliu L."/>
            <person name="Balcells S."/>
            <person name="Gonzalez-Duatre R."/>
            <person name="Chabas A."/>
            <person name="Grinberg D."/>
        </authorList>
    </citation>
    <scope>VARIANTS GD HIS-352 AND GLN-398</scope>
</reference>
<reference key="69">
    <citation type="journal article" date="1996" name="Hum. Mutat.">
        <title>Type 1 Gaucher disease: identification of N396T and prevalence of glucocerebrosidase mutations in the Portuguese.</title>
        <authorList>
            <person name="Amaral O."/>
            <person name="Pinto E."/>
            <person name="Fortuna M."/>
            <person name="Lacerda L."/>
            <person name="Sa Miranda M.C."/>
        </authorList>
    </citation>
    <scope>VARIANT GD1 THR-435</scope>
</reference>
<reference key="70">
    <citation type="journal article" date="1996" name="Neurology">
        <title>Two new missense mutations in a non-Jewish Caucasian family with type 3 Gaucher disease.</title>
        <authorList>
            <person name="Seeman P.J.V."/>
            <person name="Finckh U."/>
            <person name="Hoeppner J."/>
            <person name="Lakner V."/>
            <person name="Liebisch I."/>
            <person name="Grau G."/>
            <person name="Rolfs A."/>
        </authorList>
    </citation>
    <scope>VARIANTS GD3 LEU-437 AND ILE-530</scope>
</reference>
<reference key="71">
    <citation type="journal article" date="1997" name="Am. J. Med. Genet.">
        <title>Two new mild homozygous mutations in Gaucher disease patients: clinical signs and biochemical analyses.</title>
        <authorList>
            <person name="Cormand B."/>
            <person name="Grinberg D."/>
            <person name="Gort L."/>
            <person name="Fiumara A."/>
            <person name="Barone R."/>
            <person name="Vilageliu L."/>
            <person name="Chabas A."/>
        </authorList>
    </citation>
    <scope>VARIANTS GD LEU-414 AND THR-441</scope>
</reference>
<reference key="72">
    <citation type="journal article" date="1997" name="Am. J. Med. Genet.">
        <title>Identification of two novel and four uncommon missense mutations among Chinese Gaucher disease patients.</title>
        <authorList>
            <person name="Choy F.Y.M."/>
            <person name="Humphries M.L."/>
            <person name="Shi H."/>
        </authorList>
    </citation>
    <scope>VARIANTS GD VAL-76; GLU-85; TRP-87; TRP-159; SER-227; ILE-252 AND PRO-483</scope>
</reference>
<reference key="73">
    <citation type="journal article" date="1997" name="Am. J. Med. Genet.">
        <title>Type I Gaucher disease due to homozygosity for the 259T mutation in a Bedouin patient.</title>
        <authorList>
            <person name="Rockah R."/>
            <person name="Narinsky R."/>
            <person name="Hatskelzon L."/>
            <person name="Frisch A."/>
        </authorList>
    </citation>
    <scope>VARIANT GD1 TRP-87</scope>
</reference>
<reference key="74">
    <citation type="journal article" date="1997" name="Arch. Dis. Child.">
        <title>Mutation analysis in 46 British and Irish patients with Gaucher's disease.</title>
        <authorList>
            <person name="Hatton C.E."/>
            <person name="Cooper A."/>
            <person name="Whitehouse C."/>
            <person name="Wraith J.E."/>
        </authorList>
    </citation>
    <scope>VARIANT GD2 LYS-501</scope>
</reference>
<reference key="75">
    <citation type="journal article" date="1997" name="J. Clin. Invest.">
        <title>Identification and expression of acid beta-glucosidase mutations causing severe type 1 and neurologic type 2 Gaucher disease in non-Jewish patients.</title>
        <authorList>
            <person name="Grace M.E."/>
            <person name="Desnick R.J."/>
            <person name="Pastores G.M."/>
        </authorList>
    </citation>
    <scope>VARIANTS GD1 TRP-87; GLU-234; ASN-310; LEU-391 AND SER-409</scope>
    <scope>VARIANTS GD2 ARG-241 AND ILE-252</scope>
    <scope>CHARACTERIZATION OF VARIANTS GD1 TRP-87; GLU-234; ASN-310; LEU-391 AND SER-409</scope>
    <scope>CHARACTERIZATION OF VARIANT GD2 ARG-241</scope>
</reference>
<reference key="76">
    <citation type="journal article" date="1997" name="J. Inherit. Metab. Dis.">
        <title>Mutation prevalence among 47 unrelated Japanese patients with Gaucher disease: identification of four novel mutations.</title>
        <authorList>
            <person name="Ida H."/>
            <person name="Rennert O.M."/>
            <person name="Kawame H."/>
            <person name="Maekawa K."/>
            <person name="Eto Y."/>
        </authorList>
    </citation>
    <scope>VARIANTS GD VAL-228; ILE-252; GLY-405; HIS-448; GLN-452; PRO-483 AND CYS-535</scope>
</reference>
<reference key="77">
    <citation type="journal article" date="1997" name="J. Med. Genet.">
        <title>D409H/D409H genotype in Gaucher-like disease.</title>
        <authorList>
            <person name="Uyama E."/>
            <person name="Uchino M."/>
            <person name="Ida H."/>
            <person name="Eto Y."/>
            <person name="Owada M."/>
        </authorList>
    </citation>
    <scope>VARIANT GD3C HIS-448</scope>
</reference>
<reference key="78">
    <citation type="journal article" date="1998" name="Acta Haematol.">
        <title>Six new Gaucher disease mutations.</title>
        <authorList>
            <person name="Demina A."/>
            <person name="Beutler E."/>
        </authorList>
    </citation>
    <scope>VARIANTS GD LEU-198; THR-380; ASN-405 AND ARG-432</scope>
    <scope>VARIANT GD2 LEU-146</scope>
</reference>
<reference key="79">
    <citation type="journal article" date="1998" name="Am. J. Hum. Genet.">
        <title>Exhaustive screening of the acid beta-glucosidase gene, by fluorescence-assisted mismatch analysis using universal primers: mutation profile and genotype/phenotype correlations in Gaucher disease.</title>
        <authorList>
            <person name="Germain D.P."/>
            <person name="Puech J.-P."/>
            <person name="Caillaud C."/>
            <person name="Kahn A."/>
            <person name="Poenaru L."/>
        </authorList>
    </citation>
    <scope>VARIANTS GD1 TRP-87; THR-158; TRP-159; PRO-209; LYS-227; PRO-276; ILE-342; PRO-363; SER-409; SER-416; PRO-483; PRO-485 AND CYS-502</scope>
    <scope>VARIANTS GD3 LEU-433 AND PRO-483</scope>
</reference>
<reference key="80">
    <citation type="journal article" date="1998" name="Am. J. Med. Genet.">
        <title>Gaucher type 2 disease: identification of a novel transversion mutation in a French-Irish patient.</title>
        <authorList>
            <person name="Choy F.Y.M."/>
            <person name="Humphries M.L."/>
            <person name="Ben-Yoseph Y."/>
        </authorList>
    </citation>
    <scope>VARIANT GD2 TYR-513</scope>
</reference>
<reference key="81">
    <citation type="journal article" date="1998" name="Am. J. Med. Genet.">
        <title>Mutation analysis of Gaucher disease patients from Argentina: high prevalence of the RecNciI mutation.</title>
        <authorList>
            <person name="Cormand B."/>
            <person name="Harboe T.L."/>
            <person name="Gort L."/>
            <person name="Campoy C."/>
            <person name="Blanco M."/>
            <person name="Chamoles N."/>
            <person name="Chabas A."/>
            <person name="Vilageliu L."/>
            <person name="Grinberg D."/>
        </authorList>
    </citation>
    <scope>VARIANTS GD1 TRP-87; TRP-159; SER-200; ARG-241; ASP-304; CYS-324; SER-409; ASN-438; ILE-450 AND PRO-483</scope>
    <scope>VARIANT GD2 HIS-448</scope>
</reference>
<reference key="82">
    <citation type="journal article" date="1998" name="Blood Cells Mol. Dis.">
        <title>Hematologically important mutations: Gaucher disease.</title>
        <authorList>
            <person name="Beutler E."/>
            <person name="Gelbart T."/>
        </authorList>
    </citation>
    <scope>VARIANTS GD</scope>
</reference>
<reference key="83">
    <citation type="journal article" date="1998" name="Blood Cells Mol. Dis.">
        <title>A novel complex allele and two new point mutations in type 2 (acute neuronopathic) Gaucher disease.</title>
        <authorList>
            <person name="Sinclair G."/>
            <person name="Choy F.Y.M."/>
            <person name="Humphries L."/>
        </authorList>
    </citation>
    <scope>VARIANTS GD2 LYS-80; CYS-170 AND PRO-483</scope>
</reference>
<reference key="84">
    <citation type="journal article" date="1998" name="Clin. Genet.">
        <title>A novel mutation of the beta-glucocerebrosidase gene associated with neurologic manifestations in three sibs.</title>
        <authorList>
            <person name="Parenti G."/>
            <person name="Filocamo M."/>
            <person name="Titomanlio L."/>
            <person name="Rizzolo G."/>
            <person name="Silvestro E."/>
            <person name="Perretti A."/>
            <person name="Gatti R."/>
            <person name="Andria G."/>
        </authorList>
    </citation>
    <scope>VARIANT GD GLY-392</scope>
</reference>
<reference key="85">
    <citation type="journal article" date="1998" name="Hum. Mutat.">
        <title>Molecular analysis and clinical findings in the Spanish Gaucher disease population: putative haplotype of the N370S ancestral chromosome.</title>
        <authorList>
            <person name="Cormand B."/>
            <person name="Grinberg D."/>
            <person name="Gort L."/>
            <person name="Chabas A."/>
            <person name="Vilageliu L."/>
        </authorList>
    </citation>
    <scope>VARIANTS GD1 GLU-152; PRO-173; LEU-430 AND HIS-451</scope>
    <scope>VARIANTS GD2 GLU-428 AND ILE-431</scope>
</reference>
<reference key="86">
    <citation type="journal article" date="1998" name="Hum. Mutat.">
        <title>A novel mutation (V191G) in a German-British type 1 Gaucher disease patient.</title>
        <authorList>
            <person name="Choy F.Y.M."/>
            <person name="Humphries M.L."/>
            <person name="Ben-Yoseph Y."/>
        </authorList>
    </citation>
    <scope>VARIANTS GD1 GLY-230 AND SER-409</scope>
</reference>
<reference key="87">
    <citation type="journal article" date="1999" name="Am. J. Med. Genet.">
        <title>Type 1 Gaucher disease presenting with extensive mandibular lytic lesions: identification and expression of a novel acid beta-glucosidase mutation.</title>
        <authorList>
            <person name="Wasserstein M.P."/>
            <person name="Martignetti J.A."/>
            <person name="Zeitlin R."/>
            <person name="Lumerman H."/>
            <person name="Solomon M."/>
            <person name="Grace M.E."/>
            <person name="Desnick R.J."/>
        </authorList>
    </citation>
    <scope>VARIANTS GD1 SER-409 AND LEU-440</scope>
</reference>
<reference key="88">
    <citation type="journal article" date="1999" name="Am. J. Med. Genet.">
        <title>Glucocerebrosidase mutations among Chinese neuronopathic and non-neuronopathic Gaucher disease patients.</title>
        <authorList>
            <person name="Choy F.Y.M."/>
            <person name="Wong K."/>
            <person name="Shi H.P."/>
        </authorList>
    </citation>
    <scope>VARIANT GD1 CYS-244</scope>
    <scope>VARIANTS GD2 ILE-252 AND PRO-483</scope>
    <scope>VARIANTS GD3 ARG-241; HIS-448 AND PRO-483</scope>
</reference>
<reference key="89">
    <citation type="journal article" date="1999" name="Blood Cells Mol. Dis.">
        <title>Analysis of the beta-glucocerebrosidase gene in Czech and Slovak Gaucher patients: mutation profile and description of six novel mutant alleles.</title>
        <authorList>
            <person name="Hodanov K."/>
            <person name="Hrebicek M."/>
            <person name="Cervenkov M."/>
            <person name="Mrzov L."/>
            <person name="Veprekov L."/>
            <person name="Zemen J."/>
        </authorList>
    </citation>
    <scope>VARIANTS GD</scope>
</reference>
<reference key="90">
    <citation type="journal article" date="1999" name="Eur. J. Hum. Genet.">
        <title>Is the perinatal lethal form of Gaucher disease more common than classic type 2 Gaucher disease?</title>
        <authorList>
            <person name="Stone D.L."/>
            <person name="van Diggelen O.P."/>
            <person name="de Klerk J.B.C."/>
            <person name="Gaillard J.L.J."/>
            <person name="Niermeijer M.F."/>
            <person name="Willemsen R."/>
            <person name="Tayebi N."/>
            <person name="Sidransky E."/>
        </authorList>
    </citation>
    <scope>VARIANTS GDPL ARG-350 AND PHE-437</scope>
</reference>
<reference key="91">
    <citation type="journal article" date="1999" name="Hum. Mutat.">
        <title>Detection of three rare (G377S, T134P and 1451delAC), and two novel mutations (G195W and Rec[1263del55;1342G&gt;C]] in Spanish Gaucher disease patients.</title>
        <authorList>
            <person name="Sarria A.J."/>
            <person name="Giraldo P."/>
            <person name="Perez-Calvo J.I."/>
            <person name="Pocovi M."/>
        </authorList>
    </citation>
    <scope>VARIANTS GD PRO-173; TRP-234; SER-409; SER-416; HIS-448 AND PRO-483</scope>
</reference>
<reference key="92">
    <citation type="journal article" date="2000" name="Am. J. Hum. Genet.">
        <title>Analysis and classification of 304 mutant alleles in patients with type 1 and type 3 Gaucher disease.</title>
        <authorList>
            <person name="Koprivica V."/>
            <person name="Stone D.L."/>
            <person name="Park J.K."/>
            <person name="Callahan M."/>
            <person name="Frisch A."/>
            <person name="Cohen I.J."/>
            <person name="Tayebi N."/>
            <person name="Sidransky E."/>
        </authorList>
    </citation>
    <scope>VARIANTS GD1 TRP-87; ASN-118; THR-129; ASP-156; GLN-159; TRP-159; LEU-170; ILE-173; CYS-209; PRO-209; SER-227; PRO-235; ARG-241; ILE-252; GLN-296; CYS-324; LYS-365; THR-380; MET-408; SER-409; SER-416; LEU-433; TYR-438; HIS-448; PRO-483 AND CYS-502</scope>
    <scope>VARIANT GD2 GLN-159</scope>
    <scope>VARIANTS GD3 THR-229; HIS-448; PRO-483 AND CYS-502</scope>
</reference>
<reference key="93">
    <citation type="journal article" date="2000" name="Hum. Mutat.">
        <title>Glucocerebrosidase gene mutations in patients with type 2 Gaucher disease.</title>
        <authorList>
            <person name="Stone D.L."/>
            <person name="Tayebi N."/>
            <person name="Orvisky E."/>
            <person name="Stubblefield B."/>
            <person name="Madike V."/>
            <person name="Sidransky E."/>
        </authorList>
    </citation>
    <scope>VARIANTS GD2 LEU-170; LYS-227; GLU-229; PRO-235; GLN-294; GLN-296; LEU-298; HIS-324 AND CYS-343</scope>
</reference>
<reference key="94">
    <citation type="journal article" date="2000" name="Pediatr. Dev. Pathol.">
        <title>Novel point mutation (W184R) in neonatal type 2 Gaucher disease.</title>
        <authorList>
            <person name="Choy F.Y."/>
            <person name="Wong K."/>
            <person name="Vallance H.D."/>
            <person name="Baldwin V."/>
        </authorList>
    </citation>
    <scope>VARIANTS GD2 ARG-223 AND PRO-483</scope>
</reference>
<reference key="95">
    <citation type="journal article" date="2002" name="Am. J. Med. Genet.">
        <title>Variant Gaucher disease characterized by dysmorphic features, absence of cardiovascular involvement, laryngospasm, and compound heterozygosity for a novel mutation (D409H/C16S).</title>
        <authorList>
            <person name="Bodamer O.A.F."/>
            <person name="Church H.J."/>
            <person name="Cooper A."/>
            <person name="Wraith J.E."/>
            <person name="Scott C.R."/>
            <person name="Scaglia F."/>
        </authorList>
    </citation>
    <scope>VARIANTS GD SER-55 AND HIS-448</scope>
</reference>
<reference key="96">
    <citation type="journal article" date="2002" name="Clin. Genet.">
        <title>The E326K mutation and Gaucher disease: mutation or polymorphism?</title>
        <authorList>
            <person name="Park J.K."/>
            <person name="Tayebi N."/>
            <person name="Stubblefield B.K."/>
            <person name="LaMarca M.E."/>
            <person name="MacKenzie J.J."/>
            <person name="Stone D.L."/>
            <person name="Sidransky E."/>
        </authorList>
    </citation>
    <scope>VARIANT LYS-365</scope>
</reference>
<reference key="97">
    <citation type="journal article" date="2002" name="Hum. Mutat.">
        <title>The identification of eight novel glucocerebrosidase (GBA) mutations in patients with Gaucher disease.</title>
        <authorList>
            <person name="Orvisky E."/>
            <person name="Park J.K."/>
            <person name="Parker A."/>
            <person name="Walker J.M."/>
            <person name="Martin B.M."/>
            <person name="Stubblefield B.K."/>
            <person name="Uyama E."/>
            <person name="Tayebi N."/>
            <person name="Sidransky E."/>
        </authorList>
    </citation>
    <scope>VARIANT GD GLU-175</scope>
    <scope>VARIANT GDPL LEU-290</scope>
    <scope>VARIANTS GD1 PRO-201 AND SER-409</scope>
    <scope>VARIANT GD2 GLU-237</scope>
    <scope>VARIANTS GD3 CYS-244; SER-416; PHE-441 AND HIS-448</scope>
</reference>
<reference key="98">
    <citation type="journal article" date="2002" name="Hum. Mutat.">
        <title>Analysis of the glucocerebrosidase gene and mutation profile in 144 Italian Gaucher patients.</title>
        <authorList>
            <person name="Filocamo M."/>
            <person name="Mazzotti R."/>
            <person name="Stroppiano M."/>
            <person name="Seri M."/>
            <person name="Giona F."/>
            <person name="Parenti G."/>
            <person name="Regis S."/>
            <person name="Corsolini F."/>
            <person name="Zoboli S."/>
            <person name="Gatti R."/>
        </authorList>
    </citation>
    <scope>VARIANTS GD1 THR-198; CYS-209; PRO-209; ARG-241; ILE-252; CYS-324; HIS-324; CYS-351; ASN-438; HIS-448; CYS-457; PRO-485 AND ARG-490</scope>
    <scope>VARIANTS GD2 CYS-170; PRO-235; ARG-241; ARG-270 AND ILE-400</scope>
    <scope>VARIANTS GD3 LEU-146; SER-227; ARG-241; ILE-252; CYS-324; GLY-392 AND HIS-448</scope>
</reference>
<reference key="99">
    <citation type="journal article" date="2003" name="Clin. Genet.">
        <title>Glucocerebrosidase mutation T369M appears to be another polymorphism.</title>
        <authorList>
            <person name="Walker J.M."/>
            <person name="Lwin A."/>
            <person name="Tayebi N."/>
            <person name="LaMarca M.E."/>
            <person name="Orvisky E."/>
            <person name="Sidransky E."/>
        </authorList>
    </citation>
    <scope>VARIANT MET-408</scope>
</reference>
<reference key="100">
    <citation type="journal article" date="2003" name="Neurology">
        <title>Gaucher's disease with Parkinson's disease: clinical and pathological aspects.</title>
        <authorList>
            <person name="Bembi B."/>
            <person name="Zambito Marsala S."/>
            <person name="Sidransky E."/>
            <person name="Ciana G."/>
            <person name="Carrozzi M."/>
            <person name="Zorzon M."/>
            <person name="Martini C."/>
            <person name="Gioulis M."/>
            <person name="Pittis M.G."/>
            <person name="Capus L."/>
        </authorList>
    </citation>
    <scope>POSSIBLE INVOLVEMENT IN PARKINSON DISEASE</scope>
</reference>
<reference key="101">
    <citation type="journal article" date="2004" name="Eur. J. Hum. Genet.">
        <title>Homozygous loss of a cysteine residue in the glucocerebrosidase gene results in Gaucher's disease with a hydropic phenotype.</title>
        <authorList>
            <person name="Church H.J."/>
            <person name="Cooper A."/>
            <person name="Stewart F."/>
            <person name="Thornton C.M."/>
            <person name="Wraith J.E."/>
        </authorList>
    </citation>
    <scope>VARIANT GD SER-55</scope>
</reference>
<reference key="102">
    <citation type="journal article" date="2005" name="Am. J. Med. Genet. A">
        <title>Homozygosity for a non-pseudogene complex glucocerebrosidase allele as cause of an atypical neuronopathic form of Gaucher disease.</title>
        <authorList>
            <person name="Filocamo M."/>
            <person name="Grossi S."/>
            <person name="Stroppiano M."/>
            <person name="Tortori-Donati P."/>
            <person name="Regis S."/>
            <person name="Allegri A."/>
            <person name="Di Rocco M."/>
        </authorList>
    </citation>
    <scope>VARIANTS GD2 GLN-294 AND HIS-448</scope>
</reference>
<reference key="103">
    <citation type="journal article" date="2005" name="Biochem. J.">
        <title>The N370S (Asn370-&gt;Ser) mutation affects the capacity of glucosylceramidase to interact with anionic phospholipid-containing membranes and saposin C.</title>
        <authorList>
            <person name="Salvioli R."/>
            <person name="Tatti M."/>
            <person name="Scarpa S."/>
            <person name="Moavero S.M."/>
            <person name="Ciaffoni F."/>
            <person name="Felicetti F."/>
            <person name="Kaneski C.R."/>
            <person name="Brady R.O."/>
            <person name="Vaccaro A.M."/>
        </authorList>
    </citation>
    <scope>CHARACTERIZATION OF VARIANT GD SER-409</scope>
</reference>
<reference key="104">
    <citation type="journal article" date="2005" name="Blood Cells Mol. Dis.">
        <title>Use of fluorescent substrates for characterization of Gaucher disease mutations.</title>
        <authorList>
            <person name="Ron I."/>
            <person name="Dagan A."/>
            <person name="Gatt S."/>
            <person name="Pasmanik-Chor M."/>
            <person name="Horowitz M."/>
        </authorList>
    </citation>
    <scope>CHARACTERIZATION OF VARIANTS GD HIS-179 AND GLN-196</scope>
    <scope>CATALYTIC ACTIVITY</scope>
    <scope>FUNCTION</scope>
</reference>
<reference key="105">
    <citation type="journal article" date="2005" name="Hum. Mutat.">
        <title>Identification and functional characterization of five novel mutant alleles in 58 Italian patients with Gaucher disease type 1.</title>
        <authorList>
            <person name="Miocic S."/>
            <person name="Filocamo M."/>
            <person name="Dominissini S."/>
            <person name="Montalvo A.L."/>
            <person name="Vlahovicek K."/>
            <person name="Deganuto M."/>
            <person name="Mazzotti R."/>
            <person name="Cariati R."/>
            <person name="Bembi B."/>
            <person name="Pittis M.G."/>
        </authorList>
    </citation>
    <scope>VARIANTS GD1 ASN-63; SER-158; TRP-159; CYS-170; LEU-221; GLU-230; ARG-241; CYS-324; SER-409; ASN-438; LEU-440; HIS-448; CYS-457; ASP-460; PRO-483 AND ARG-490</scope>
    <scope>CHARACTERIZATION OF VARIANTS GD1 ASN-63; SER-158; LEU-221; GLU-230; ASP-460 AND ARG-490</scope>
</reference>
<reference key="106">
    <citation type="journal article" date="2005" name="Neurology">
        <title>Mutations in the glucocerebrosidase gene and Parkinson disease: phenotype-genotype correlation.</title>
        <authorList>
            <person name="Aharon-Peretz J."/>
            <person name="Badarny S."/>
            <person name="Rosenbaum H."/>
            <person name="Gershoni-Baruch R."/>
        </authorList>
    </citation>
    <scope>POSSIBLE INVOLVEMENT IN PARKINSON DISEASE</scope>
</reference>
<reference key="107">
    <citation type="journal article" date="2007" name="Arch. Neurol.">
        <title>Glucocerebrosidase mutations and risk of Parkinson disease in Chinese patients.</title>
        <authorList>
            <person name="Tan E.K."/>
            <person name="Tong J."/>
            <person name="Fook-Chong S."/>
            <person name="Yih Y."/>
            <person name="Wong M.C."/>
            <person name="Pavanni R."/>
            <person name="Zhao Y."/>
        </authorList>
    </citation>
    <scope>INVOLVEMENT OF VARIANT GD PRO-483 IN SUSCEPTIBILITY TO PARKINSON DISEASE</scope>
</reference>
<reference key="108">
    <citation type="journal article" date="2008" name="Arch. Neurol.">
        <title>Glucocerebrosidase gene mutations: a risk factor for Lewy body disorders.</title>
        <authorList>
            <person name="Mata I.F."/>
            <person name="Samii A."/>
            <person name="Schneer S.H."/>
            <person name="Roberts J.W."/>
            <person name="Griffith A."/>
            <person name="Leis B.C."/>
            <person name="Schellenberg G.D."/>
            <person name="Sidransky E."/>
            <person name="Bird T.D."/>
            <person name="Leverenz J.B."/>
            <person name="Tsuang D."/>
            <person name="Zabetian C.P."/>
        </authorList>
    </citation>
    <scope>INVOLVEMENT OF VARIANTS GD SER-409 AND PRO-483 IN SUSCEPTIBILITY TO PARKINSON DISEASE</scope>
</reference>
<reference key="109">
    <citation type="journal article" date="2009" name="Brain">
        <title>Glucocerebrosidase mutations in clinical and pathologically proven Parkinson's disease.</title>
        <authorList>
            <person name="Neumann J."/>
            <person name="Bras J."/>
            <person name="Deas E."/>
            <person name="O'Sullivan S.S."/>
            <person name="Parkkinen L."/>
            <person name="Lachmann R.H."/>
            <person name="Li A."/>
            <person name="Holton J."/>
            <person name="Guerreiro R."/>
            <person name="Paudel R."/>
            <person name="Segarane B."/>
            <person name="Singleton A."/>
            <person name="Lees A."/>
            <person name="Hardy J."/>
            <person name="Houlden H."/>
            <person name="Revesz T."/>
            <person name="Wood N.W."/>
        </authorList>
    </citation>
    <scope>INVOLVEMENT IN PARKINSON DISEASE</scope>
    <scope>VARIANTS GLU-46; CYS-170; GLU-232; GLN-296; SER-409; ALA-419; HIS-448; ASN-482; PRO-483; PRO-495; LEU-497 AND CYS-502</scope>
</reference>
<reference key="110">
    <citation type="journal article" date="2009" name="N. Engl. J. Med.">
        <title>Multicenter analysis of glucocerebrosidase mutations in Parkinson's disease.</title>
        <authorList>
            <person name="Sidransky E."/>
            <person name="Nalls M.A."/>
            <person name="Aasly J.O."/>
            <person name="Aharon-Peretz J."/>
            <person name="Annesi G."/>
            <person name="Barbosa E.R."/>
            <person name="Bar-Shira A."/>
            <person name="Berg D."/>
            <person name="Bras J."/>
            <person name="Brice A."/>
            <person name="Chen C.M."/>
            <person name="Clark L.N."/>
            <person name="Condroyer C."/>
            <person name="De Marco E.V."/>
            <person name="Durr A."/>
            <person name="Eblan M.J."/>
            <person name="Fahn S."/>
            <person name="Farrer M.J."/>
            <person name="Fung H.C."/>
            <person name="Gan-Or Z."/>
            <person name="Gasser T."/>
            <person name="Gershoni-Baruch R."/>
            <person name="Giladi N."/>
            <person name="Griffith A."/>
            <person name="Gurevich T."/>
            <person name="Januario C."/>
            <person name="Kropp P."/>
            <person name="Lang A.E."/>
            <person name="Lee-Chen G.J."/>
            <person name="Lesage S."/>
            <person name="Marder K."/>
            <person name="Mata I.F."/>
            <person name="Mirelman A."/>
            <person name="Mitsui J."/>
            <person name="Mizuta I."/>
            <person name="Nicoletti G."/>
            <person name="Oliveira C."/>
            <person name="Ottman R."/>
            <person name="Orr-Urtreger A."/>
            <person name="Pereira L.V."/>
            <person name="Quattrone A."/>
            <person name="Rogaeva E."/>
            <person name="Rolfs A."/>
            <person name="Rosenbaum H."/>
            <person name="Rozenberg R."/>
            <person name="Samii A."/>
            <person name="Samaddar T."/>
            <person name="Schulte C."/>
            <person name="Sharma M."/>
            <person name="Singleton A."/>
            <person name="Spitz M."/>
            <person name="Tan E.K."/>
            <person name="Tayebi N."/>
            <person name="Toda T."/>
            <person name="Troiano A.R."/>
            <person name="Tsuji S."/>
            <person name="Wittstock M."/>
            <person name="Wolfsberg T.G."/>
            <person name="Wu Y.R."/>
            <person name="Zabetian C.P."/>
            <person name="Zhao Y."/>
            <person name="Ziegler S.G."/>
        </authorList>
    </citation>
    <scope>INVOLVEMENT OF VARIANTS GD SER-409 AND PRO-483 IN SUSCEPTIBILITY TO PARKINSON DISEASE</scope>
</reference>
<reference key="111">
    <citation type="journal article" date="2012" name="Mol. Genet. Metab.">
        <title>Novel pathogenic mutations in the glucocerebrosidase locus.</title>
        <authorList>
            <person name="Duran R."/>
            <person name="McNeill A."/>
            <person name="Mehta A."/>
            <person name="Hughes D."/>
            <person name="Cox T."/>
            <person name="Deegan P."/>
            <person name="Schapira A.H."/>
            <person name="Hardy J."/>
        </authorList>
    </citation>
    <scope>VARIANTS GD1 VAL-289; GLY-301 AND GLU-486</scope>
</reference>
<reference key="112">
    <citation type="journal article" date="2014" name="Ann. Hematol.">
        <title>Novel heterozygous c.798C&gt;G and c.1040T&gt;G mutations in the GBA1 gene are associated with a severe phenotype of Gaucher disease type 1.</title>
        <authorList>
            <person name="Machaczka M."/>
            <person name="Klimkowska M."/>
        </authorList>
    </citation>
    <scope>VARIANTS GD1 LEU-266 AND SER-347</scope>
</reference>
<reference key="113">
    <citation type="journal article" date="2014" name="Eur. J. Hum. Genet.">
        <title>Functional analysis of 11 novel GBA alleles.</title>
        <authorList>
            <person name="Malini E."/>
            <person name="Grossi S."/>
            <person name="Deganuto M."/>
            <person name="Rosano C."/>
            <person name="Parini R."/>
            <person name="Dominisini S."/>
            <person name="Cariati R."/>
            <person name="Zampieri S."/>
            <person name="Bembi B."/>
            <person name="Filocamo M."/>
            <person name="Dardis A."/>
        </authorList>
    </citation>
    <scope>VARIANTS GD1 SER-198; THR-284; SER-351; LYS-365; ARG-405; ASN-419 AND CYS-420</scope>
    <scope>CHARACTERIZATION OF VARIANTS GD1 SER-198; THR-284; SER-351; LYS-365; ARG-405; SER-409; ASN-419 AND CYS-420</scope>
    <scope>VARIANTS GD2 ILE-227 AND LYS-274</scope>
    <scope>CHARACTERIZATION OF VARIANTS GD2 ILE-227 AND LYS-274</scope>
    <scope>VARIANTS GD3 SER-227 AND ARG-304</scope>
    <scope>CHARACTERIZATION OF VARIANTS GD3 SER-227 AND ARG-304</scope>
</reference>
<reference key="114">
    <citation type="journal article" date="2014" name="Gene">
        <title>Two novel mutations in glucocerebrosidase, C23W and IVS7-1 G&gt;A, identified in Type 1 Gaucher patients heterozygous for N370S.</title>
        <authorList>
            <person name="Jack A."/>
            <person name="Amato D."/>
            <person name="Morris G."/>
            <person name="Choy F.Y."/>
        </authorList>
    </citation>
    <scope>VARIANT GD1 TRP-62</scope>
</reference>
<reference key="115">
    <citation type="journal article" date="2016" name="Ann. Neurol.">
        <title>DNAJC6 mutations associated with early-onset Parkinson's disease.</title>
        <authorList>
            <consortium name="International Parkinsonism Genetics Network"/>
            <person name="Olgiati S."/>
            <person name="Quadri M."/>
            <person name="Fang M."/>
            <person name="Rood J.P."/>
            <person name="Saute J.A."/>
            <person name="Chien H.F."/>
            <person name="Bouwkamp C.G."/>
            <person name="Graafland J."/>
            <person name="Minneboo M."/>
            <person name="Breedveld G.J."/>
            <person name="Zhang J."/>
            <person name="Verheijen F.W."/>
            <person name="Boon A.J."/>
            <person name="Kievit A.J."/>
            <person name="Jardim L.B."/>
            <person name="Mandemakers W."/>
            <person name="Barbosa E.R."/>
            <person name="Rieder C.R."/>
            <person name="Leenders K.L."/>
            <person name="Wang J."/>
            <person name="Bonifati V."/>
        </authorList>
    </citation>
    <scope>VARIANT PRO-363</scope>
</reference>
<reference key="116">
    <citation type="journal article" date="2018" name="Blood Cells Mol. Dis.">
        <title>Use of a multiplex ligation-dependent probe amplification method for the detection of deletions/duplications in the GBA1 gene in Gaucher disease patients.</title>
        <authorList>
            <person name="Basgalupp S.P."/>
            <person name="Siebert M."/>
            <person name="Vairo F.P.E."/>
            <person name="Chami A.M."/>
            <person name="Pinto L.L.C."/>
            <person name="Carvalho G.D.S."/>
            <person name="Schwartz I.V.D."/>
        </authorList>
    </citation>
    <scope>VARIANT GD2 ARG-350</scope>
    <scope>VARIANTS GD1 SER-409; SER-416; ARG-483; PRO-483 AND PRO-495</scope>
</reference>
<reference key="117">
    <citation type="journal article" date="2020" name="Mol. Genet. Metab. Rep.">
        <title>Gaucher disease: Biochemical and molecular findings in 141 patients diagnosed in Greece.</title>
        <authorList>
            <person name="Dimitriou E."/>
            <person name="Moraitou M."/>
            <person name="Cozar M."/>
            <person name="Serra-Vinardell J."/>
            <person name="Vilageliu L."/>
            <person name="Grinberg D."/>
            <person name="Mavridou I."/>
            <person name="Michelakakis H."/>
        </authorList>
    </citation>
    <scope>VARIANTS GD1 GLN-87; LEU-120; HIS-155; TRP-159; SER-174; PRO-214; ARG-223; ARG-241; ILE-252; ILE-270; GLN-294; ASN-322; VAL-348; ARG-350; SER-409; HIS-448; PRO-483; TYR-501; LYS-521 AND CYS-535</scope>
    <scope>VARIANTS GD2 TRP-159; ARG-241; GLN-294; HIS-448 AND PRO-483</scope>
    <scope>VARIANTS GD3 CYS-147; GLN-294; HIS-448 AND PRO-483</scope>
</reference>
<reference key="118">
    <citation type="journal article" date="2021" name="PLoS ONE">
        <title>Decreased glucocerebrosidase activity and substrate accumulation of glycosphingolipids in a novel GBA1 D409V knock-in mouse model.</title>
        <authorList>
            <person name="Polinski N.K."/>
            <person name="Martinez T.N."/>
            <person name="Gorodinsky A."/>
            <person name="Gareus R."/>
            <person name="Sasner M."/>
            <person name="Herberth M."/>
            <person name="Switzer R."/>
            <person name="Ahmad S.O."/>
            <person name="Cosden M."/>
            <person name="Kandebo M."/>
            <person name="Drolet R.E."/>
            <person name="Buckett P.D."/>
            <person name="Shan W."/>
            <person name="Chen Y."/>
            <person name="Pellegrino L.J."/>
            <person name="Ellsworth G.D."/>
            <person name="Dungan L.B."/>
            <person name="Hirst W.D."/>
            <person name="Clark S.W."/>
            <person name="Dave K.D."/>
        </authorList>
    </citation>
    <scope>CHARACTERIZATION OF VARIANT GD3 VAL-448</scope>
</reference>
<reference key="119">
    <citation type="journal article" date="2023" name="Front. Pediatr.">
        <title>The molecular mechanism of Gaucher disease caused by compound heterozygous mutations in GBA1 gene.</title>
        <authorList>
            <person name="Liu Q."/>
            <person name="Shen Z."/>
            <person name="Pan H."/>
            <person name="Ma S."/>
            <person name="Xiong F."/>
            <person name="He F."/>
        </authorList>
    </citation>
    <scope>VARIANTS GD1 LEU-414 AND HIS-448</scope>
</reference>
<evidence type="ECO:0000255" key="1"/>
<evidence type="ECO:0000269" key="2">
    <source>
    </source>
</evidence>
<evidence type="ECO:0000269" key="3">
    <source>
    </source>
</evidence>
<evidence type="ECO:0000269" key="4">
    <source>
    </source>
</evidence>
<evidence type="ECO:0000269" key="5">
    <source>
    </source>
</evidence>
<evidence type="ECO:0000269" key="6">
    <source>
    </source>
</evidence>
<evidence type="ECO:0000269" key="7">
    <source>
    </source>
</evidence>
<evidence type="ECO:0000269" key="8">
    <source>
    </source>
</evidence>
<evidence type="ECO:0000269" key="9">
    <source>
    </source>
</evidence>
<evidence type="ECO:0000269" key="10">
    <source>
    </source>
</evidence>
<evidence type="ECO:0000269" key="11">
    <source>
    </source>
</evidence>
<evidence type="ECO:0000269" key="12">
    <source>
    </source>
</evidence>
<evidence type="ECO:0000269" key="13">
    <source>
    </source>
</evidence>
<evidence type="ECO:0000269" key="14">
    <source>
    </source>
</evidence>
<evidence type="ECO:0000269" key="15">
    <source>
    </source>
</evidence>
<evidence type="ECO:0000269" key="16">
    <source>
    </source>
</evidence>
<evidence type="ECO:0000269" key="17">
    <source>
    </source>
</evidence>
<evidence type="ECO:0000269" key="18">
    <source>
    </source>
</evidence>
<evidence type="ECO:0000269" key="19">
    <source>
    </source>
</evidence>
<evidence type="ECO:0000269" key="20">
    <source>
    </source>
</evidence>
<evidence type="ECO:0000269" key="21">
    <source>
    </source>
</evidence>
<evidence type="ECO:0000269" key="22">
    <source>
    </source>
</evidence>
<evidence type="ECO:0000269" key="23">
    <source>
    </source>
</evidence>
<evidence type="ECO:0000269" key="24">
    <source>
    </source>
</evidence>
<evidence type="ECO:0000269" key="25">
    <source>
    </source>
</evidence>
<evidence type="ECO:0000269" key="26">
    <source>
    </source>
</evidence>
<evidence type="ECO:0000269" key="27">
    <source>
    </source>
</evidence>
<evidence type="ECO:0000269" key="28">
    <source>
    </source>
</evidence>
<evidence type="ECO:0000269" key="29">
    <source>
    </source>
</evidence>
<evidence type="ECO:0000269" key="30">
    <source>
    </source>
</evidence>
<evidence type="ECO:0000269" key="31">
    <source>
    </source>
</evidence>
<evidence type="ECO:0000269" key="32">
    <source>
    </source>
</evidence>
<evidence type="ECO:0000269" key="33">
    <source>
    </source>
</evidence>
<evidence type="ECO:0000269" key="34">
    <source>
    </source>
</evidence>
<evidence type="ECO:0000269" key="35">
    <source>
    </source>
</evidence>
<evidence type="ECO:0000269" key="36">
    <source>
    </source>
</evidence>
<evidence type="ECO:0000269" key="37">
    <source>
    </source>
</evidence>
<evidence type="ECO:0000269" key="38">
    <source>
    </source>
</evidence>
<evidence type="ECO:0000269" key="39">
    <source>
    </source>
</evidence>
<evidence type="ECO:0000269" key="40">
    <source>
    </source>
</evidence>
<evidence type="ECO:0000269" key="41">
    <source>
    </source>
</evidence>
<evidence type="ECO:0000269" key="42">
    <source>
    </source>
</evidence>
<evidence type="ECO:0000269" key="43">
    <source>
    </source>
</evidence>
<evidence type="ECO:0000269" key="44">
    <source>
    </source>
</evidence>
<evidence type="ECO:0000269" key="45">
    <source>
    </source>
</evidence>
<evidence type="ECO:0000269" key="46">
    <source>
    </source>
</evidence>
<evidence type="ECO:0000269" key="47">
    <source>
    </source>
</evidence>
<evidence type="ECO:0000269" key="48">
    <source>
    </source>
</evidence>
<evidence type="ECO:0000269" key="49">
    <source>
    </source>
</evidence>
<evidence type="ECO:0000269" key="50">
    <source>
    </source>
</evidence>
<evidence type="ECO:0000269" key="51">
    <source>
    </source>
</evidence>
<evidence type="ECO:0000269" key="52">
    <source>
    </source>
</evidence>
<evidence type="ECO:0000269" key="53">
    <source>
    </source>
</evidence>
<evidence type="ECO:0000269" key="54">
    <source>
    </source>
</evidence>
<evidence type="ECO:0000269" key="55">
    <source>
    </source>
</evidence>
<evidence type="ECO:0000269" key="56">
    <source>
    </source>
</evidence>
<evidence type="ECO:0000269" key="57">
    <source>
    </source>
</evidence>
<evidence type="ECO:0000269" key="58">
    <source>
    </source>
</evidence>
<evidence type="ECO:0000269" key="59">
    <source>
    </source>
</evidence>
<evidence type="ECO:0000269" key="60">
    <source>
    </source>
</evidence>
<evidence type="ECO:0000269" key="61">
    <source>
    </source>
</evidence>
<evidence type="ECO:0000269" key="62">
    <source>
    </source>
</evidence>
<evidence type="ECO:0000269" key="63">
    <source>
    </source>
</evidence>
<evidence type="ECO:0000269" key="64">
    <source>
    </source>
</evidence>
<evidence type="ECO:0000269" key="65">
    <source>
    </source>
</evidence>
<evidence type="ECO:0000269" key="66">
    <source>
    </source>
</evidence>
<evidence type="ECO:0000269" key="67">
    <source>
    </source>
</evidence>
<evidence type="ECO:0000269" key="68">
    <source>
    </source>
</evidence>
<evidence type="ECO:0000269" key="69">
    <source>
    </source>
</evidence>
<evidence type="ECO:0000269" key="70">
    <source>
    </source>
</evidence>
<evidence type="ECO:0000269" key="71">
    <source>
    </source>
</evidence>
<evidence type="ECO:0000269" key="72">
    <source>
    </source>
</evidence>
<evidence type="ECO:0000269" key="73">
    <source>
    </source>
</evidence>
<evidence type="ECO:0000269" key="74">
    <source>
    </source>
</evidence>
<evidence type="ECO:0000269" key="75">
    <source>
    </source>
</evidence>
<evidence type="ECO:0000269" key="76">
    <source>
    </source>
</evidence>
<evidence type="ECO:0000269" key="77">
    <source>
    </source>
</evidence>
<evidence type="ECO:0000269" key="78">
    <source>
    </source>
</evidence>
<evidence type="ECO:0000269" key="79">
    <source>
    </source>
</evidence>
<evidence type="ECO:0000269" key="80">
    <source>
    </source>
</evidence>
<evidence type="ECO:0000269" key="81">
    <source>
    </source>
</evidence>
<evidence type="ECO:0000269" key="82">
    <source>
    </source>
</evidence>
<evidence type="ECO:0000269" key="83">
    <source>
    </source>
</evidence>
<evidence type="ECO:0000269" key="84">
    <source>
    </source>
</evidence>
<evidence type="ECO:0000269" key="85">
    <source>
    </source>
</evidence>
<evidence type="ECO:0000269" key="86">
    <source>
    </source>
</evidence>
<evidence type="ECO:0000269" key="87">
    <source>
    </source>
</evidence>
<evidence type="ECO:0000269" key="88">
    <source>
    </source>
</evidence>
<evidence type="ECO:0000269" key="89">
    <source>
    </source>
</evidence>
<evidence type="ECO:0000269" key="90">
    <source>
    </source>
</evidence>
<evidence type="ECO:0000269" key="91">
    <source>
    </source>
</evidence>
<evidence type="ECO:0000269" key="92">
    <source>
    </source>
</evidence>
<evidence type="ECO:0000269" key="93">
    <source>
    </source>
</evidence>
<evidence type="ECO:0000269" key="94">
    <source>
    </source>
</evidence>
<evidence type="ECO:0000269" key="95">
    <source>
    </source>
</evidence>
<evidence type="ECO:0000269" key="96">
    <source>
    </source>
</evidence>
<evidence type="ECO:0000269" key="97">
    <source>
    </source>
</evidence>
<evidence type="ECO:0000269" key="98">
    <source>
    </source>
</evidence>
<evidence type="ECO:0000269" key="99">
    <source>
    </source>
</evidence>
<evidence type="ECO:0000269" key="100">
    <source>
    </source>
</evidence>
<evidence type="ECO:0000269" key="101">
    <source>
    </source>
</evidence>
<evidence type="ECO:0000269" key="102">
    <source>
    </source>
</evidence>
<evidence type="ECO:0000269" key="103">
    <source>
    </source>
</evidence>
<evidence type="ECO:0000269" key="104">
    <source>
    </source>
</evidence>
<evidence type="ECO:0000269" key="105">
    <source>
    </source>
</evidence>
<evidence type="ECO:0000269" key="106">
    <source ref="12"/>
</evidence>
<evidence type="ECO:0000269" key="107">
    <source ref="14"/>
</evidence>
<evidence type="ECO:0000303" key="108">
    <source>
    </source>
</evidence>
<evidence type="ECO:0000303" key="109">
    <source>
    </source>
</evidence>
<evidence type="ECO:0000303" key="110">
    <source>
    </source>
</evidence>
<evidence type="ECO:0000303" key="111">
    <source>
    </source>
</evidence>
<evidence type="ECO:0000303" key="112">
    <source>
    </source>
</evidence>
<evidence type="ECO:0000305" key="113"/>
<evidence type="ECO:0000305" key="114">
    <source>
    </source>
</evidence>
<evidence type="ECO:0000305" key="115">
    <source>
    </source>
</evidence>
<evidence type="ECO:0000312" key="116">
    <source>
        <dbReference type="HGNC" id="HGNC:4177"/>
    </source>
</evidence>
<evidence type="ECO:0007744" key="117">
    <source>
        <dbReference type="PDB" id="1OGS"/>
    </source>
</evidence>
<evidence type="ECO:0007829" key="118">
    <source>
        <dbReference type="PDB" id="3GXF"/>
    </source>
</evidence>
<evidence type="ECO:0007829" key="119">
    <source>
        <dbReference type="PDB" id="3KEH"/>
    </source>
</evidence>
<evidence type="ECO:0007829" key="120">
    <source>
        <dbReference type="PDB" id="6MOZ"/>
    </source>
</evidence>
<evidence type="ECO:0007829" key="121">
    <source>
        <dbReference type="PDB" id="6Q1N"/>
    </source>
</evidence>
<evidence type="ECO:0007829" key="122">
    <source>
        <dbReference type="PDB" id="6Q1P"/>
    </source>
</evidence>
<evidence type="ECO:0007829" key="123">
    <source>
        <dbReference type="PDB" id="6Q6K"/>
    </source>
</evidence>
<evidence type="ECO:0007829" key="124">
    <source>
        <dbReference type="PDB" id="6Q6N"/>
    </source>
</evidence>
<evidence type="ECO:0007829" key="125">
    <source>
        <dbReference type="PDB" id="8AX3"/>
    </source>
</evidence>
<gene>
    <name evidence="116" type="primary">GBA1</name>
    <name type="synonym">GBA</name>
    <name type="synonym">GC</name>
    <name type="synonym">GLUC</name>
</gene>
<comment type="function">
    <text evidence="28 41 51 57 58 62 64 93 115">Glucosylceramidase that catalyzes, within the lysosomal compartment, the hydrolysis of glucosylceramides/GlcCers (such as beta-D-glucosyl-(1&lt;-&gt;1')-N-acylsphing-4-enine) into free ceramides (such as N-acylsphing-4-enine) and glucose (PubMed:15916907, PubMed:24211208, PubMed:32144204, PubMed:9201993). Plays a central role in the degradation of complex lipids and the turnover of cellular membranes (PubMed:27378698). Through the production of ceramides, participates in the PKC-activated salvage pathway of ceramide formation (PubMed:19279011). Catalyzes the glucosylation of cholesterol, through a transglucosylation reaction where glucose is transferred from GlcCer to cholesterol (PubMed:24211208, PubMed:26724485, PubMed:32144204). GlcCer containing mono-unsaturated fatty acids (such as beta-D-glucosyl-N-(9Z-octadecenoyl)-sphing-4-enine) are preferred as glucose donors for cholesterol glucosylation when compared with GlcCer containing same chain length of saturated fatty acids (such as beta-D-glucosyl-N-octadecanoyl-sphing-4-enine) (PubMed:24211208). Under specific conditions, may alternatively catalyze the reverse reaction, transferring glucose from cholesteryl 3-beta-D-glucoside to ceramide (Probable) (PubMed:26724485). Can also hydrolyze cholesteryl 3-beta-D-glucoside producing glucose and cholesterol (PubMed:24211208, PubMed:26724485). Catalyzes the hydrolysis of galactosylceramides/GalCers (such as beta-D-galactosyl-(1&lt;-&gt;1')-N-acylsphing-4-enine), as well as the transfer of galactose between GalCers and cholesterol in vitro, but with lower activity than with GlcCers (PubMed:32144204). Contrary to GlcCer and GalCer, xylosylceramide/XylCer (such as beta-D-xyosyl-(1&lt;-&gt;1')-N-acylsphing-4-enine) is not a good substrate for hydrolysis, however it is a good xylose donor for transxylosylation activity to form cholesteryl 3-beta-D-xyloside (PubMed:33361282).</text>
</comment>
<comment type="catalytic activity">
    <reaction evidence="28 30 51 62 93">
        <text>a beta-D-glucosyl-(1&lt;-&gt;1')-N-acylsphing-4-enine + H2O = an N-acylsphing-4-enine + D-glucose</text>
        <dbReference type="Rhea" id="RHEA:13269"/>
        <dbReference type="ChEBI" id="CHEBI:4167"/>
        <dbReference type="ChEBI" id="CHEBI:15377"/>
        <dbReference type="ChEBI" id="CHEBI:22801"/>
        <dbReference type="ChEBI" id="CHEBI:52639"/>
        <dbReference type="EC" id="3.2.1.45"/>
    </reaction>
    <physiologicalReaction direction="left-to-right" evidence="30 62">
        <dbReference type="Rhea" id="RHEA:13270"/>
    </physiologicalReaction>
</comment>
<comment type="catalytic activity">
    <reaction evidence="62">
        <text>a beta-D-galactosyl-(1&lt;-&gt;1')-N-acylsphing-4-enine + H2O = an N-acylsphing-4-enine + D-galactose</text>
        <dbReference type="Rhea" id="RHEA:14297"/>
        <dbReference type="ChEBI" id="CHEBI:4139"/>
        <dbReference type="ChEBI" id="CHEBI:15377"/>
        <dbReference type="ChEBI" id="CHEBI:18390"/>
        <dbReference type="ChEBI" id="CHEBI:52639"/>
        <dbReference type="EC" id="3.2.1.46"/>
    </reaction>
    <physiologicalReaction direction="left-to-right" evidence="115">
        <dbReference type="Rhea" id="RHEA:14298"/>
    </physiologicalReaction>
</comment>
<comment type="catalytic activity">
    <reaction evidence="51 64">
        <text>cholesteryl 3-beta-D-glucoside + H2O = cholesterol + D-glucose</text>
        <dbReference type="Rhea" id="RHEA:11956"/>
        <dbReference type="ChEBI" id="CHEBI:4167"/>
        <dbReference type="ChEBI" id="CHEBI:15377"/>
        <dbReference type="ChEBI" id="CHEBI:16113"/>
        <dbReference type="ChEBI" id="CHEBI:17495"/>
    </reaction>
    <physiologicalReaction direction="left-to-right" evidence="64 114">
        <dbReference type="Rhea" id="RHEA:11957"/>
    </physiologicalReaction>
</comment>
<comment type="catalytic activity">
    <reaction evidence="51 57 62">
        <text>a beta-D-glucosyl-(1&lt;-&gt;1')-N-acylsphing-4-enine + cholesterol = cholesteryl 3-beta-D-glucoside + an N-acylsphing-4-enine</text>
        <dbReference type="Rhea" id="RHEA:58264"/>
        <dbReference type="ChEBI" id="CHEBI:16113"/>
        <dbReference type="ChEBI" id="CHEBI:17495"/>
        <dbReference type="ChEBI" id="CHEBI:22801"/>
        <dbReference type="ChEBI" id="CHEBI:52639"/>
    </reaction>
    <physiologicalReaction direction="left-to-right" evidence="62 114">
        <dbReference type="Rhea" id="RHEA:58265"/>
    </physiologicalReaction>
    <physiologicalReaction direction="right-to-left" evidence="115">
        <dbReference type="Rhea" id="RHEA:58266"/>
    </physiologicalReaction>
</comment>
<comment type="catalytic activity">
    <reaction evidence="51 62">
        <text>beta-D-glucosyl-N-(9Z-octadecenoyl)-sphing-4E-enine + cholesterol = N-(9Z-octadecenoyl)-sphing-4-enine + cholesteryl 3-beta-D-glucoside</text>
        <dbReference type="Rhea" id="RHEA:58324"/>
        <dbReference type="ChEBI" id="CHEBI:16113"/>
        <dbReference type="ChEBI" id="CHEBI:17495"/>
        <dbReference type="ChEBI" id="CHEBI:77996"/>
        <dbReference type="ChEBI" id="CHEBI:139140"/>
    </reaction>
    <physiologicalReaction direction="left-to-right" evidence="62 114">
        <dbReference type="Rhea" id="RHEA:58325"/>
    </physiologicalReaction>
    <physiologicalReaction direction="right-to-left" evidence="115">
        <dbReference type="Rhea" id="RHEA:58326"/>
    </physiologicalReaction>
</comment>
<comment type="catalytic activity">
    <reaction evidence="51">
        <text>beta-D-glucosyl-(1&lt;-&gt;1')-N-hexadecanoylsphing-4-enine + cholesterol = cholesteryl 3-beta-D-glucoside + N-hexadecanoylsphing-4-enine</text>
        <dbReference type="Rhea" id="RHEA:58316"/>
        <dbReference type="ChEBI" id="CHEBI:16113"/>
        <dbReference type="ChEBI" id="CHEBI:17495"/>
        <dbReference type="ChEBI" id="CHEBI:72959"/>
        <dbReference type="ChEBI" id="CHEBI:84716"/>
    </reaction>
    <physiologicalReaction direction="left-to-right" evidence="114">
        <dbReference type="Rhea" id="RHEA:58317"/>
    </physiologicalReaction>
    <physiologicalReaction direction="right-to-left" evidence="113">
        <dbReference type="Rhea" id="RHEA:58318"/>
    </physiologicalReaction>
</comment>
<comment type="catalytic activity">
    <reaction evidence="51">
        <text>beta-D-glucosyl-N-octanoylsphing-4E-enine + cholesterol = N-octanoylsphing-4-enine + cholesteryl 3-beta-D-glucoside</text>
        <dbReference type="Rhea" id="RHEA:70303"/>
        <dbReference type="ChEBI" id="CHEBI:16113"/>
        <dbReference type="ChEBI" id="CHEBI:17495"/>
        <dbReference type="ChEBI" id="CHEBI:45815"/>
        <dbReference type="ChEBI" id="CHEBI:65222"/>
    </reaction>
    <physiologicalReaction direction="left-to-right" evidence="114">
        <dbReference type="Rhea" id="RHEA:70304"/>
    </physiologicalReaction>
    <physiologicalReaction direction="right-to-left" evidence="113">
        <dbReference type="Rhea" id="RHEA:70305"/>
    </physiologicalReaction>
</comment>
<comment type="catalytic activity">
    <reaction evidence="51">
        <text>beta-D-glucosyl-N-dodecanoylsphing-4-enine + cholesterol = N-dodecanoylsphing-4-enine + cholesteryl 3-beta-D-glucoside</text>
        <dbReference type="Rhea" id="RHEA:70307"/>
        <dbReference type="ChEBI" id="CHEBI:16113"/>
        <dbReference type="ChEBI" id="CHEBI:17495"/>
        <dbReference type="ChEBI" id="CHEBI:72956"/>
        <dbReference type="ChEBI" id="CHEBI:76297"/>
    </reaction>
    <physiologicalReaction direction="left-to-right" evidence="114">
        <dbReference type="Rhea" id="RHEA:70308"/>
    </physiologicalReaction>
    <physiologicalReaction direction="right-to-left" evidence="113">
        <dbReference type="Rhea" id="RHEA:70309"/>
    </physiologicalReaction>
</comment>
<comment type="catalytic activity">
    <reaction evidence="51">
        <text>beta-D-glucosyl-(1&lt;-&gt;1)-N-octadecanoylsphing-4-enine + cholesterol = N-octadecanoylsphing-4-enine + cholesteryl 3-beta-D-glucoside</text>
        <dbReference type="Rhea" id="RHEA:70311"/>
        <dbReference type="ChEBI" id="CHEBI:16113"/>
        <dbReference type="ChEBI" id="CHEBI:17495"/>
        <dbReference type="ChEBI" id="CHEBI:72961"/>
        <dbReference type="ChEBI" id="CHEBI:84719"/>
    </reaction>
    <physiologicalReaction direction="left-to-right" evidence="114">
        <dbReference type="Rhea" id="RHEA:70312"/>
    </physiologicalReaction>
    <physiologicalReaction direction="right-to-left" evidence="113">
        <dbReference type="Rhea" id="RHEA:70313"/>
    </physiologicalReaction>
</comment>
<comment type="catalytic activity">
    <reaction evidence="51">
        <text>beta-D-glucosyl-(1&lt;-&gt;1')-N-(15Z-tetracosenoyl)-sphing-4-enine + cholesterol = N-(15Z-tetracosenoyl)-sphing-4-enine + cholesteryl 3-beta-D-glucoside</text>
        <dbReference type="Rhea" id="RHEA:70315"/>
        <dbReference type="ChEBI" id="CHEBI:16113"/>
        <dbReference type="ChEBI" id="CHEBI:17495"/>
        <dbReference type="ChEBI" id="CHEBI:74450"/>
        <dbReference type="ChEBI" id="CHEBI:76302"/>
    </reaction>
    <physiologicalReaction direction="left-to-right" evidence="114">
        <dbReference type="Rhea" id="RHEA:70316"/>
    </physiologicalReaction>
    <physiologicalReaction direction="right-to-left" evidence="113">
        <dbReference type="Rhea" id="RHEA:70317"/>
    </physiologicalReaction>
</comment>
<comment type="catalytic activity">
    <reaction evidence="62">
        <text>a beta-D-galactosyl-(1&lt;-&gt;1')-N-acylsphing-4-enine + cholesterol = cholesteryl 3-beta-D-galactoside + an N-acylsphing-4-enine</text>
        <dbReference type="Rhea" id="RHEA:70235"/>
        <dbReference type="ChEBI" id="CHEBI:16113"/>
        <dbReference type="ChEBI" id="CHEBI:18390"/>
        <dbReference type="ChEBI" id="CHEBI:52639"/>
        <dbReference type="ChEBI" id="CHEBI:189066"/>
    </reaction>
    <physiologicalReaction direction="left-to-right" evidence="62">
        <dbReference type="Rhea" id="RHEA:70236"/>
    </physiologicalReaction>
    <physiologicalReaction direction="right-to-left" evidence="115">
        <dbReference type="Rhea" id="RHEA:70237"/>
    </physiologicalReaction>
</comment>
<comment type="catalytic activity">
    <reaction evidence="62">
        <text>1-(beta-D-galactosyl)-N-dodecanoylsphing-4-enine + cholesterol = cholesteryl 3-beta-D-galactoside + N-dodecanoylsphing-4-enine</text>
        <dbReference type="Rhea" id="RHEA:70255"/>
        <dbReference type="ChEBI" id="CHEBI:16113"/>
        <dbReference type="ChEBI" id="CHEBI:72956"/>
        <dbReference type="ChEBI" id="CHEBI:73432"/>
        <dbReference type="ChEBI" id="CHEBI:189066"/>
    </reaction>
    <physiologicalReaction direction="left-to-right" evidence="62">
        <dbReference type="Rhea" id="RHEA:70256"/>
    </physiologicalReaction>
    <physiologicalReaction direction="right-to-left" evidence="115">
        <dbReference type="Rhea" id="RHEA:70257"/>
    </physiologicalReaction>
</comment>
<comment type="catalytic activity">
    <reaction evidence="64">
        <text>a beta-D-xylosyl-(1&lt;-&gt;1')-N-acylsphing-4-enine + cholesterol = cholesteryl 3-beta-D-xyloside + an N-acylsphing-4-enine</text>
        <dbReference type="Rhea" id="RHEA:70239"/>
        <dbReference type="ChEBI" id="CHEBI:16113"/>
        <dbReference type="ChEBI" id="CHEBI:52639"/>
        <dbReference type="ChEBI" id="CHEBI:189067"/>
        <dbReference type="ChEBI" id="CHEBI:189068"/>
    </reaction>
    <physiologicalReaction direction="left-to-right" evidence="64">
        <dbReference type="Rhea" id="RHEA:70240"/>
    </physiologicalReaction>
</comment>
<comment type="catalytic activity">
    <reaction evidence="64">
        <text>beta-D-xylosyl-(1&lt;-&gt;1')-N-(9Z-octadecenoyl)-sphing-4-enine + cholesterol = cholesteryl 3-beta-D-xyloside + N-(9Z-octadecenoyl)-sphing-4-enine</text>
        <dbReference type="Rhea" id="RHEA:70251"/>
        <dbReference type="ChEBI" id="CHEBI:16113"/>
        <dbReference type="ChEBI" id="CHEBI:77996"/>
        <dbReference type="ChEBI" id="CHEBI:189067"/>
        <dbReference type="ChEBI" id="CHEBI:189081"/>
    </reaction>
    <physiologicalReaction direction="left-to-right" evidence="64">
        <dbReference type="Rhea" id="RHEA:70252"/>
    </physiologicalReaction>
</comment>
<comment type="activity regulation">
    <text evidence="10 41 51 57 93">Synergistically activated by saposin-A and saposin-C, two saposin peptides produced by proteolytic processing of prosaposin/PSAP (PubMed:9201993). Saposin-C activates GBA1 through its recruitment to membranes (PubMed:10781797, PubMed:9201993). The membrane structure and composition in anionic phospholipids are also important for the activation (PubMed:10781797, PubMed:9201993). Activated by PKC in the salvage pathway of ceramide formation (PubMed:19279011). Inhibited by conduritol B epoxide/CBE (PubMed:24211208, PubMed:26724485).</text>
</comment>
<comment type="biophysicochemical properties">
    <phDependence>
        <text evidence="51">Optimum pH is 5.3.</text>
    </phDependence>
    <temperatureDependence>
        <text evidence="51">Optimum temperature is 43 degrees Celsius.</text>
    </temperatureDependence>
</comment>
<comment type="pathway">
    <text evidence="51 57">Steroid metabolism; cholesterol metabolism.</text>
</comment>
<comment type="pathway">
    <text evidence="30 51 57 93">Sphingolipid metabolism.</text>
</comment>
<comment type="subunit">
    <text evidence="10 35 46 49 59">Interacts with saposin-C (PubMed:10781797). Interacts with SCARB2 (PubMed:18022370). Interacts with TCP1 (PubMed:21098288). May interacts with SNCA; this interaction may inhibit the glucosylceramidase activity (PubMed:23266198). Interacts with GRN; this interaction prevents aggregation of GBA1-SCARB2 complex via interaction with HSPA1A upon stress (PubMed:27789271).</text>
</comment>
<comment type="interaction">
    <interactant intactId="EBI-1564609">
        <id>P04062</id>
    </interactant>
    <interactant intactId="EBI-356553">
        <id>P17987</id>
        <label>TCP1</label>
    </interactant>
    <organismsDiffer>false</organismsDiffer>
    <experiments>2</experiments>
</comment>
<comment type="subcellular location">
    <subcellularLocation>
        <location evidence="32 34 35">Lysosome membrane</location>
        <topology evidence="10 35 37">Peripheral membrane protein</topology>
        <orientation evidence="35">Lumenal side</orientation>
    </subcellularLocation>
    <text evidence="10 35">Interaction with saposin-C promotes membrane association (PubMed:10781797). Targeting to lysosomes occurs through an alternative MPR-independent mechanism via SCARB2 (PubMed:18022370).</text>
</comment>
<comment type="alternative products">
    <event type="alternative splicing"/>
    <event type="alternative initiation"/>
    <isoform>
        <id>P04062-1</id>
        <name>Long</name>
        <sequence type="displayed"/>
    </isoform>
    <isoform>
        <id>P04062-2</id>
        <name>Short</name>
        <sequence type="described" ref="VSP_018800"/>
    </isoform>
    <isoform>
        <id>P04062-3</id>
        <name>3</name>
        <sequence type="described" ref="VSP_025216 VSP_025217 VSP_025218"/>
    </isoform>
    <isoform>
        <id>P04062-4</id>
        <name>4</name>
        <sequence type="described" ref="VSP_054655"/>
    </isoform>
    <isoform>
        <id>P04062-5</id>
        <name>5</name>
        <sequence type="described" ref="VSP_054656"/>
    </isoform>
</comment>
<comment type="disease" evidence="4 6 9 13 14 23 27 28 30 33 36 43 44 45 68 69 70 76 78 79 80 85 86 88 90 92 94 98 99 102">
    <disease id="DI-03092">
        <name>Gaucher disease</name>
        <acronym>GD</acronym>
        <description>An autosomal recessive lysosomal storage disease due to deficient activity of lysosomal beta-glucocerebrosidase, and characterized by accumulation of glucosylceramide in the reticulo-endothelial system. GD is a multisystem disease historically divided into three main subtypes on the basis of the presence of neurologic involvement, age at onset and progression rate: type 1 is the non-neuropathic form, type 2 is the acute neuropathic form with early onset and rapid neurologic deterioration, type 3 is the chronic neuropathic form with slow progression of neurologic features. GD shows a marked phenotypic diversity ranging from adult asymptomatic forms, at the mild end, to perinatal lethal forms at the severe end of the disease spectrum. Formal diagnosis of Gaucher disease is based on the measurement of glucocerebrosidase levels in circulating leukocytes and molecular genetic analysis.</description>
        <dbReference type="MIM" id="230800"/>
    </disease>
    <text>The disease is caused by variants affecting the gene represented in this entry.</text>
</comment>
<comment type="disease" evidence="2 3 5 11 13 15 20 22 24 38 39 46 47 48 50 52 53 55 60 63 66 71 73 74 79 80 81 82 84 86 87 90 91 95 97 100 103 105 107">
    <disease id="DI-01647">
        <name>Gaucher disease 1</name>
        <acronym>GD1</acronym>
        <description>A form of Gaucher disease, an autosomal recessive lysosomal storage disease due to deficient activity of lysosomal beta-glucocerebrosidase, and characterized by accumulation of glucosylceramide in the reticulo-endothelial system. GD1 is characterized by hepatosplenomegaly with consequent anemia and thrombopenia, and bone involvement. The central nervous system is not involved.</description>
        <dbReference type="MIM" id="230800"/>
    </disease>
    <text>The disease is caused by variants affecting the gene represented in this entry.</text>
</comment>
<comment type="disease" evidence="5 7 8 11 13 15 25 30 46 48 50 54 60 63 70 75 77 79 82 91 95 96 99 100 101 104 105">
    <disease id="DI-01648">
        <name>Gaucher disease 2</name>
        <acronym>GD2</acronym>
        <description>The most severe form of Gaucher disease, an autosomal recessive lysosomal storage disease due to deficient activity of lysosomal beta-glucocerebrosidase, and characterized by accumulation of glucosylceramide in the reticulo-endothelial system. GD2 is an acute neuronopathic form that manifests soon after birth, with death generally occurring before patients reach two years of age. Clinical features include hepatosplenomegaly, developmental regression, growth arrest, and rapidly progressing neurologic deterioration.</description>
        <dbReference type="MIM" id="230900"/>
    </disease>
    <text>The disease is caused by variants affecting the gene represented in this entry.</text>
</comment>
<comment type="disease" evidence="5 11 13 15 22 50 55 63 65 79 82 83 103">
    <disease id="DI-01649">
        <name>Gaucher disease 3</name>
        <acronym>GD3</acronym>
        <description>A form of Gaucher disease, an autosomal recessive lysosomal storage disease due to deficient activity of lysosomal beta-glucocerebrosidase, and characterized by accumulation of glucosylceramide in the reticulo-endothelial system. GD3 is a subacute neuronopathic form characterized by later onset and slower progression compared to Gaucher disease 2.</description>
        <dbReference type="MIM" id="231000"/>
    </disease>
    <text>The disease is caused by variants affecting the gene represented in this entry.</text>
</comment>
<comment type="disease" evidence="89">
    <disease id="DI-01650">
        <name>Gaucher disease 3C</name>
        <acronym>GD3C</acronym>
        <description>A variant of subacute neuronopathic Gaucher disease 3 associated with cardiovascular calcifications.</description>
        <dbReference type="MIM" id="231005"/>
    </disease>
    <text>The disease is caused by variants affecting the gene represented in this entry.</text>
</comment>
<comment type="disease" evidence="4 13">
    <disease id="DI-02151">
        <name>Gaucher disease perinatal lethal</name>
        <acronym>GDPL</acronym>
        <description>Distinct form of Gaucher disease type 2, characterized by fetal onset. Hydrops fetalis, in utero fetal death and neonatal distress are prominent features. When hydrops is absent, neurologic involvement begins in the first week and leads to death within 3 months. Hepatosplenomegaly is a major sign, and is associated with ichthyosis, arthrogryposis, and facial dysmorphism.</description>
        <dbReference type="MIM" id="608013"/>
    </disease>
    <text evidence="4">The disease is caused by variants affecting the gene represented in this entry. Perinatal lethal Gaucher disease is associated with non-immune hydrops fetalis, a generalized edema of the fetus with fluid accumulation in the body cavities due to non-immune causes. Non-immune hydrops fetalis is not a diagnosis in itself but a symptom, a feature of many genetic disorders, and the end-stage of a wide variety of disorders.</text>
</comment>
<comment type="disease" evidence="19 29 33 36 42 45">
    <disease id="DI-02134">
        <name>Parkinson disease</name>
        <acronym>PARK</acronym>
        <description>A complex neurodegenerative disorder characterized by bradykinesia, resting tremor, muscular rigidity and postural instability. Additional features are characteristic postural abnormalities, dysautonomia, dystonic cramps, and dementia. The pathology of Parkinson disease involves the loss of dopaminergic neurons in the substantia nigra and the presence of Lewy bodies (intraneuronal accumulations of aggregated proteins), in surviving neurons in various areas of the brain. The disease is progressive and usually manifests after the age of 50 years, although early-onset cases (before 50 years) are known. The majority of the cases are sporadic suggesting a multifactorial etiology based on environmental and genetic factors. However, some patients present with a positive family history for the disease. Familial forms of the disease usually begin at earlier ages and are associated with atypical clinical features.</description>
        <dbReference type="MIM" id="168600"/>
    </disease>
    <text>Disease susceptibility may be associated with variants affecting the gene represented in this entry.</text>
</comment>
<comment type="pharmaceutical">
    <text>Available under the names Ceredase and Cerenzyme (Genzyme). Used to treat Gaucher disease.</text>
</comment>
<comment type="miscellaneous">
    <molecule>Isoform Long</molecule>
    <text evidence="67">Major isoform.</text>
</comment>
<comment type="miscellaneous">
    <molecule>Isoform Short</molecule>
    <text evidence="67">Produced by alternative initiation from a downstream AUG. Two to three times less protein is produced from this downstream AUG.</text>
</comment>
<comment type="miscellaneous">
    <molecule>Isoform 3</molecule>
    <text evidence="113">Produced by alternative splicing.</text>
</comment>
<comment type="similarity">
    <text evidence="113">Belongs to the glycosyl hydrolase 30 family.</text>
</comment>
<comment type="online information" name="Ceredase">
    <link uri="https://www.rxlist.com/ceredase-drug.htm"/>
    <text>Clinical information on Ceredase</text>
</comment>
<dbReference type="EC" id="3.2.1.45" evidence="30 51 62 93"/>
<dbReference type="EC" id="2.4.1.-" evidence="51 57 62"/>
<dbReference type="EC" id="3.2.1.-" evidence="51 57 62"/>
<dbReference type="EC" id="3.2.1.46" evidence="62"/>
<dbReference type="EMBL" id="M16328">
    <property type="protein sequence ID" value="AAA35873.1"/>
    <property type="molecule type" value="mRNA"/>
</dbReference>
<dbReference type="EMBL" id="K02920">
    <property type="protein sequence ID" value="AAA35877.1"/>
    <property type="molecule type" value="mRNA"/>
</dbReference>
<dbReference type="EMBL" id="J03059">
    <property type="protein sequence ID" value="AAC63056.1"/>
    <property type="molecule type" value="Genomic_DNA"/>
</dbReference>
<dbReference type="EMBL" id="D13286">
    <property type="protein sequence ID" value="BAA02545.1"/>
    <property type="molecule type" value="mRNA"/>
</dbReference>
<dbReference type="EMBL" id="D13287">
    <property type="protein sequence ID" value="BAA02546.1"/>
    <property type="molecule type" value="mRNA"/>
</dbReference>
<dbReference type="EMBL" id="AF023268">
    <property type="protein sequence ID" value="AAC51820.1"/>
    <property type="molecule type" value="Genomic_DNA"/>
</dbReference>
<dbReference type="EMBL" id="AK291911">
    <property type="protein sequence ID" value="BAF84600.1"/>
    <property type="molecule type" value="mRNA"/>
</dbReference>
<dbReference type="EMBL" id="AK298900">
    <property type="protein sequence ID" value="BAH12898.1"/>
    <property type="molecule type" value="mRNA"/>
</dbReference>
<dbReference type="EMBL" id="AK300829">
    <property type="protein sequence ID" value="BAH13357.1"/>
    <property type="molecule type" value="mRNA"/>
</dbReference>
<dbReference type="EMBL" id="AL713999">
    <property type="status" value="NOT_ANNOTATED_CDS"/>
    <property type="molecule type" value="Genomic_DNA"/>
</dbReference>
<dbReference type="EMBL" id="BC003356">
    <property type="protein sequence ID" value="AAH03356.1"/>
    <property type="molecule type" value="mRNA"/>
</dbReference>
<dbReference type="EMBL" id="M19285">
    <property type="protein sequence ID" value="AAA35880.1"/>
    <property type="molecule type" value="mRNA"/>
</dbReference>
<dbReference type="EMBL" id="M18916">
    <property type="protein sequence ID" value="AAA35878.1"/>
    <property type="status" value="ALT_SEQ"/>
    <property type="molecule type" value="Genomic_DNA"/>
</dbReference>
<dbReference type="EMBL" id="M18917">
    <property type="protein sequence ID" value="AAA35879.1"/>
    <property type="status" value="ALT_SEQ"/>
    <property type="molecule type" value="Genomic_DNA"/>
</dbReference>
<dbReference type="EMBL" id="M20248">
    <property type="protein sequence ID" value="AAA35874.1"/>
    <property type="molecule type" value="Genomic_DNA"/>
</dbReference>
<dbReference type="EMBL" id="M20282">
    <property type="protein sequence ID" value="AAA35876.1"/>
    <property type="molecule type" value="Genomic_DNA"/>
</dbReference>
<dbReference type="CCDS" id="CCDS1102.1">
    <molecule id="P04062-1"/>
</dbReference>
<dbReference type="CCDS" id="CCDS53373.1">
    <molecule id="P04062-4"/>
</dbReference>
<dbReference type="CCDS" id="CCDS53374.1">
    <molecule id="P04062-5"/>
</dbReference>
<dbReference type="PIR" id="A94068">
    <property type="entry name" value="EUHUGC"/>
</dbReference>
<dbReference type="PIR" id="I52980">
    <property type="entry name" value="I52980"/>
</dbReference>
<dbReference type="PIR" id="I67792">
    <property type="entry name" value="I67792"/>
</dbReference>
<dbReference type="RefSeq" id="NP_000148.2">
    <molecule id="P04062-1"/>
    <property type="nucleotide sequence ID" value="NM_000157.4"/>
</dbReference>
<dbReference type="RefSeq" id="NP_001005741.1">
    <molecule id="P04062-1"/>
    <property type="nucleotide sequence ID" value="NM_001005741.3"/>
</dbReference>
<dbReference type="RefSeq" id="NP_001005742.1">
    <molecule id="P04062-1"/>
    <property type="nucleotide sequence ID" value="NM_001005742.3"/>
</dbReference>
<dbReference type="RefSeq" id="NP_001165282.1">
    <molecule id="P04062-4"/>
    <property type="nucleotide sequence ID" value="NM_001171811.2"/>
</dbReference>
<dbReference type="RefSeq" id="NP_001165283.1">
    <molecule id="P04062-5"/>
    <property type="nucleotide sequence ID" value="NM_001171812.2"/>
</dbReference>
<dbReference type="PDB" id="1OGS">
    <property type="method" value="X-ray"/>
    <property type="resolution" value="2.00 A"/>
    <property type="chains" value="A/B=40-536"/>
</dbReference>
<dbReference type="PDB" id="1Y7V">
    <property type="method" value="X-ray"/>
    <property type="resolution" value="2.40 A"/>
    <property type="chains" value="A/B=40-536"/>
</dbReference>
<dbReference type="PDB" id="2F61">
    <property type="method" value="X-ray"/>
    <property type="resolution" value="2.50 A"/>
    <property type="chains" value="A/B=40-536"/>
</dbReference>
<dbReference type="PDB" id="2J25">
    <property type="method" value="X-ray"/>
    <property type="resolution" value="2.90 A"/>
    <property type="chains" value="A/B=40-536"/>
</dbReference>
<dbReference type="PDB" id="2NSX">
    <property type="method" value="X-ray"/>
    <property type="resolution" value="2.11 A"/>
    <property type="chains" value="A/B/C/D=40-536"/>
</dbReference>
<dbReference type="PDB" id="2NT0">
    <property type="method" value="X-ray"/>
    <property type="resolution" value="1.79 A"/>
    <property type="chains" value="A/B/C/D=40-536"/>
</dbReference>
<dbReference type="PDB" id="2NT1">
    <property type="method" value="X-ray"/>
    <property type="resolution" value="2.30 A"/>
    <property type="chains" value="A/B/C/D=40-536"/>
</dbReference>
<dbReference type="PDB" id="2V3D">
    <property type="method" value="X-ray"/>
    <property type="resolution" value="1.96 A"/>
    <property type="chains" value="A/B=40-536"/>
</dbReference>
<dbReference type="PDB" id="2V3E">
    <property type="method" value="X-ray"/>
    <property type="resolution" value="2.00 A"/>
    <property type="chains" value="A/B=40-536"/>
</dbReference>
<dbReference type="PDB" id="2V3F">
    <property type="method" value="X-ray"/>
    <property type="resolution" value="1.95 A"/>
    <property type="chains" value="A/B=40-536"/>
</dbReference>
<dbReference type="PDB" id="2VT0">
    <property type="method" value="X-ray"/>
    <property type="resolution" value="2.15 A"/>
    <property type="chains" value="A/B=40-536"/>
</dbReference>
<dbReference type="PDB" id="2WCG">
    <property type="method" value="X-ray"/>
    <property type="resolution" value="2.30 A"/>
    <property type="chains" value="A/B=40-536"/>
</dbReference>
<dbReference type="PDB" id="2WKL">
    <property type="method" value="X-ray"/>
    <property type="resolution" value="2.70 A"/>
    <property type="chains" value="A/B=40-536"/>
</dbReference>
<dbReference type="PDB" id="2XWD">
    <property type="method" value="X-ray"/>
    <property type="resolution" value="2.66 A"/>
    <property type="chains" value="A/B=40-536"/>
</dbReference>
<dbReference type="PDB" id="2XWE">
    <property type="method" value="X-ray"/>
    <property type="resolution" value="2.31 A"/>
    <property type="chains" value="A/B=40-536"/>
</dbReference>
<dbReference type="PDB" id="3GXD">
    <property type="method" value="X-ray"/>
    <property type="resolution" value="2.50 A"/>
    <property type="chains" value="A/B/C/D=40-536"/>
</dbReference>
<dbReference type="PDB" id="3GXF">
    <property type="method" value="X-ray"/>
    <property type="resolution" value="2.40 A"/>
    <property type="chains" value="A/B/C/D=40-536"/>
</dbReference>
<dbReference type="PDB" id="3GXI">
    <property type="method" value="X-ray"/>
    <property type="resolution" value="1.84 A"/>
    <property type="chains" value="A/B/C/D=40-536"/>
</dbReference>
<dbReference type="PDB" id="3GXM">
    <property type="method" value="X-ray"/>
    <property type="resolution" value="2.20 A"/>
    <property type="chains" value="A/B/C/D=40-536"/>
</dbReference>
<dbReference type="PDB" id="3KE0">
    <property type="method" value="X-ray"/>
    <property type="resolution" value="2.70 A"/>
    <property type="chains" value="A/B=40-536"/>
</dbReference>
<dbReference type="PDB" id="3KEH">
    <property type="method" value="X-ray"/>
    <property type="resolution" value="2.80 A"/>
    <property type="chains" value="A/B=40-536"/>
</dbReference>
<dbReference type="PDB" id="3RIK">
    <property type="method" value="X-ray"/>
    <property type="resolution" value="2.48 A"/>
    <property type="chains" value="A/B/C/D=40-536"/>
</dbReference>
<dbReference type="PDB" id="3RIL">
    <property type="method" value="X-ray"/>
    <property type="resolution" value="2.40 A"/>
    <property type="chains" value="A/B/C/D=40-536"/>
</dbReference>
<dbReference type="PDB" id="5LVX">
    <property type="method" value="X-ray"/>
    <property type="resolution" value="2.20 A"/>
    <property type="chains" value="A/B/C/D=40-536"/>
</dbReference>
<dbReference type="PDB" id="6MOZ">
    <property type="method" value="X-ray"/>
    <property type="resolution" value="2.10 A"/>
    <property type="chains" value="A/B=40-536"/>
</dbReference>
<dbReference type="PDB" id="6Q1N">
    <property type="method" value="X-ray"/>
    <property type="resolution" value="2.53 A"/>
    <property type="chains" value="A/B=40-536"/>
</dbReference>
<dbReference type="PDB" id="6Q1P">
    <property type="method" value="X-ray"/>
    <property type="resolution" value="2.80 A"/>
    <property type="chains" value="A/B=40-536"/>
</dbReference>
<dbReference type="PDB" id="6Q6K">
    <property type="method" value="X-ray"/>
    <property type="resolution" value="1.92 A"/>
    <property type="chains" value="A/B=40-536"/>
</dbReference>
<dbReference type="PDB" id="6Q6L">
    <property type="method" value="X-ray"/>
    <property type="resolution" value="1.81 A"/>
    <property type="chains" value="A/B=40-536"/>
</dbReference>
<dbReference type="PDB" id="6Q6N">
    <property type="method" value="X-ray"/>
    <property type="resolution" value="1.63 A"/>
    <property type="chains" value="A/B=40-536"/>
</dbReference>
<dbReference type="PDB" id="6T13">
    <property type="method" value="X-ray"/>
    <property type="resolution" value="1.85 A"/>
    <property type="chains" value="A/B/C/D=1-536"/>
</dbReference>
<dbReference type="PDB" id="6TJJ">
    <property type="method" value="X-ray"/>
    <property type="resolution" value="1.59 A"/>
    <property type="chains" value="AAA/BBB=40-536"/>
</dbReference>
<dbReference type="PDB" id="6TJK">
    <property type="method" value="X-ray"/>
    <property type="resolution" value="1.56 A"/>
    <property type="chains" value="AAA/BBB=40-536"/>
</dbReference>
<dbReference type="PDB" id="6TJQ">
    <property type="method" value="X-ray"/>
    <property type="resolution" value="1.41 A"/>
    <property type="chains" value="BBB=40-536"/>
</dbReference>
<dbReference type="PDB" id="6TN1">
    <property type="method" value="X-ray"/>
    <property type="resolution" value="0.98 A"/>
    <property type="chains" value="AAA=40-536"/>
</dbReference>
<dbReference type="PDB" id="6YTP">
    <property type="method" value="X-ray"/>
    <property type="resolution" value="1.70 A"/>
    <property type="chains" value="AAA/BBB=40-536"/>
</dbReference>
<dbReference type="PDB" id="6YTR">
    <property type="method" value="X-ray"/>
    <property type="resolution" value="1.70 A"/>
    <property type="chains" value="AAA/BBB=40-536"/>
</dbReference>
<dbReference type="PDB" id="6YUT">
    <property type="method" value="X-ray"/>
    <property type="resolution" value="1.76 A"/>
    <property type="chains" value="AAA/BBB=40-536"/>
</dbReference>
<dbReference type="PDB" id="6YV3">
    <property type="method" value="X-ray"/>
    <property type="resolution" value="1.80 A"/>
    <property type="chains" value="AAA/BBB=40-536"/>
</dbReference>
<dbReference type="PDB" id="6Z39">
    <property type="method" value="X-ray"/>
    <property type="resolution" value="1.70 A"/>
    <property type="chains" value="AAA/BBB=40-536"/>
</dbReference>
<dbReference type="PDB" id="6Z3I">
    <property type="method" value="X-ray"/>
    <property type="resolution" value="1.80 A"/>
    <property type="chains" value="BBB=40-536"/>
</dbReference>
<dbReference type="PDB" id="7NWV">
    <property type="method" value="X-ray"/>
    <property type="resolution" value="1.86 A"/>
    <property type="chains" value="AAA/BBB=40-536"/>
</dbReference>
<dbReference type="PDB" id="8AWK">
    <property type="method" value="X-ray"/>
    <property type="resolution" value="1.58 A"/>
    <property type="chains" value="AAA=40-536"/>
</dbReference>
<dbReference type="PDB" id="8AWR">
    <property type="method" value="X-ray"/>
    <property type="resolution" value="1.49 A"/>
    <property type="chains" value="AAA=40-536"/>
</dbReference>
<dbReference type="PDB" id="8AX3">
    <property type="method" value="X-ray"/>
    <property type="resolution" value="1.59 A"/>
    <property type="chains" value="A/B=40-536"/>
</dbReference>
<dbReference type="PDB" id="8P3E">
    <property type="method" value="X-ray"/>
    <property type="resolution" value="1.75 A"/>
    <property type="chains" value="A/B=40-536"/>
</dbReference>
<dbReference type="PDB" id="8P41">
    <property type="method" value="X-ray"/>
    <property type="resolution" value="1.83 A"/>
    <property type="chains" value="A/B=40-536"/>
</dbReference>
<dbReference type="PDB" id="9F9Z">
    <property type="method" value="X-ray"/>
    <property type="resolution" value="2.28 A"/>
    <property type="chains" value="A=40-536"/>
</dbReference>
<dbReference type="PDB" id="9FA3">
    <property type="method" value="X-ray"/>
    <property type="resolution" value="1.36 A"/>
    <property type="chains" value="A=1-536"/>
</dbReference>
<dbReference type="PDB" id="9FA6">
    <property type="method" value="X-ray"/>
    <property type="resolution" value="1.49 A"/>
    <property type="chains" value="A=1-536"/>
</dbReference>
<dbReference type="PDB" id="9FAD">
    <property type="method" value="X-ray"/>
    <property type="resolution" value="1.80 A"/>
    <property type="chains" value="A=1-536"/>
</dbReference>
<dbReference type="PDB" id="9FAL">
    <property type="method" value="X-ray"/>
    <property type="resolution" value="1.39 A"/>
    <property type="chains" value="A=1-536"/>
</dbReference>
<dbReference type="PDB" id="9FAY">
    <property type="method" value="X-ray"/>
    <property type="resolution" value="1.40 A"/>
    <property type="chains" value="A=1-536"/>
</dbReference>
<dbReference type="PDB" id="9FAZ">
    <property type="method" value="X-ray"/>
    <property type="resolution" value="1.63 A"/>
    <property type="chains" value="A=1-536"/>
</dbReference>
<dbReference type="PDB" id="9FB2">
    <property type="method" value="X-ray"/>
    <property type="resolution" value="1.14 A"/>
    <property type="chains" value="A=1-536"/>
</dbReference>
<dbReference type="PDB" id="9FDI">
    <property type="method" value="X-ray"/>
    <property type="resolution" value="1.41 A"/>
    <property type="chains" value="A=1-536"/>
</dbReference>
<dbReference type="PDBsum" id="1OGS"/>
<dbReference type="PDBsum" id="1Y7V"/>
<dbReference type="PDBsum" id="2F61"/>
<dbReference type="PDBsum" id="2J25"/>
<dbReference type="PDBsum" id="2NSX"/>
<dbReference type="PDBsum" id="2NT0"/>
<dbReference type="PDBsum" id="2NT1"/>
<dbReference type="PDBsum" id="2V3D"/>
<dbReference type="PDBsum" id="2V3E"/>
<dbReference type="PDBsum" id="2V3F"/>
<dbReference type="PDBsum" id="2VT0"/>
<dbReference type="PDBsum" id="2WCG"/>
<dbReference type="PDBsum" id="2WKL"/>
<dbReference type="PDBsum" id="2XWD"/>
<dbReference type="PDBsum" id="2XWE"/>
<dbReference type="PDBsum" id="3GXD"/>
<dbReference type="PDBsum" id="3GXF"/>
<dbReference type="PDBsum" id="3GXI"/>
<dbReference type="PDBsum" id="3GXM"/>
<dbReference type="PDBsum" id="3KE0"/>
<dbReference type="PDBsum" id="3KEH"/>
<dbReference type="PDBsum" id="3RIK"/>
<dbReference type="PDBsum" id="3RIL"/>
<dbReference type="PDBsum" id="5LVX"/>
<dbReference type="PDBsum" id="6MOZ"/>
<dbReference type="PDBsum" id="6Q1N"/>
<dbReference type="PDBsum" id="6Q1P"/>
<dbReference type="PDBsum" id="6Q6K"/>
<dbReference type="PDBsum" id="6Q6L"/>
<dbReference type="PDBsum" id="6Q6N"/>
<dbReference type="PDBsum" id="6T13"/>
<dbReference type="PDBsum" id="6TJJ"/>
<dbReference type="PDBsum" id="6TJK"/>
<dbReference type="PDBsum" id="6TJQ"/>
<dbReference type="PDBsum" id="6TN1"/>
<dbReference type="PDBsum" id="6YTP"/>
<dbReference type="PDBsum" id="6YTR"/>
<dbReference type="PDBsum" id="6YUT"/>
<dbReference type="PDBsum" id="6YV3"/>
<dbReference type="PDBsum" id="6Z39"/>
<dbReference type="PDBsum" id="6Z3I"/>
<dbReference type="PDBsum" id="7NWV"/>
<dbReference type="PDBsum" id="8AWK"/>
<dbReference type="PDBsum" id="8AWR"/>
<dbReference type="PDBsum" id="8AX3"/>
<dbReference type="PDBsum" id="8P3E"/>
<dbReference type="PDBsum" id="8P41"/>
<dbReference type="PDBsum" id="9F9Z"/>
<dbReference type="PDBsum" id="9FA3"/>
<dbReference type="PDBsum" id="9FA6"/>
<dbReference type="PDBsum" id="9FAD"/>
<dbReference type="PDBsum" id="9FAL"/>
<dbReference type="PDBsum" id="9FAY"/>
<dbReference type="PDBsum" id="9FAZ"/>
<dbReference type="PDBsum" id="9FB2"/>
<dbReference type="PDBsum" id="9FDI"/>
<dbReference type="SMR" id="P04062"/>
<dbReference type="BioGRID" id="108899">
    <property type="interactions" value="136"/>
</dbReference>
<dbReference type="CORUM" id="P04062"/>
<dbReference type="DIP" id="DIP-38645N"/>
<dbReference type="FunCoup" id="P04062">
    <property type="interactions" value="516"/>
</dbReference>
<dbReference type="IntAct" id="P04062">
    <property type="interactions" value="46"/>
</dbReference>
<dbReference type="MINT" id="P04062"/>
<dbReference type="STRING" id="9606.ENSP00000314508"/>
<dbReference type="BindingDB" id="P04062"/>
<dbReference type="ChEMBL" id="CHEMBL2179"/>
<dbReference type="DrugBank" id="DB08321">
    <property type="generic name" value="(1S,2S,3R,6R)-4-(hydroxymethyl)-6-(octylamino)cyclohex-4-ene-1,2,3-triol"/>
</dbReference>
<dbReference type="DrugBank" id="DB08283">
    <property type="generic name" value="(2R,3R,4R,5S)-2-(HYDROXYMETHYL)-1-NONYLPIPERIDINE-3,4,5-TRIOL"/>
</dbReference>
<dbReference type="DrugBank" id="DB04545">
    <property type="generic name" value="Afegostat"/>
</dbReference>
<dbReference type="DrugBank" id="DB03740">
    <property type="generic name" value="N-acetyl-alpha-D-glucosamine"/>
</dbReference>
<dbReference type="DrugBank" id="DB03106">
    <property type="generic name" value="scyllo-inositol"/>
</dbReference>
<dbReference type="DrugBank" id="DB06720">
    <property type="generic name" value="Velaglucerase alfa"/>
</dbReference>
<dbReference type="DrugCentral" id="P04062"/>
<dbReference type="SwissLipids" id="SLP:000001387"/>
<dbReference type="Allergome" id="8244">
    <property type="allergen name" value="Hom s Glucocerebrosidase"/>
</dbReference>
<dbReference type="CAZy" id="GH30">
    <property type="family name" value="Glycoside Hydrolase Family 30"/>
</dbReference>
<dbReference type="GlyConnect" id="1271">
    <property type="glycosylation" value="26 N-Linked glycans (4 sites)"/>
</dbReference>
<dbReference type="GlyCosmos" id="P04062">
    <property type="glycosylation" value="6 sites, 29 glycans"/>
</dbReference>
<dbReference type="GlyGen" id="P04062">
    <property type="glycosylation" value="8 sites, 31 N-linked glycans (4 sites), 1 O-linked glycan (2 sites)"/>
</dbReference>
<dbReference type="iPTMnet" id="P04062"/>
<dbReference type="MetOSite" id="P04062"/>
<dbReference type="PhosphoSitePlus" id="P04062"/>
<dbReference type="SwissPalm" id="P04062"/>
<dbReference type="BioMuta" id="GBA"/>
<dbReference type="DMDM" id="55584151"/>
<dbReference type="jPOST" id="P04062"/>
<dbReference type="MassIVE" id="P04062"/>
<dbReference type="PaxDb" id="9606-ENSP00000314508"/>
<dbReference type="PeptideAtlas" id="P04062"/>
<dbReference type="ProteomicsDB" id="51642">
    <molecule id="P04062-1"/>
</dbReference>
<dbReference type="ProteomicsDB" id="51643">
    <molecule id="P04062-2"/>
</dbReference>
<dbReference type="ProteomicsDB" id="51644">
    <molecule id="P04062-3"/>
</dbReference>
<dbReference type="Pumba" id="P04062"/>
<dbReference type="ABCD" id="P04062">
    <property type="antibodies" value="7 sequenced antibodies"/>
</dbReference>
<dbReference type="Antibodypedia" id="1678">
    <property type="antibodies" value="504 antibodies from 33 providers"/>
</dbReference>
<dbReference type="DNASU" id="2629"/>
<dbReference type="Ensembl" id="ENST00000327247.9">
    <molecule id="P04062-1"/>
    <property type="protein sequence ID" value="ENSP00000314508.5"/>
    <property type="gene ID" value="ENSG00000177628.16"/>
</dbReference>
<dbReference type="Ensembl" id="ENST00000368373.8">
    <molecule id="P04062-1"/>
    <property type="protein sequence ID" value="ENSP00000357357.3"/>
    <property type="gene ID" value="ENSG00000177628.16"/>
</dbReference>
<dbReference type="Ensembl" id="ENST00000427500.7">
    <molecule id="P04062-5"/>
    <property type="protein sequence ID" value="ENSP00000402577.2"/>
    <property type="gene ID" value="ENSG00000177628.16"/>
</dbReference>
<dbReference type="Ensembl" id="ENST00000428024.3">
    <molecule id="P04062-4"/>
    <property type="protein sequence ID" value="ENSP00000397986.2"/>
    <property type="gene ID" value="ENSG00000177628.16"/>
</dbReference>
<dbReference type="GeneID" id="2629"/>
<dbReference type="KEGG" id="hsa:2629"/>
<dbReference type="MANE-Select" id="ENST00000368373.8">
    <property type="protein sequence ID" value="ENSP00000357357.3"/>
    <property type="RefSeq nucleotide sequence ID" value="NM_000157.4"/>
    <property type="RefSeq protein sequence ID" value="NP_000148.2"/>
</dbReference>
<dbReference type="UCSC" id="uc001fjh.4">
    <molecule id="P04062-1"/>
    <property type="organism name" value="human"/>
</dbReference>
<dbReference type="AGR" id="HGNC:4177"/>
<dbReference type="CTD" id="2629"/>
<dbReference type="DisGeNET" id="2629"/>
<dbReference type="GeneCards" id="GBA1"/>
<dbReference type="GeneReviews" id="GBA1"/>
<dbReference type="HGNC" id="HGNC:4177">
    <property type="gene designation" value="GBA1"/>
</dbReference>
<dbReference type="HPA" id="ENSG00000177628">
    <property type="expression patterns" value="Low tissue specificity"/>
</dbReference>
<dbReference type="MalaCards" id="GBA1"/>
<dbReference type="MIM" id="168600">
    <property type="type" value="phenotype"/>
</dbReference>
<dbReference type="MIM" id="230800">
    <property type="type" value="phenotype"/>
</dbReference>
<dbReference type="MIM" id="230900">
    <property type="type" value="phenotype"/>
</dbReference>
<dbReference type="MIM" id="231000">
    <property type="type" value="phenotype"/>
</dbReference>
<dbReference type="MIM" id="231005">
    <property type="type" value="phenotype"/>
</dbReference>
<dbReference type="MIM" id="606463">
    <property type="type" value="gene"/>
</dbReference>
<dbReference type="MIM" id="608013">
    <property type="type" value="phenotype"/>
</dbReference>
<dbReference type="neXtProt" id="NX_P04062"/>
<dbReference type="OpenTargets" id="ENSG00000177628"/>
<dbReference type="Orphanet" id="85212">
    <property type="disease" value="Fetal Gaucher disease"/>
</dbReference>
<dbReference type="Orphanet" id="77259">
    <property type="disease" value="Gaucher disease type 1"/>
</dbReference>
<dbReference type="Orphanet" id="77260">
    <property type="disease" value="Gaucher disease type 2"/>
</dbReference>
<dbReference type="Orphanet" id="77261">
    <property type="disease" value="Gaucher disease type 3"/>
</dbReference>
<dbReference type="Orphanet" id="2072">
    <property type="disease" value="Gaucher disease-ophthalmoplegia-cardiovascular calcification syndrome"/>
</dbReference>
<dbReference type="Orphanet" id="411602">
    <property type="disease" value="Hereditary late-onset Parkinson disease"/>
</dbReference>
<dbReference type="PharmGKB" id="PA28591"/>
<dbReference type="VEuPathDB" id="HostDB:ENSG00000177628"/>
<dbReference type="eggNOG" id="KOG2566">
    <property type="taxonomic scope" value="Eukaryota"/>
</dbReference>
<dbReference type="GeneTree" id="ENSGT00390000009464"/>
<dbReference type="HOGENOM" id="CLU_014379_1_2_1"/>
<dbReference type="InParanoid" id="P04062"/>
<dbReference type="OMA" id="FGGIAWH"/>
<dbReference type="OrthoDB" id="2160638at2759"/>
<dbReference type="PAN-GO" id="P04062">
    <property type="GO annotations" value="2 GO annotations based on evolutionary models"/>
</dbReference>
<dbReference type="PhylomeDB" id="P04062"/>
<dbReference type="TreeFam" id="TF314254"/>
<dbReference type="BRENDA" id="3.2.1.45">
    <property type="organism ID" value="2681"/>
</dbReference>
<dbReference type="PathwayCommons" id="P04062"/>
<dbReference type="Reactome" id="R-HSA-390471">
    <property type="pathway name" value="Association of TriC/CCT with target proteins during biosynthesis"/>
</dbReference>
<dbReference type="Reactome" id="R-HSA-9840310">
    <property type="pathway name" value="Glycosphingolipid catabolism"/>
</dbReference>
<dbReference type="SignaLink" id="P04062"/>
<dbReference type="SIGNOR" id="P04062"/>
<dbReference type="UniPathway" id="UPA00296"/>
<dbReference type="BioGRID-ORCS" id="2629">
    <property type="hits" value="10 hits in 1162 CRISPR screens"/>
</dbReference>
<dbReference type="ChiTaRS" id="GBA">
    <property type="organism name" value="human"/>
</dbReference>
<dbReference type="EvolutionaryTrace" id="P04062"/>
<dbReference type="GeneWiki" id="Glucocerebrosidase"/>
<dbReference type="GenomeRNAi" id="2629"/>
<dbReference type="Pharos" id="P04062">
    <property type="development level" value="Tclin"/>
</dbReference>
<dbReference type="PRO" id="PR:P04062"/>
<dbReference type="Proteomes" id="UP000005640">
    <property type="component" value="Chromosome 1"/>
</dbReference>
<dbReference type="RNAct" id="P04062">
    <property type="molecule type" value="protein"/>
</dbReference>
<dbReference type="Bgee" id="ENSG00000177628">
    <property type="expression patterns" value="Expressed in stromal cell of endometrium and 101 other cell types or tissues"/>
</dbReference>
<dbReference type="ExpressionAtlas" id="P04062">
    <property type="expression patterns" value="baseline and differential"/>
</dbReference>
<dbReference type="GO" id="GO:0005783">
    <property type="term" value="C:endoplasmic reticulum"/>
    <property type="evidence" value="ECO:0000250"/>
    <property type="project" value="UniProtKB"/>
</dbReference>
<dbReference type="GO" id="GO:0070062">
    <property type="term" value="C:extracellular exosome"/>
    <property type="evidence" value="ECO:0007005"/>
    <property type="project" value="UniProtKB"/>
</dbReference>
<dbReference type="GO" id="GO:0005794">
    <property type="term" value="C:Golgi apparatus"/>
    <property type="evidence" value="ECO:0000250"/>
    <property type="project" value="UniProtKB"/>
</dbReference>
<dbReference type="GO" id="GO:0043202">
    <property type="term" value="C:lysosomal lumen"/>
    <property type="evidence" value="ECO:0000250"/>
    <property type="project" value="BHF-UCL"/>
</dbReference>
<dbReference type="GO" id="GO:0005765">
    <property type="term" value="C:lysosomal membrane"/>
    <property type="evidence" value="ECO:0000314"/>
    <property type="project" value="UniProtKB"/>
</dbReference>
<dbReference type="GO" id="GO:0005764">
    <property type="term" value="C:lysosome"/>
    <property type="evidence" value="ECO:0000315"/>
    <property type="project" value="ARUK-UCL"/>
</dbReference>
<dbReference type="GO" id="GO:0005802">
    <property type="term" value="C:trans-Golgi network"/>
    <property type="evidence" value="ECO:0000250"/>
    <property type="project" value="UniProtKB"/>
</dbReference>
<dbReference type="GO" id="GO:0004336">
    <property type="term" value="F:galactosylceramidase activity"/>
    <property type="evidence" value="ECO:0007669"/>
    <property type="project" value="RHEA"/>
</dbReference>
<dbReference type="GO" id="GO:0004348">
    <property type="term" value="F:glucosylceramidase activity"/>
    <property type="evidence" value="ECO:0000314"/>
    <property type="project" value="UniProtKB"/>
</dbReference>
<dbReference type="GO" id="GO:0046527">
    <property type="term" value="F:glucosyltransferase activity"/>
    <property type="evidence" value="ECO:0000314"/>
    <property type="project" value="UniProtKB"/>
</dbReference>
<dbReference type="GO" id="GO:0005124">
    <property type="term" value="F:scavenger receptor binding"/>
    <property type="evidence" value="ECO:0000353"/>
    <property type="project" value="ARUK-UCL"/>
</dbReference>
<dbReference type="GO" id="GO:0005102">
    <property type="term" value="F:signaling receptor binding"/>
    <property type="evidence" value="ECO:0000250"/>
    <property type="project" value="BHF-UCL"/>
</dbReference>
<dbReference type="GO" id="GO:0050295">
    <property type="term" value="F:steryl-beta-glucosidase activity"/>
    <property type="evidence" value="ECO:0000314"/>
    <property type="project" value="UniProtKB"/>
</dbReference>
<dbReference type="GO" id="GO:0019882">
    <property type="term" value="P:antigen processing and presentation"/>
    <property type="evidence" value="ECO:0007669"/>
    <property type="project" value="Ensembl"/>
</dbReference>
<dbReference type="GO" id="GO:1905037">
    <property type="term" value="P:autophagosome organization"/>
    <property type="evidence" value="ECO:0007669"/>
    <property type="project" value="Ensembl"/>
</dbReference>
<dbReference type="GO" id="GO:0006914">
    <property type="term" value="P:autophagy"/>
    <property type="evidence" value="ECO:0000315"/>
    <property type="project" value="UniProtKB"/>
</dbReference>
<dbReference type="GO" id="GO:1901805">
    <property type="term" value="P:beta-glucoside catabolic process"/>
    <property type="evidence" value="ECO:0007669"/>
    <property type="project" value="Ensembl"/>
</dbReference>
<dbReference type="GO" id="GO:0048854">
    <property type="term" value="P:brain morphogenesis"/>
    <property type="evidence" value="ECO:0007669"/>
    <property type="project" value="Ensembl"/>
</dbReference>
<dbReference type="GO" id="GO:0048469">
    <property type="term" value="P:cell maturation"/>
    <property type="evidence" value="ECO:0007669"/>
    <property type="project" value="Ensembl"/>
</dbReference>
<dbReference type="GO" id="GO:0009267">
    <property type="term" value="P:cellular response to starvation"/>
    <property type="evidence" value="ECO:0007669"/>
    <property type="project" value="Ensembl"/>
</dbReference>
<dbReference type="GO" id="GO:0071356">
    <property type="term" value="P:cellular response to tumor necrosis factor"/>
    <property type="evidence" value="ECO:0000315"/>
    <property type="project" value="BHF-UCL"/>
</dbReference>
<dbReference type="GO" id="GO:0046513">
    <property type="term" value="P:ceramide biosynthetic process"/>
    <property type="evidence" value="ECO:0000315"/>
    <property type="project" value="BHF-UCL"/>
</dbReference>
<dbReference type="GO" id="GO:0021694">
    <property type="term" value="P:cerebellar Purkinje cell layer formation"/>
    <property type="evidence" value="ECO:0007669"/>
    <property type="project" value="Ensembl"/>
</dbReference>
<dbReference type="GO" id="GO:0008203">
    <property type="term" value="P:cholesterol metabolic process"/>
    <property type="evidence" value="ECO:0000314"/>
    <property type="project" value="UniProtKB"/>
</dbReference>
<dbReference type="GO" id="GO:0008340">
    <property type="term" value="P:determination of adult lifespan"/>
    <property type="evidence" value="ECO:0007669"/>
    <property type="project" value="Ensembl"/>
</dbReference>
<dbReference type="GO" id="GO:0061436">
    <property type="term" value="P:establishment of skin barrier"/>
    <property type="evidence" value="ECO:0007669"/>
    <property type="project" value="Ensembl"/>
</dbReference>
<dbReference type="GO" id="GO:0006680">
    <property type="term" value="P:glucosylceramide catabolic process"/>
    <property type="evidence" value="ECO:0000314"/>
    <property type="project" value="UniProtKB"/>
</dbReference>
<dbReference type="GO" id="GO:0071425">
    <property type="term" value="P:hematopoietic stem cell proliferation"/>
    <property type="evidence" value="ECO:0007669"/>
    <property type="project" value="Ensembl"/>
</dbReference>
<dbReference type="GO" id="GO:0048872">
    <property type="term" value="P:homeostasis of number of cells"/>
    <property type="evidence" value="ECO:0007669"/>
    <property type="project" value="Ensembl"/>
</dbReference>
<dbReference type="GO" id="GO:0030259">
    <property type="term" value="P:lipid glycosylation"/>
    <property type="evidence" value="ECO:0000314"/>
    <property type="project" value="UniProtKB"/>
</dbReference>
<dbReference type="GO" id="GO:0019915">
    <property type="term" value="P:lipid storage"/>
    <property type="evidence" value="ECO:0007669"/>
    <property type="project" value="Ensembl"/>
</dbReference>
<dbReference type="GO" id="GO:0072676">
    <property type="term" value="P:lymphocyte migration"/>
    <property type="evidence" value="ECO:0007669"/>
    <property type="project" value="Ensembl"/>
</dbReference>
<dbReference type="GO" id="GO:1905146">
    <property type="term" value="P:lysosomal protein catabolic process"/>
    <property type="evidence" value="ECO:0000314"/>
    <property type="project" value="ParkinsonsUK-UCL"/>
</dbReference>
<dbReference type="GO" id="GO:0007040">
    <property type="term" value="P:lysosome organization"/>
    <property type="evidence" value="ECO:0000315"/>
    <property type="project" value="UniProtKB"/>
</dbReference>
<dbReference type="GO" id="GO:0014004">
    <property type="term" value="P:microglia differentiation"/>
    <property type="evidence" value="ECO:0007669"/>
    <property type="project" value="Ensembl"/>
</dbReference>
<dbReference type="GO" id="GO:0061518">
    <property type="term" value="P:microglial cell proliferation"/>
    <property type="evidence" value="ECO:0007669"/>
    <property type="project" value="Ensembl"/>
</dbReference>
<dbReference type="GO" id="GO:0000423">
    <property type="term" value="P:mitophagy"/>
    <property type="evidence" value="ECO:0007669"/>
    <property type="project" value="Ensembl"/>
</dbReference>
<dbReference type="GO" id="GO:0061744">
    <property type="term" value="P:motor behavior"/>
    <property type="evidence" value="ECO:0007669"/>
    <property type="project" value="Ensembl"/>
</dbReference>
<dbReference type="GO" id="GO:0050728">
    <property type="term" value="P:negative regulation of inflammatory response"/>
    <property type="evidence" value="ECO:0000315"/>
    <property type="project" value="BHF-UCL"/>
</dbReference>
<dbReference type="GO" id="GO:0032715">
    <property type="term" value="P:negative regulation of interleukin-6 production"/>
    <property type="evidence" value="ECO:0000314"/>
    <property type="project" value="BHF-UCL"/>
</dbReference>
<dbReference type="GO" id="GO:0043409">
    <property type="term" value="P:negative regulation of MAPK cascade"/>
    <property type="evidence" value="ECO:0000315"/>
    <property type="project" value="BHF-UCL"/>
</dbReference>
<dbReference type="GO" id="GO:0043524">
    <property type="term" value="P:negative regulation of neuron apoptotic process"/>
    <property type="evidence" value="ECO:0007669"/>
    <property type="project" value="Ensembl"/>
</dbReference>
<dbReference type="GO" id="GO:0051248">
    <property type="term" value="P:negative regulation of protein metabolic process"/>
    <property type="evidence" value="ECO:0007669"/>
    <property type="project" value="Ensembl"/>
</dbReference>
<dbReference type="GO" id="GO:0031333">
    <property type="term" value="P:negative regulation of protein-containing complex assembly"/>
    <property type="evidence" value="ECO:0007669"/>
    <property type="project" value="Ensembl"/>
</dbReference>
<dbReference type="GO" id="GO:0050905">
    <property type="term" value="P:neuromuscular process"/>
    <property type="evidence" value="ECO:0007669"/>
    <property type="project" value="Ensembl"/>
</dbReference>
<dbReference type="GO" id="GO:0051402">
    <property type="term" value="P:neuron apoptotic process"/>
    <property type="evidence" value="ECO:0007669"/>
    <property type="project" value="Ensembl"/>
</dbReference>
<dbReference type="GO" id="GO:1904457">
    <property type="term" value="P:positive regulation of neuronal action potential"/>
    <property type="evidence" value="ECO:0000315"/>
    <property type="project" value="ParkinsonsUK-UCL"/>
</dbReference>
<dbReference type="GO" id="GO:0032436">
    <property type="term" value="P:positive regulation of proteasomal ubiquitin-dependent protein catabolic process"/>
    <property type="evidence" value="ECO:0007669"/>
    <property type="project" value="Ensembl"/>
</dbReference>
<dbReference type="GO" id="GO:1905091">
    <property type="term" value="P:positive regulation of type 2 mitophagy"/>
    <property type="evidence" value="ECO:0007669"/>
    <property type="project" value="Ensembl"/>
</dbReference>
<dbReference type="GO" id="GO:0043161">
    <property type="term" value="P:proteasome-mediated ubiquitin-dependent protein catabolic process"/>
    <property type="evidence" value="ECO:0007669"/>
    <property type="project" value="Ensembl"/>
</dbReference>
<dbReference type="GO" id="GO:0021859">
    <property type="term" value="P:pyramidal neuron differentiation"/>
    <property type="evidence" value="ECO:0007669"/>
    <property type="project" value="Ensembl"/>
</dbReference>
<dbReference type="GO" id="GO:1905165">
    <property type="term" value="P:regulation of lysosomal protein catabolic process"/>
    <property type="evidence" value="ECO:0000304"/>
    <property type="project" value="ParkinsonsUK-UCL"/>
</dbReference>
<dbReference type="GO" id="GO:0016241">
    <property type="term" value="P:regulation of macroautophagy"/>
    <property type="evidence" value="ECO:0000304"/>
    <property type="project" value="ParkinsonsUK-UCL"/>
</dbReference>
<dbReference type="GO" id="GO:0032006">
    <property type="term" value="P:regulation of TOR signaling"/>
    <property type="evidence" value="ECO:0000315"/>
    <property type="project" value="UniProtKB"/>
</dbReference>
<dbReference type="GO" id="GO:0022904">
    <property type="term" value="P:respiratory electron transport chain"/>
    <property type="evidence" value="ECO:0007669"/>
    <property type="project" value="Ensembl"/>
</dbReference>
<dbReference type="GO" id="GO:0071548">
    <property type="term" value="P:response to dexamethasone"/>
    <property type="evidence" value="ECO:0007669"/>
    <property type="project" value="Ensembl"/>
</dbReference>
<dbReference type="GO" id="GO:0043627">
    <property type="term" value="P:response to estrogen"/>
    <property type="evidence" value="ECO:0007669"/>
    <property type="project" value="Ensembl"/>
</dbReference>
<dbReference type="GO" id="GO:0009268">
    <property type="term" value="P:response to pH"/>
    <property type="evidence" value="ECO:0007669"/>
    <property type="project" value="Ensembl"/>
</dbReference>
<dbReference type="GO" id="GO:0033574">
    <property type="term" value="P:response to testosterone"/>
    <property type="evidence" value="ECO:0007669"/>
    <property type="project" value="Ensembl"/>
</dbReference>
<dbReference type="GO" id="GO:0097066">
    <property type="term" value="P:response to thyroid hormone"/>
    <property type="evidence" value="ECO:0007669"/>
    <property type="project" value="Ensembl"/>
</dbReference>
<dbReference type="GO" id="GO:0046512">
    <property type="term" value="P:sphingosine biosynthetic process"/>
    <property type="evidence" value="ECO:0000315"/>
    <property type="project" value="BHF-UCL"/>
</dbReference>
<dbReference type="GO" id="GO:0033077">
    <property type="term" value="P:T cell differentiation in thymus"/>
    <property type="evidence" value="ECO:0007669"/>
    <property type="project" value="Ensembl"/>
</dbReference>
<dbReference type="GO" id="GO:0023021">
    <property type="term" value="P:termination of signal transduction"/>
    <property type="evidence" value="ECO:0000315"/>
    <property type="project" value="BHF-UCL"/>
</dbReference>
<dbReference type="FunFam" id="3.20.20.80:FF:000030">
    <property type="entry name" value="Lysosomal acid glucosylceramidase"/>
    <property type="match status" value="1"/>
</dbReference>
<dbReference type="Gene3D" id="3.20.20.80">
    <property type="entry name" value="Glycosidases"/>
    <property type="match status" value="1"/>
</dbReference>
<dbReference type="InterPro" id="IPR033452">
    <property type="entry name" value="GH30_C"/>
</dbReference>
<dbReference type="InterPro" id="IPR001139">
    <property type="entry name" value="Glyco_hydro_30"/>
</dbReference>
<dbReference type="InterPro" id="IPR033453">
    <property type="entry name" value="Glyco_hydro_30_TIM-barrel"/>
</dbReference>
<dbReference type="InterPro" id="IPR017853">
    <property type="entry name" value="Glycoside_hydrolase_SF"/>
</dbReference>
<dbReference type="PANTHER" id="PTHR11069">
    <property type="entry name" value="GLUCOSYLCERAMIDASE"/>
    <property type="match status" value="1"/>
</dbReference>
<dbReference type="PANTHER" id="PTHR11069:SF33">
    <property type="entry name" value="LYSOSOMAL ACID GLUCOSYLCERAMIDASE"/>
    <property type="match status" value="1"/>
</dbReference>
<dbReference type="Pfam" id="PF02055">
    <property type="entry name" value="Glyco_hydro_30"/>
    <property type="match status" value="1"/>
</dbReference>
<dbReference type="Pfam" id="PF17189">
    <property type="entry name" value="Glyco_hydro_30C"/>
    <property type="match status" value="1"/>
</dbReference>
<dbReference type="PRINTS" id="PR00843">
    <property type="entry name" value="GLHYDRLASE30"/>
</dbReference>
<dbReference type="SUPFAM" id="SSF51445">
    <property type="entry name" value="(Trans)glycosidases"/>
    <property type="match status" value="1"/>
</dbReference>
<dbReference type="SUPFAM" id="SSF51011">
    <property type="entry name" value="Glycosyl hydrolase domain"/>
    <property type="match status" value="2"/>
</dbReference>
<accession>P04062</accession>
<accession>A8K796</accession>
<accession>B7Z5G2</accession>
<accession>B7Z6S1</accession>
<accession>J3KQG4</accession>
<accession>J3KQK9</accession>
<accession>Q16545</accession>
<accession>Q4VX22</accession>
<accession>Q6I9R6</accession>
<accession>Q9UMJ8</accession>
<name>GBA1_HUMAN</name>
<protein>
    <recommendedName>
        <fullName evidence="113">Lysosomal acid glucosylceramidase</fullName>
        <shortName evidence="109">Lysosomal acid GCase</shortName>
        <ecNumber evidence="30 51 62 93">3.2.1.45</ecNumber>
    </recommendedName>
    <alternativeName>
        <fullName>Acid beta-glucosidase</fullName>
    </alternativeName>
    <alternativeName>
        <fullName>Alglucerase</fullName>
    </alternativeName>
    <alternativeName>
        <fullName>Beta-glucocerebrosidase</fullName>
        <shortName>Beta-GC</shortName>
    </alternativeName>
    <alternativeName>
        <fullName>Beta-glucosylceramidase 1</fullName>
    </alternativeName>
    <alternativeName>
        <fullName evidence="114">Cholesterol glucosyltransferase</fullName>
        <shortName evidence="109">SGTase</shortName>
        <ecNumber evidence="51 57 62">2.4.1.-</ecNumber>
    </alternativeName>
    <alternativeName>
        <fullName evidence="114">Cholesteryl-beta-glucosidase</fullName>
        <ecNumber evidence="51 57 62">3.2.1.-</ecNumber>
    </alternativeName>
    <alternativeName>
        <fullName>D-glucosyl-N-acylsphingosine glucohydrolase</fullName>
    </alternativeName>
    <alternativeName>
        <fullName evidence="116">Glucosylceramidase beta 1</fullName>
    </alternativeName>
    <alternativeName>
        <fullName>Imiglucerase</fullName>
    </alternativeName>
    <alternativeName>
        <fullName evidence="113">Lysosomal cholesterol glycosyltransferase</fullName>
    </alternativeName>
    <alternativeName>
        <fullName evidence="113">Lysosomal galactosylceramidase</fullName>
        <ecNumber evidence="62">3.2.1.46</ecNumber>
    </alternativeName>
    <alternativeName>
        <fullName evidence="113">Lysosomal glycosylceramidase</fullName>
    </alternativeName>
</protein>
<organism>
    <name type="scientific">Homo sapiens</name>
    <name type="common">Human</name>
    <dbReference type="NCBI Taxonomy" id="9606"/>
    <lineage>
        <taxon>Eukaryota</taxon>
        <taxon>Metazoa</taxon>
        <taxon>Chordata</taxon>
        <taxon>Craniata</taxon>
        <taxon>Vertebrata</taxon>
        <taxon>Euteleostomi</taxon>
        <taxon>Mammalia</taxon>
        <taxon>Eutheria</taxon>
        <taxon>Euarchontoglires</taxon>
        <taxon>Primates</taxon>
        <taxon>Haplorrhini</taxon>
        <taxon>Catarrhini</taxon>
        <taxon>Hominidae</taxon>
        <taxon>Homo</taxon>
    </lineage>
</organism>